<dbReference type="EMBL" id="Y18064">
    <property type="protein sequence ID" value="CAA77022.1"/>
    <property type="molecule type" value="mRNA"/>
</dbReference>
<dbReference type="EMBL" id="AF084481">
    <property type="protein sequence ID" value="AAC64943.1"/>
    <property type="molecule type" value="mRNA"/>
</dbReference>
<dbReference type="EMBL" id="AK312897">
    <property type="protein sequence ID" value="BAG35744.1"/>
    <property type="molecule type" value="mRNA"/>
</dbReference>
<dbReference type="EMBL" id="AC116317">
    <property type="status" value="NOT_ANNOTATED_CDS"/>
    <property type="molecule type" value="Genomic_DNA"/>
</dbReference>
<dbReference type="EMBL" id="CH471131">
    <property type="protein sequence ID" value="EAW82396.1"/>
    <property type="molecule type" value="Genomic_DNA"/>
</dbReference>
<dbReference type="EMBL" id="CH471131">
    <property type="protein sequence ID" value="EAW82397.1"/>
    <property type="molecule type" value="Genomic_DNA"/>
</dbReference>
<dbReference type="EMBL" id="CH471131">
    <property type="protein sequence ID" value="EAW82398.1"/>
    <property type="molecule type" value="Genomic_DNA"/>
</dbReference>
<dbReference type="EMBL" id="BC030130">
    <property type="protein sequence ID" value="AAH30130.1"/>
    <property type="molecule type" value="mRNA"/>
</dbReference>
<dbReference type="CCDS" id="CCDS3386.1"/>
<dbReference type="RefSeq" id="NP_001139325.1">
    <property type="nucleotide sequence ID" value="NM_001145853.1"/>
</dbReference>
<dbReference type="RefSeq" id="NP_005996.2">
    <property type="nucleotide sequence ID" value="NM_006005.3"/>
</dbReference>
<dbReference type="SMR" id="O76024"/>
<dbReference type="BioGRID" id="113304">
    <property type="interactions" value="132"/>
</dbReference>
<dbReference type="ELM" id="O76024"/>
<dbReference type="FunCoup" id="O76024">
    <property type="interactions" value="645"/>
</dbReference>
<dbReference type="IntAct" id="O76024">
    <property type="interactions" value="512"/>
</dbReference>
<dbReference type="MINT" id="O76024"/>
<dbReference type="STRING" id="9606.ENSP00000226760"/>
<dbReference type="TCDB" id="8.A.57.1.1">
    <property type="family name" value="the wolfram syndrome or wolframin (wolframin) family"/>
</dbReference>
<dbReference type="GlyConnect" id="1903">
    <property type="glycosylation" value="4 N-Linked glycans (2 sites)"/>
</dbReference>
<dbReference type="GlyCosmos" id="O76024">
    <property type="glycosylation" value="2 sites, 4 glycans"/>
</dbReference>
<dbReference type="GlyGen" id="O76024">
    <property type="glycosylation" value="5 sites, 13 N-linked glycans (2 sites), 1 O-linked glycan (1 site)"/>
</dbReference>
<dbReference type="iPTMnet" id="O76024"/>
<dbReference type="PhosphoSitePlus" id="O76024"/>
<dbReference type="SwissPalm" id="O76024"/>
<dbReference type="BioMuta" id="WFS1"/>
<dbReference type="jPOST" id="O76024"/>
<dbReference type="MassIVE" id="O76024"/>
<dbReference type="PaxDb" id="9606-ENSP00000226760"/>
<dbReference type="PeptideAtlas" id="O76024"/>
<dbReference type="ProteomicsDB" id="50349"/>
<dbReference type="Pumba" id="O76024"/>
<dbReference type="Antibodypedia" id="22653">
    <property type="antibodies" value="175 antibodies from 28 providers"/>
</dbReference>
<dbReference type="DNASU" id="7466"/>
<dbReference type="Ensembl" id="ENST00000226760.5">
    <property type="protein sequence ID" value="ENSP00000226760.1"/>
    <property type="gene ID" value="ENSG00000109501.15"/>
</dbReference>
<dbReference type="Ensembl" id="ENST00000503569.5">
    <property type="protein sequence ID" value="ENSP00000423337.1"/>
    <property type="gene ID" value="ENSG00000109501.15"/>
</dbReference>
<dbReference type="Ensembl" id="ENST00000684087.1">
    <property type="protein sequence ID" value="ENSP00000506978.1"/>
    <property type="gene ID" value="ENSG00000109501.15"/>
</dbReference>
<dbReference type="GeneID" id="7466"/>
<dbReference type="KEGG" id="hsa:7466"/>
<dbReference type="MANE-Select" id="ENST00000226760.5">
    <property type="protein sequence ID" value="ENSP00000226760.1"/>
    <property type="RefSeq nucleotide sequence ID" value="NM_006005.3"/>
    <property type="RefSeq protein sequence ID" value="NP_005996.2"/>
</dbReference>
<dbReference type="UCSC" id="uc003gix.3">
    <property type="organism name" value="human"/>
</dbReference>
<dbReference type="AGR" id="HGNC:12762"/>
<dbReference type="CTD" id="7466"/>
<dbReference type="DisGeNET" id="7466"/>
<dbReference type="GeneCards" id="WFS1"/>
<dbReference type="GeneReviews" id="WFS1"/>
<dbReference type="HGNC" id="HGNC:12762">
    <property type="gene designation" value="WFS1"/>
</dbReference>
<dbReference type="HPA" id="ENSG00000109501">
    <property type="expression patterns" value="Low tissue specificity"/>
</dbReference>
<dbReference type="MalaCards" id="WFS1"/>
<dbReference type="MIM" id="116400">
    <property type="type" value="phenotype"/>
</dbReference>
<dbReference type="MIM" id="222300">
    <property type="type" value="phenotype"/>
</dbReference>
<dbReference type="MIM" id="600965">
    <property type="type" value="phenotype"/>
</dbReference>
<dbReference type="MIM" id="606201">
    <property type="type" value="gene"/>
</dbReference>
<dbReference type="MIM" id="614296">
    <property type="type" value="phenotype"/>
</dbReference>
<dbReference type="neXtProt" id="NX_O76024"/>
<dbReference type="OpenTargets" id="ENSG00000109501"/>
<dbReference type="Orphanet" id="98991">
    <property type="disease" value="Early-onset nuclear cataract"/>
</dbReference>
<dbReference type="Orphanet" id="90635">
    <property type="disease" value="Rare autosomal dominant non-syndromic sensorineural deafness type DFNA"/>
</dbReference>
<dbReference type="Orphanet" id="3463">
    <property type="disease" value="Wolfram syndrome"/>
</dbReference>
<dbReference type="Orphanet" id="411590">
    <property type="disease" value="Wolfram-like syndrome"/>
</dbReference>
<dbReference type="PharmGKB" id="PA37365"/>
<dbReference type="VEuPathDB" id="HostDB:ENSG00000109501"/>
<dbReference type="eggNOG" id="ENOG502QSC1">
    <property type="taxonomic scope" value="Eukaryota"/>
</dbReference>
<dbReference type="GeneTree" id="ENSGT00390000016928"/>
<dbReference type="HOGENOM" id="CLU_014606_0_0_1"/>
<dbReference type="InParanoid" id="O76024"/>
<dbReference type="OMA" id="QFARWFM"/>
<dbReference type="OrthoDB" id="5865303at2759"/>
<dbReference type="PAN-GO" id="O76024">
    <property type="GO annotations" value="3 GO annotations based on evolutionary models"/>
</dbReference>
<dbReference type="PhylomeDB" id="O76024"/>
<dbReference type="TreeFam" id="TF326849"/>
<dbReference type="PathwayCommons" id="O76024"/>
<dbReference type="Reactome" id="R-HSA-381038">
    <property type="pathway name" value="XBP1(S) activates chaperone genes"/>
</dbReference>
<dbReference type="Reactome" id="R-HSA-381426">
    <property type="pathway name" value="Regulation of Insulin-like Growth Factor (IGF) transport and uptake by Insulin-like Growth Factor Binding Proteins (IGFBPs)"/>
</dbReference>
<dbReference type="Reactome" id="R-HSA-8957275">
    <property type="pathway name" value="Post-translational protein phosphorylation"/>
</dbReference>
<dbReference type="SignaLink" id="O76024"/>
<dbReference type="SIGNOR" id="O76024"/>
<dbReference type="BioGRID-ORCS" id="7466">
    <property type="hits" value="8 hits in 1150 CRISPR screens"/>
</dbReference>
<dbReference type="CD-CODE" id="FB4E32DD">
    <property type="entry name" value="Presynaptic clusters and postsynaptic densities"/>
</dbReference>
<dbReference type="ChiTaRS" id="WFS1">
    <property type="organism name" value="human"/>
</dbReference>
<dbReference type="GeneWiki" id="WFS1"/>
<dbReference type="GenomeRNAi" id="7466"/>
<dbReference type="Pharos" id="O76024">
    <property type="development level" value="Tbio"/>
</dbReference>
<dbReference type="PRO" id="PR:O76024"/>
<dbReference type="Proteomes" id="UP000005640">
    <property type="component" value="Chromosome 4"/>
</dbReference>
<dbReference type="RNAct" id="O76024">
    <property type="molecule type" value="protein"/>
</dbReference>
<dbReference type="Bgee" id="ENSG00000109501">
    <property type="expression patterns" value="Expressed in right ovary and 191 other cell types or tissues"/>
</dbReference>
<dbReference type="ExpressionAtlas" id="O76024">
    <property type="expression patterns" value="baseline and differential"/>
</dbReference>
<dbReference type="GO" id="GO:0030425">
    <property type="term" value="C:dendrite"/>
    <property type="evidence" value="ECO:0000250"/>
    <property type="project" value="BHF-UCL"/>
</dbReference>
<dbReference type="GO" id="GO:0005783">
    <property type="term" value="C:endoplasmic reticulum"/>
    <property type="evidence" value="ECO:0000314"/>
    <property type="project" value="UniProtKB"/>
</dbReference>
<dbReference type="GO" id="GO:0005788">
    <property type="term" value="C:endoplasmic reticulum lumen"/>
    <property type="evidence" value="ECO:0000304"/>
    <property type="project" value="Reactome"/>
</dbReference>
<dbReference type="GO" id="GO:0005789">
    <property type="term" value="C:endoplasmic reticulum membrane"/>
    <property type="evidence" value="ECO:0000314"/>
    <property type="project" value="BHF-UCL"/>
</dbReference>
<dbReference type="GO" id="GO:0030141">
    <property type="term" value="C:secretory granule"/>
    <property type="evidence" value="ECO:0000314"/>
    <property type="project" value="UniProtKB"/>
</dbReference>
<dbReference type="GO" id="GO:0030672">
    <property type="term" value="C:synaptic vesicle membrane"/>
    <property type="evidence" value="ECO:0007669"/>
    <property type="project" value="Ensembl"/>
</dbReference>
<dbReference type="GO" id="GO:0051117">
    <property type="term" value="F:ATPase binding"/>
    <property type="evidence" value="ECO:0000353"/>
    <property type="project" value="BHF-UCL"/>
</dbReference>
<dbReference type="GO" id="GO:0048306">
    <property type="term" value="F:calcium-dependent protein binding"/>
    <property type="evidence" value="ECO:0007669"/>
    <property type="project" value="Ensembl"/>
</dbReference>
<dbReference type="GO" id="GO:0005516">
    <property type="term" value="F:calmodulin binding"/>
    <property type="evidence" value="ECO:0007669"/>
    <property type="project" value="Ensembl"/>
</dbReference>
<dbReference type="GO" id="GO:0140297">
    <property type="term" value="F:DNA-binding transcription factor binding"/>
    <property type="evidence" value="ECO:0007669"/>
    <property type="project" value="Ensembl"/>
</dbReference>
<dbReference type="GO" id="GO:0070628">
    <property type="term" value="F:proteasome binding"/>
    <property type="evidence" value="ECO:0007669"/>
    <property type="project" value="Ensembl"/>
</dbReference>
<dbReference type="GO" id="GO:0140597">
    <property type="term" value="F:protein carrier chaperone"/>
    <property type="evidence" value="ECO:0000314"/>
    <property type="project" value="ParkinsonsUK-UCL"/>
</dbReference>
<dbReference type="GO" id="GO:0031625">
    <property type="term" value="F:ubiquitin protein ligase binding"/>
    <property type="evidence" value="ECO:0000314"/>
    <property type="project" value="ParkinsonsUK-UCL"/>
</dbReference>
<dbReference type="GO" id="GO:0055074">
    <property type="term" value="P:calcium ion homeostasis"/>
    <property type="evidence" value="ECO:0000314"/>
    <property type="project" value="BHF-UCL"/>
</dbReference>
<dbReference type="GO" id="GO:0032469">
    <property type="term" value="P:endoplasmic reticulum calcium ion homeostasis"/>
    <property type="evidence" value="ECO:0000314"/>
    <property type="project" value="BHF-UCL"/>
</dbReference>
<dbReference type="GO" id="GO:0030968">
    <property type="term" value="P:endoplasmic reticulum unfolded protein response"/>
    <property type="evidence" value="ECO:0000318"/>
    <property type="project" value="GO_Central"/>
</dbReference>
<dbReference type="GO" id="GO:0006983">
    <property type="term" value="P:ER overload response"/>
    <property type="evidence" value="ECO:0000314"/>
    <property type="project" value="BHF-UCL"/>
</dbReference>
<dbReference type="GO" id="GO:0036503">
    <property type="term" value="P:ERAD pathway"/>
    <property type="evidence" value="ECO:0000314"/>
    <property type="project" value="ParkinsonsUK-UCL"/>
</dbReference>
<dbReference type="GO" id="GO:0042593">
    <property type="term" value="P:glucose homeostasis"/>
    <property type="evidence" value="ECO:0000315"/>
    <property type="project" value="BHF-UCL"/>
</dbReference>
<dbReference type="GO" id="GO:0001822">
    <property type="term" value="P:kidney development"/>
    <property type="evidence" value="ECO:0000315"/>
    <property type="project" value="BHF-UCL"/>
</dbReference>
<dbReference type="GO" id="GO:0043066">
    <property type="term" value="P:negative regulation of apoptotic process"/>
    <property type="evidence" value="ECO:0000315"/>
    <property type="project" value="UniProtKB"/>
</dbReference>
<dbReference type="GO" id="GO:1903892">
    <property type="term" value="P:negative regulation of ATF6-mediated unfolded protein response"/>
    <property type="evidence" value="ECO:0000314"/>
    <property type="project" value="ParkinsonsUK-UCL"/>
</dbReference>
<dbReference type="GO" id="GO:1902236">
    <property type="term" value="P:negative regulation of endoplasmic reticulum stress-induced intrinsic apoptotic signaling pathway"/>
    <property type="evidence" value="ECO:0007669"/>
    <property type="project" value="Ensembl"/>
</dbReference>
<dbReference type="GO" id="GO:0043524">
    <property type="term" value="P:negative regulation of neuron apoptotic process"/>
    <property type="evidence" value="ECO:0000315"/>
    <property type="project" value="BHF-UCL"/>
</dbReference>
<dbReference type="GO" id="GO:0043069">
    <property type="term" value="P:negative regulation of programmed cell death"/>
    <property type="evidence" value="ECO:0000315"/>
    <property type="project" value="BHF-UCL"/>
</dbReference>
<dbReference type="GO" id="GO:1903573">
    <property type="term" value="P:negative regulation of response to endoplasmic reticulum stress"/>
    <property type="evidence" value="ECO:0000315"/>
    <property type="project" value="UniProtKB"/>
</dbReference>
<dbReference type="GO" id="GO:0000122">
    <property type="term" value="P:negative regulation of transcription by RNA polymerase II"/>
    <property type="evidence" value="ECO:0000314"/>
    <property type="project" value="ParkinsonsUK-UCL"/>
</dbReference>
<dbReference type="GO" id="GO:0017148">
    <property type="term" value="P:negative regulation of translation"/>
    <property type="evidence" value="ECO:0007669"/>
    <property type="project" value="Ensembl"/>
</dbReference>
<dbReference type="GO" id="GO:2000675">
    <property type="term" value="P:negative regulation of type B pancreatic cell apoptotic process"/>
    <property type="evidence" value="ECO:0000315"/>
    <property type="project" value="BHF-UCL"/>
</dbReference>
<dbReference type="GO" id="GO:0050877">
    <property type="term" value="P:nervous system process"/>
    <property type="evidence" value="ECO:0000315"/>
    <property type="project" value="BHF-UCL"/>
</dbReference>
<dbReference type="GO" id="GO:0042048">
    <property type="term" value="P:olfactory behavior"/>
    <property type="evidence" value="ECO:0007669"/>
    <property type="project" value="Ensembl"/>
</dbReference>
<dbReference type="GO" id="GO:0031016">
    <property type="term" value="P:pancreas development"/>
    <property type="evidence" value="ECO:0007669"/>
    <property type="project" value="Ensembl"/>
</dbReference>
<dbReference type="GO" id="GO:0051928">
    <property type="term" value="P:positive regulation of calcium ion transport"/>
    <property type="evidence" value="ECO:0000314"/>
    <property type="project" value="BHF-UCL"/>
</dbReference>
<dbReference type="GO" id="GO:1904294">
    <property type="term" value="P:positive regulation of ERAD pathway"/>
    <property type="evidence" value="ECO:0007669"/>
    <property type="project" value="Ensembl"/>
</dbReference>
<dbReference type="GO" id="GO:0045927">
    <property type="term" value="P:positive regulation of growth"/>
    <property type="evidence" value="ECO:0000250"/>
    <property type="project" value="BHF-UCL"/>
</dbReference>
<dbReference type="GO" id="GO:0051247">
    <property type="term" value="P:positive regulation of protein metabolic process"/>
    <property type="evidence" value="ECO:0000314"/>
    <property type="project" value="BHF-UCL"/>
</dbReference>
<dbReference type="GO" id="GO:0031398">
    <property type="term" value="P:positive regulation of protein ubiquitination"/>
    <property type="evidence" value="ECO:0000314"/>
    <property type="project" value="ParkinsonsUK-UCL"/>
</dbReference>
<dbReference type="GO" id="GO:0050821">
    <property type="term" value="P:protein stabilization"/>
    <property type="evidence" value="ECO:0000314"/>
    <property type="project" value="ParkinsonsUK-UCL"/>
</dbReference>
<dbReference type="GO" id="GO:0003091">
    <property type="term" value="P:renal water homeostasis"/>
    <property type="evidence" value="ECO:0000315"/>
    <property type="project" value="BHF-UCL"/>
</dbReference>
<dbReference type="GO" id="GO:0034976">
    <property type="term" value="P:response to endoplasmic reticulum stress"/>
    <property type="evidence" value="ECO:0000314"/>
    <property type="project" value="BHF-UCL"/>
</dbReference>
<dbReference type="GO" id="GO:0007605">
    <property type="term" value="P:sensory perception of sound"/>
    <property type="evidence" value="ECO:0000315"/>
    <property type="project" value="BHF-UCL"/>
</dbReference>
<dbReference type="GO" id="GO:0007601">
    <property type="term" value="P:visual perception"/>
    <property type="evidence" value="ECO:0000315"/>
    <property type="project" value="BHF-UCL"/>
</dbReference>
<dbReference type="FunFam" id="1.25.40.10:FF:000479">
    <property type="entry name" value="Wolfram syndrome 1 (Wolframin)"/>
    <property type="match status" value="1"/>
</dbReference>
<dbReference type="Gene3D" id="1.25.40.10">
    <property type="entry name" value="Tetratricopeptide repeat domain"/>
    <property type="match status" value="1"/>
</dbReference>
<dbReference type="InterPro" id="IPR011990">
    <property type="entry name" value="TPR-like_helical_dom_sf"/>
</dbReference>
<dbReference type="InterPro" id="IPR026208">
    <property type="entry name" value="Wolframin"/>
</dbReference>
<dbReference type="InterPro" id="IPR045400">
    <property type="entry name" value="Wolframin_Cys-rich"/>
</dbReference>
<dbReference type="InterPro" id="IPR045460">
    <property type="entry name" value="Wolframin_EF-hand"/>
</dbReference>
<dbReference type="InterPro" id="IPR026209">
    <property type="entry name" value="Wolframin_fam"/>
</dbReference>
<dbReference type="InterPro" id="IPR045461">
    <property type="entry name" value="Wolframin_OB_fold"/>
</dbReference>
<dbReference type="InterPro" id="IPR045458">
    <property type="entry name" value="Wolframin_Sel1-like_rpt"/>
</dbReference>
<dbReference type="PANTHER" id="PTHR13098">
    <property type="entry name" value="WOLFRAMIN"/>
    <property type="match status" value="1"/>
</dbReference>
<dbReference type="PANTHER" id="PTHR13098:SF3">
    <property type="entry name" value="WOLFRAMIN"/>
    <property type="match status" value="1"/>
</dbReference>
<dbReference type="Pfam" id="PF20053">
    <property type="entry name" value="WC-rich"/>
    <property type="match status" value="1"/>
</dbReference>
<dbReference type="Pfam" id="PF19913">
    <property type="entry name" value="WCOB"/>
    <property type="match status" value="1"/>
</dbReference>
<dbReference type="Pfam" id="PF19914">
    <property type="entry name" value="WEF-hand"/>
    <property type="match status" value="1"/>
</dbReference>
<dbReference type="Pfam" id="PF20023">
    <property type="entry name" value="WSLR"/>
    <property type="match status" value="2"/>
</dbReference>
<dbReference type="PRINTS" id="PR02060">
    <property type="entry name" value="WOLFFAMILY"/>
</dbReference>
<dbReference type="PRINTS" id="PR02061">
    <property type="entry name" value="WOLFRAMIN"/>
</dbReference>
<feature type="chain" id="PRO_0000065963" description="Wolframin">
    <location>
        <begin position="1"/>
        <end position="890"/>
    </location>
</feature>
<feature type="transmembrane region" description="Helical" evidence="2">
    <location>
        <begin position="314"/>
        <end position="334"/>
    </location>
</feature>
<feature type="transmembrane region" description="Helical" evidence="2">
    <location>
        <begin position="340"/>
        <end position="360"/>
    </location>
</feature>
<feature type="transmembrane region" description="Helical" evidence="2">
    <location>
        <begin position="402"/>
        <end position="422"/>
    </location>
</feature>
<feature type="transmembrane region" description="Helical" evidence="2">
    <location>
        <begin position="427"/>
        <end position="447"/>
    </location>
</feature>
<feature type="transmembrane region" description="Helical" evidence="2">
    <location>
        <begin position="465"/>
        <end position="485"/>
    </location>
</feature>
<feature type="transmembrane region" description="Helical" evidence="2">
    <location>
        <begin position="496"/>
        <end position="516"/>
    </location>
</feature>
<feature type="transmembrane region" description="Helical" evidence="2">
    <location>
        <begin position="529"/>
        <end position="549"/>
    </location>
</feature>
<feature type="transmembrane region" description="Helical" evidence="2">
    <location>
        <begin position="563"/>
        <end position="583"/>
    </location>
</feature>
<feature type="transmembrane region" description="Helical" evidence="2">
    <location>
        <begin position="589"/>
        <end position="609"/>
    </location>
</feature>
<feature type="transmembrane region" description="Helical" evidence="2">
    <location>
        <begin position="632"/>
        <end position="652"/>
    </location>
</feature>
<feature type="topological domain" description="Lumenal" evidence="2">
    <location>
        <begin position="653"/>
        <end position="869"/>
    </location>
</feature>
<feature type="transmembrane region" description="Helical" evidence="2">
    <location>
        <begin position="870"/>
        <end position="890"/>
    </location>
</feature>
<feature type="region of interest" description="Interaction with ATP6V1A" evidence="25">
    <location>
        <begin position="1"/>
        <end position="321"/>
    </location>
</feature>
<feature type="region of interest" description="Disordered" evidence="3">
    <location>
        <begin position="1"/>
        <end position="86"/>
    </location>
</feature>
<feature type="compositionally biased region" description="Pro residues" evidence="3">
    <location>
        <begin position="10"/>
        <end position="20"/>
    </location>
</feature>
<feature type="modified residue" description="N-acetylmethionine" evidence="35">
    <location>
        <position position="1"/>
    </location>
</feature>
<feature type="modified residue" description="Phosphothreonine; by FAM20C" evidence="29">
    <location>
        <position position="30"/>
    </location>
</feature>
<feature type="modified residue" description="Phosphoserine; by FAM20C" evidence="29 36">
    <location>
        <position position="32"/>
    </location>
</feature>
<feature type="modified residue" description="Phosphoserine" evidence="1">
    <location>
        <position position="157"/>
    </location>
</feature>
<feature type="glycosylation site" description="N-linked (GlcNAc...) asparagine" evidence="33">
    <location>
        <position position="661"/>
    </location>
</feature>
<feature type="glycosylation site" description="N-linked (GlcNAc...) asparagine" evidence="33">
    <location>
        <position position="746"/>
    </location>
</feature>
<feature type="sequence variant" id="VAR_032791" description="In dbSNP:rs34653805.">
    <original>P</original>
    <variation>L</variation>
    <location>
        <position position="16"/>
    </location>
</feature>
<feature type="sequence variant" id="VAR_011305" description="In WFS1; dbSNP:rs369671890." evidence="8">
    <original>A</original>
    <variation>V</variation>
    <location>
        <position position="58"/>
    </location>
</feature>
<feature type="sequence variant" id="VAR_032962" evidence="11">
    <original>G</original>
    <variation>R</variation>
    <location>
        <position position="107"/>
    </location>
</feature>
<feature type="sequence variant" id="VAR_029499" description="In WFS1." evidence="14">
    <original>Y</original>
    <variation>N</variation>
    <location>
        <position position="110"/>
    </location>
</feature>
<feature type="sequence variant" id="VAR_011306" description="In WFS1; dbSNP:rs145639028." evidence="8">
    <original>A</original>
    <variation>T</variation>
    <location>
        <position position="126"/>
    </location>
</feature>
<feature type="sequence variant" id="VAR_014034" description="In WFS1; dbSNP:rs372249044." evidence="14">
    <original>A</original>
    <variation>T</variation>
    <location>
        <position position="133"/>
    </location>
</feature>
<feature type="sequence variant" id="VAR_009109" description="In WFS1; dbSNP:rs148953711." evidence="4">
    <original>E</original>
    <variation>K</variation>
    <location>
        <position position="169"/>
    </location>
</feature>
<feature type="sequence variant" id="VAR_074210" description="In DFNA6; dbSNP:rs758281375." evidence="27">
    <original>D</original>
    <variation>N</variation>
    <location>
        <position position="171"/>
    </location>
</feature>
<feature type="sequence variant" id="VAR_014995" description="In dbSNP:rs41264699.">
    <original>K</original>
    <variation>Q</variation>
    <location>
        <position position="193"/>
    </location>
</feature>
<feature type="sequence variant" id="VAR_009110" description="In WFS1; dbSNP:rs746923441." evidence="4">
    <original>P</original>
    <variation>S</variation>
    <location>
        <position position="292"/>
    </location>
</feature>
<feature type="sequence variant" id="VAR_009111" description="In WFS1." evidence="4">
    <original>I</original>
    <variation>S</variation>
    <location>
        <position position="296"/>
    </location>
</feature>
<feature type="sequence variant" id="VAR_029500" description="In dbSNP:rs369795224." evidence="14">
    <original>A</original>
    <variation>V</variation>
    <location>
        <position position="326"/>
    </location>
</feature>
<feature type="sequence variant" id="VAR_005840" description="In dbSNP:rs1801212." evidence="4 9 10 11 13 14 19 30 31">
    <original>V</original>
    <variation>I</variation>
    <location>
        <position position="333"/>
    </location>
</feature>
<feature type="sequence variant" id="VAR_011307" description="In WFS1." evidence="8">
    <location>
        <position position="350"/>
    </location>
</feature>
<feature type="sequence variant" id="VAR_009112" description="In WFS1." evidence="8">
    <location>
        <position position="354"/>
    </location>
</feature>
<feature type="sequence variant" id="VAR_029501" description="In WFS1." evidence="14">
    <location>
        <position position="414"/>
    </location>
</feature>
<feature type="sequence variant" id="VAR_009113" description="In WFS1; greatly reduces protein expression compared to wild-type." evidence="14 22">
    <location>
        <position position="415"/>
    </location>
</feature>
<feature type="sequence variant" id="VAR_009114" description="In WFS1; dbSNP:rs147974629." evidence="4">
    <original>G</original>
    <variation>R</variation>
    <location>
        <position position="437"/>
    </location>
</feature>
<feature type="sequence variant" id="VAR_011308" description="In WFS1." evidence="9">
    <original>S</original>
    <variation>I</variation>
    <location>
        <position position="443"/>
    </location>
</feature>
<feature type="sequence variant" id="VAR_005841" description="In dbSNP:rs1801208." evidence="6 7 14 30">
    <original>R</original>
    <variation>H</variation>
    <location>
        <position position="456"/>
    </location>
</feature>
<feature type="sequence variant" id="VAR_029502" description="In WFS1; dbSNP:rs113446173." evidence="14">
    <original>R</original>
    <variation>S</variation>
    <location>
        <position position="457"/>
    </location>
</feature>
<feature type="sequence variant" id="VAR_014035" description="In WFS1." evidence="31">
    <location>
        <begin position="461"/>
        <end position="463"/>
    </location>
</feature>
<feature type="sequence variant" id="VAR_070935" description="In CTRCT41; dbSNP:rs398123066." evidence="26">
    <original>E</original>
    <variation>G</variation>
    <location>
        <position position="462"/>
    </location>
</feature>
<feature type="sequence variant" id="VAR_029503" description="In WFS1." evidence="14">
    <location>
        <position position="468"/>
    </location>
</feature>
<feature type="sequence variant" id="VAR_005842" description="In WFS1; dbSNP:rs28937892." evidence="8 14 30">
    <original>P</original>
    <variation>L</variation>
    <location>
        <position position="504"/>
    </location>
</feature>
<feature type="sequence variant" id="VAR_014036" description="In WFS1." evidence="30">
    <location>
        <begin position="508"/>
        <end position="512"/>
    </location>
</feature>
<feature type="sequence variant" id="VAR_029504" description="In WFS1." evidence="14">
    <location>
        <position position="540"/>
    </location>
</feature>
<feature type="sequence variant" id="VAR_068343" description="In WFS1; dbSNP:rs199946797." evidence="23">
    <original>R</original>
    <variation>C</variation>
    <location>
        <position position="558"/>
    </location>
</feature>
<feature type="sequence variant" id="VAR_010602" description="In dbSNP:rs55814513." evidence="5">
    <original>A</original>
    <variation>T</variation>
    <location>
        <position position="559"/>
    </location>
</feature>
<feature type="sequence variant" id="VAR_009115" description="In WFS1.">
    <location>
        <begin position="567"/>
        <end position="568"/>
    </location>
</feature>
<feature type="sequence variant" id="VAR_010603" description="In dbSNP:rs1805069." evidence="6 7">
    <original>G</original>
    <variation>S</variation>
    <location>
        <position position="576"/>
    </location>
</feature>
<feature type="sequence variant" id="VAR_024554" description="In dbSNP:rs2230720.">
    <original>A</original>
    <variation>V</variation>
    <location>
        <position position="602"/>
    </location>
</feature>
<feature type="sequence variant" id="VAR_005843" description="In dbSNP:rs734312." evidence="4 5 6 7 9 11 14 19 30 32">
    <original>R</original>
    <variation>H</variation>
    <location>
        <position position="611"/>
    </location>
</feature>
<feature type="sequence variant" id="VAR_029505" description="In WFS1; dbSNP:rs71530910." evidence="14">
    <original>R</original>
    <variation>W</variation>
    <location>
        <position position="629"/>
    </location>
</feature>
<feature type="sequence variant" id="VAR_032963" description="In DFNA6; dbSNP:rs104893882." evidence="12">
    <original>K</original>
    <variation>T</variation>
    <location>
        <position position="634"/>
    </location>
</feature>
<feature type="sequence variant" id="VAR_014037" description="In DFNA6; uncertain significance; also found in a patient with type 2 diabetes; uncertain significance; dbSNP:rs201064551." evidence="6 28">
    <original>R</original>
    <variation>C</variation>
    <location>
        <position position="653"/>
    </location>
</feature>
<feature type="sequence variant" id="VAR_014038" description="In WFS1; dbSNP:rs1402999203." evidence="31">
    <original>Y</original>
    <variation>C</variation>
    <location>
        <position position="669"/>
    </location>
</feature>
<feature type="sequence variant" id="VAR_074211" description="In DFNA6." evidence="17">
    <original>Y</original>
    <variation>H</variation>
    <location>
        <position position="669"/>
    </location>
</feature>
<feature type="sequence variant" id="VAR_011309" description="In dbSNP:rs200672755." evidence="8">
    <original>G</original>
    <variation>R</variation>
    <location>
        <position position="674"/>
    </location>
</feature>
<feature type="sequence variant" id="VAR_080401" description="In DFNA6; uncertain significance." evidence="28">
    <location>
        <position position="680"/>
    </location>
</feature>
<feature type="sequence variant" id="VAR_011310" description="In WFSL; greatly reduces protein expression compared to wild-type; dbSNP:rs387906930." evidence="9 22">
    <original>A</original>
    <variation>V</variation>
    <location>
        <position position="684"/>
    </location>
</feature>
<feature type="sequence variant" id="VAR_074212" description="In DFNA6; dbSNP:rs142668478." evidence="18">
    <original>R</original>
    <variation>P</variation>
    <location>
        <position position="685"/>
    </location>
</feature>
<feature type="sequence variant" id="VAR_009116" description="In WFS1; dbSNP:rs754373473." evidence="4">
    <original>C</original>
    <variation>R</variation>
    <location>
        <position position="690"/>
    </location>
</feature>
<feature type="sequence variant" id="VAR_005844" description="In WFS1; dbSNP:rs28937891." evidence="30">
    <original>G</original>
    <variation>V</variation>
    <location>
        <position position="695"/>
    </location>
</feature>
<feature type="sequence variant" id="VAR_074213" description="In DFNA6." evidence="21">
    <original>H</original>
    <variation>Y</variation>
    <location>
        <position position="696"/>
    </location>
</feature>
<feature type="sequence variant" id="VAR_032964" description="In DFNA6; dbSNP:rs28937894." evidence="10">
    <original>T</original>
    <variation>M</variation>
    <location>
        <position position="699"/>
    </location>
</feature>
<feature type="sequence variant" id="VAR_009117" description="In WFS1." evidence="4">
    <original>W</original>
    <variation>C</variation>
    <location>
        <position position="700"/>
    </location>
</feature>
<feature type="sequence variant" id="VAR_074214" description="In DFNA6; dbSNP:rs1323852277." evidence="21">
    <original>R</original>
    <variation>H</variation>
    <location>
        <position position="703"/>
    </location>
</feature>
<feature type="sequence variant" id="VAR_011311" description="In dbSNP:rs200099217." evidence="9">
    <original>R</original>
    <variation>C</variation>
    <location>
        <position position="708"/>
    </location>
</feature>
<feature type="sequence variant" id="VAR_032965" description="In DFNA6; dbSNP:rs28937893." evidence="10 11">
    <original>A</original>
    <variation>T</variation>
    <location>
        <position position="716"/>
    </location>
</feature>
<feature type="sequence variant" id="VAR_010604" description="In dbSNP:rs1805070." evidence="6 7">
    <original>I</original>
    <variation>V</variation>
    <location>
        <position position="720"/>
    </location>
</feature>
<feature type="sequence variant" id="VAR_005845" description="In WFS1; dbSNP:rs28937890." evidence="30">
    <original>P</original>
    <variation>L</variation>
    <location>
        <position position="724"/>
    </location>
</feature>
<feature type="sequence variant" id="VAR_009118" description="In WFS1; dbSNP:rs71532864." evidence="14">
    <original>G</original>
    <variation>S</variation>
    <location>
        <position position="736"/>
    </location>
</feature>
<feature type="sequence variant" id="VAR_011312" description="In dbSNP:rs147834269." evidence="7 8 24">
    <original>E</original>
    <variation>K</variation>
    <location>
        <position position="737"/>
    </location>
</feature>
<feature type="sequence variant" id="VAR_032966" description="In DFNA6; benign; dbSNP:rs141328044." evidence="10">
    <original>V</original>
    <variation>M</variation>
    <location>
        <position position="779"/>
    </location>
</feature>
<feature type="sequence variant" id="VAR_011313" description="In WFS1." evidence="8">
    <original>G</original>
    <variation>R</variation>
    <location>
        <position position="780"/>
    </location>
</feature>
<feature type="sequence variant" id="VAR_068344" description="In WFSL; mildly decreases protein expression compared to wild-type; dbSNP:rs387906931." evidence="22">
    <original>G</original>
    <variation>S</variation>
    <location>
        <position position="780"/>
    </location>
</feature>
<feature type="sequence variant" id="VAR_068345" description="In WFSL." evidence="22">
    <original>D</original>
    <variation>Y</variation>
    <location>
        <position position="797"/>
    </location>
</feature>
<feature type="sequence variant" id="VAR_029506" description="In dbSNP:rs746922325." evidence="14">
    <original>I</original>
    <variation>V</variation>
    <location>
        <position position="802"/>
    </location>
</feature>
<feature type="sequence variant" id="VAR_011314" description="In WFS1; dbSNP:rs35932623." evidence="8">
    <original>R</original>
    <variation>C</variation>
    <location>
        <position position="818"/>
    </location>
</feature>
<feature type="sequence variant" id="VAR_032967" description="In DFNA6; dbSNP:rs104893883." evidence="10">
    <original>L</original>
    <variation>P</variation>
    <location>
        <position position="829"/>
    </location>
</feature>
<feature type="sequence variant" id="VAR_032968" description="In DFNA6; dbSNP:rs28937895." evidence="10">
    <original>G</original>
    <variation>D</variation>
    <location>
        <position position="831"/>
    </location>
</feature>
<feature type="sequence variant" id="VAR_068346" description="In WFSL; dbSNP:rs876657675." evidence="20">
    <original>K</original>
    <variation>N</variation>
    <location>
        <position position="836"/>
    </location>
</feature>
<feature type="sequence variant" id="VAR_068347" description="In DFNA6; dbSNP:rs121912618." evidence="19">
    <original>R</original>
    <variation>Q</variation>
    <location>
        <position position="859"/>
    </location>
</feature>
<feature type="sequence variant" id="VAR_032969" description="In WFSL; dbSNP:rs74315205." evidence="15">
    <original>E</original>
    <variation>K</variation>
    <location>
        <position position="864"/>
    </location>
</feature>
<feature type="sequence variant" id="VAR_014996" description="In dbSNP:rs71532874." evidence="11 14">
    <original>V</original>
    <variation>M</variation>
    <location>
        <position position="871"/>
    </location>
</feature>
<feature type="sequence variant" id="VAR_009119" description="In WFS1; mild form; dbSNP:rs372855769." evidence="4">
    <original>P</original>
    <variation>L</variation>
    <location>
        <position position="885"/>
    </location>
</feature>
<comment type="function">
    <text evidence="16 25">Participates in the regulation of cellular Ca(2+) homeostasis, at least partly, by modulating the filling state of the endoplasmic reticulum Ca(2+) store (PubMed:16989814). Negatively regulates the ER stress response and positively regulates the stability of V-ATPase subunits ATP6V1A and ATP1B1 by preventing their degradation through an unknown proteasome-independent mechanism (PubMed:23035048).</text>
</comment>
<comment type="subunit">
    <text evidence="25">Interacts with ATP6V1A.</text>
</comment>
<comment type="interaction">
    <interactant intactId="EBI-720609">
        <id>O76024</id>
    </interactant>
    <interactant intactId="EBI-8584118">
        <id>Q9H172</id>
        <label>ABCG4</label>
    </interactant>
    <organismsDiffer>false</organismsDiffer>
    <experiments>3</experiments>
</comment>
<comment type="interaction">
    <interactant intactId="EBI-720609">
        <id>O76024</id>
    </interactant>
    <interactant intactId="EBI-10173507">
        <id>Q6UY14-3</id>
        <label>ADAMTSL4</label>
    </interactant>
    <organismsDiffer>false</organismsDiffer>
    <experiments>3</experiments>
</comment>
<comment type="interaction">
    <interactant intactId="EBI-720609">
        <id>O76024</id>
    </interactant>
    <interactant intactId="EBI-1223922">
        <id>P20933</id>
        <label>AGA</label>
    </interactant>
    <organismsDiffer>false</organismsDiffer>
    <experiments>3</experiments>
</comment>
<comment type="interaction">
    <interactant intactId="EBI-720609">
        <id>O76024</id>
    </interactant>
    <interactant intactId="EBI-3916527">
        <id>Q9UIJ7</id>
        <label>AK3</label>
    </interactant>
    <organismsDiffer>false</organismsDiffer>
    <experiments>3</experiments>
</comment>
<comment type="interaction">
    <interactant intactId="EBI-720609">
        <id>O76024</id>
    </interactant>
    <interactant intactId="EBI-372388">
        <id>P14550</id>
        <label>AKR1A1</label>
    </interactant>
    <organismsDiffer>false</organismsDiffer>
    <experiments>3</experiments>
</comment>
<comment type="interaction">
    <interactant intactId="EBI-720609">
        <id>O76024</id>
    </interactant>
    <interactant intactId="EBI-25830928">
        <id>P02768-3</id>
        <label>ALB</label>
    </interactant>
    <organismsDiffer>false</organismsDiffer>
    <experiments>3</experiments>
</comment>
<comment type="interaction">
    <interactant intactId="EBI-720609">
        <id>O76024</id>
    </interactant>
    <interactant intactId="EBI-2555953">
        <id>Q9BS18</id>
        <label>ANAPC13</label>
    </interactant>
    <organismsDiffer>false</organismsDiffer>
    <experiments>3</experiments>
</comment>
<comment type="interaction">
    <interactant intactId="EBI-720609">
        <id>O76024</id>
    </interactant>
    <interactant intactId="EBI-25840993">
        <id>Q6ZTN6-2</id>
        <label>ANKRD13D</label>
    </interactant>
    <organismsDiffer>false</organismsDiffer>
    <experiments>3</experiments>
</comment>
<comment type="interaction">
    <interactant intactId="EBI-720609">
        <id>O76024</id>
    </interactant>
    <interactant intactId="EBI-21636328">
        <id>Q8N8A2-2</id>
        <label>ANKRD44</label>
    </interactant>
    <organismsDiffer>false</organismsDiffer>
    <experiments>3</experiments>
</comment>
<comment type="interaction">
    <interactant intactId="EBI-720609">
        <id>O76024</id>
    </interactant>
    <interactant intactId="EBI-762428">
        <id>Q92688</id>
        <label>ANP32B</label>
    </interactant>
    <organismsDiffer>false</organismsDiffer>
    <experiments>3</experiments>
</comment>
<comment type="interaction">
    <interactant intactId="EBI-720609">
        <id>O76024</id>
    </interactant>
    <interactant intactId="EBI-296601">
        <id>P08758</id>
        <label>ANXA5</label>
    </interactant>
    <organismsDiffer>false</organismsDiffer>
    <experiments>3</experiments>
</comment>
<comment type="interaction">
    <interactant intactId="EBI-720609">
        <id>O76024</id>
    </interactant>
    <interactant intactId="EBI-2556915">
        <id>P13928</id>
        <label>ANXA8</label>
    </interactant>
    <organismsDiffer>false</organismsDiffer>
    <experiments>3</experiments>
</comment>
<comment type="interaction">
    <interactant intactId="EBI-720609">
        <id>O76024</id>
    </interactant>
    <interactant intactId="EBI-77613">
        <id>P05067</id>
        <label>APP</label>
    </interactant>
    <organismsDiffer>false</organismsDiffer>
    <experiments>3</experiments>
</comment>
<comment type="interaction">
    <interactant intactId="EBI-720609">
        <id>O76024</id>
    </interactant>
    <interactant intactId="EBI-13059134">
        <id>Q13520</id>
        <label>AQP6</label>
    </interactant>
    <organismsDiffer>false</organismsDiffer>
    <experiments>3</experiments>
</comment>
<comment type="interaction">
    <interactant intactId="EBI-720609">
        <id>O76024</id>
    </interactant>
    <interactant intactId="EBI-19124986">
        <id>O94778</id>
        <label>AQP8</label>
    </interactant>
    <organismsDiffer>false</organismsDiffer>
    <experiments>3</experiments>
</comment>
<comment type="interaction">
    <interactant intactId="EBI-720609">
        <id>O76024</id>
    </interactant>
    <interactant intactId="EBI-2875816">
        <id>Q9NP61</id>
        <label>ARFGAP3</label>
    </interactant>
    <organismsDiffer>false</organismsDiffer>
    <experiments>3</experiments>
</comment>
<comment type="interaction">
    <interactant intactId="EBI-720609">
        <id>O76024</id>
    </interactant>
    <interactant intactId="EBI-25844820">
        <id>Q86TN1</id>
        <label>ARNT2</label>
    </interactant>
    <organismsDiffer>false</organismsDiffer>
    <experiments>3</experiments>
</comment>
<comment type="interaction">
    <interactant intactId="EBI-720609">
        <id>O76024</id>
    </interactant>
    <interactant intactId="EBI-14199987">
        <id>Q9Y575-3</id>
        <label>ASB3</label>
    </interactant>
    <organismsDiffer>false</organismsDiffer>
    <experiments>3</experiments>
</comment>
<comment type="interaction">
    <interactant intactId="EBI-720609">
        <id>O76024</id>
    </interactant>
    <interactant intactId="EBI-10254793">
        <id>Q6XD76</id>
        <label>ASCL4</label>
    </interactant>
    <organismsDiffer>false</organismsDiffer>
    <experiments>3</experiments>
</comment>
<comment type="interaction">
    <interactant intactId="EBI-720609">
        <id>O76024</id>
    </interactant>
    <interactant intactId="EBI-25898949">
        <id>Q96FT7-2</id>
        <label>ASIC4</label>
    </interactant>
    <organismsDiffer>false</organismsDiffer>
    <experiments>3</experiments>
</comment>
<comment type="interaction">
    <interactant intactId="EBI-720609">
        <id>O76024</id>
    </interactant>
    <interactant intactId="EBI-9089489">
        <id>Q96FT7-4</id>
        <label>ASIC4</label>
    </interactant>
    <organismsDiffer>false</organismsDiffer>
    <experiments>3</experiments>
</comment>
<comment type="interaction">
    <interactant intactId="EBI-720609">
        <id>O76024</id>
    </interactant>
    <interactant intactId="EBI-714630">
        <id>P05026</id>
        <label>ATP1B1</label>
    </interactant>
    <organismsDiffer>false</organismsDiffer>
    <experiments>6</experiments>
</comment>
<comment type="interaction">
    <interactant intactId="EBI-720609">
        <id>O76024</id>
    </interactant>
    <interactant intactId="EBI-358933">
        <id>P16615</id>
        <label>ATP2A2</label>
    </interactant>
    <organismsDiffer>false</organismsDiffer>
    <experiments>3</experiments>
</comment>
<comment type="interaction">
    <interactant intactId="EBI-720609">
        <id>O76024</id>
    </interactant>
    <interactant intactId="EBI-2891281">
        <id>P15313</id>
        <label>ATP6V1B1</label>
    </interactant>
    <organismsDiffer>false</organismsDiffer>
    <experiments>3</experiments>
</comment>
<comment type="interaction">
    <interactant intactId="EBI-720609">
        <id>O76024</id>
    </interactant>
    <interactant intactId="EBI-4290814">
        <id>P21281</id>
        <label>ATP6V1B2</label>
    </interactant>
    <organismsDiffer>false</organismsDiffer>
    <experiments>3</experiments>
</comment>
<comment type="interaction">
    <interactant intactId="EBI-720609">
        <id>O76024</id>
    </interactant>
    <interactant intactId="EBI-747185">
        <id>O95817</id>
        <label>BAG3</label>
    </interactant>
    <organismsDiffer>false</organismsDiffer>
    <experiments>3</experiments>
</comment>
<comment type="interaction">
    <interactant intactId="EBI-720609">
        <id>O76024</id>
    </interactant>
    <interactant intactId="EBI-10988864">
        <id>P46379-2</id>
        <label>BAG6</label>
    </interactant>
    <organismsDiffer>false</organismsDiffer>
    <experiments>3</experiments>
</comment>
<comment type="interaction">
    <interactant intactId="EBI-720609">
        <id>O76024</id>
    </interactant>
    <interactant intactId="EBI-9092016">
        <id>Q9UQB8-6</id>
        <label>BAIAP2</label>
    </interactant>
    <organismsDiffer>false</organismsDiffer>
    <experiments>3</experiments>
</comment>
<comment type="interaction">
    <interactant intactId="EBI-720609">
        <id>O76024</id>
    </interactant>
    <interactant intactId="EBI-4280811">
        <id>Q8IXM2</id>
        <label>BAP18</label>
    </interactant>
    <organismsDiffer>false</organismsDiffer>
    <experiments>3</experiments>
</comment>
<comment type="interaction">
    <interactant intactId="EBI-720609">
        <id>O76024</id>
    </interactant>
    <interactant intactId="EBI-749503">
        <id>Q16520</id>
        <label>BATF</label>
    </interactant>
    <organismsDiffer>false</organismsDiffer>
    <experiments>3</experiments>
</comment>
<comment type="interaction">
    <interactant intactId="EBI-720609">
        <id>O76024</id>
    </interactant>
    <interactant intactId="EBI-22013474">
        <id>Q8WY36-3</id>
        <label>BBX</label>
    </interactant>
    <organismsDiffer>false</organismsDiffer>
    <experiments>3</experiments>
</comment>
<comment type="interaction">
    <interactant intactId="EBI-720609">
        <id>O76024</id>
    </interactant>
    <interactant intactId="EBI-747430">
        <id>Q9BXK5</id>
        <label>BCL2L13</label>
    </interactant>
    <organismsDiffer>false</organismsDiffer>
    <experiments>3</experiments>
</comment>
<comment type="interaction">
    <interactant intactId="EBI-720609">
        <id>O76024</id>
    </interactant>
    <interactant intactId="EBI-949378">
        <id>Q14457</id>
        <label>BECN1</label>
    </interactant>
    <organismsDiffer>false</organismsDiffer>
    <experiments>3</experiments>
</comment>
<comment type="interaction">
    <interactant intactId="EBI-720609">
        <id>O76024</id>
    </interactant>
    <interactant intactId="EBI-3919268">
        <id>Q96LC9</id>
        <label>BMF</label>
    </interactant>
    <organismsDiffer>false</organismsDiffer>
    <experiments>3</experiments>
</comment>
<comment type="interaction">
    <interactant intactId="EBI-720609">
        <id>O76024</id>
    </interactant>
    <interactant intactId="EBI-25861458">
        <id>Q9GZL8</id>
        <label>BPESC1</label>
    </interactant>
    <organismsDiffer>false</organismsDiffer>
    <experiments>3</experiments>
</comment>
<comment type="interaction">
    <interactant intactId="EBI-720609">
        <id>O76024</id>
    </interactant>
    <interactant intactId="EBI-741210">
        <id>Q0VDD7</id>
        <label>BRME1</label>
    </interactant>
    <organismsDiffer>false</organismsDiffer>
    <experiments>3</experiments>
</comment>
<comment type="interaction">
    <interactant intactId="EBI-720609">
        <id>O76024</id>
    </interactant>
    <interactant intactId="EBI-10693038">
        <id>Q9NSI6-4</id>
        <label>BRWD1</label>
    </interactant>
    <organismsDiffer>false</organismsDiffer>
    <experiments>3</experiments>
</comment>
<comment type="interaction">
    <interactant intactId="EBI-720609">
        <id>O76024</id>
    </interactant>
    <interactant intactId="EBI-7996695">
        <id>Q8WZ55</id>
        <label>BSND</label>
    </interactant>
    <organismsDiffer>false</organismsDiffer>
    <experiments>3</experiments>
</comment>
<comment type="interaction">
    <interactant intactId="EBI-720609">
        <id>O76024</id>
    </interactant>
    <interactant intactId="EBI-307461">
        <id>Q9Y297</id>
        <label>BTRC</label>
    </interactant>
    <organismsDiffer>false</organismsDiffer>
    <experiments>3</experiments>
</comment>
<comment type="interaction">
    <interactant intactId="EBI-720609">
        <id>O76024</id>
    </interactant>
    <interactant intactId="EBI-25849710">
        <id>Q9H0W9-4</id>
        <label>C11orf54</label>
    </interactant>
    <organismsDiffer>false</organismsDiffer>
    <experiments>3</experiments>
</comment>
<comment type="interaction">
    <interactant intactId="EBI-720609">
        <id>O76024</id>
    </interactant>
    <interactant intactId="EBI-3844053">
        <id>Q13901</id>
        <label>C1D</label>
    </interactant>
    <organismsDiffer>false</organismsDiffer>
    <experiments>3</experiments>
</comment>
<comment type="interaction">
    <interactant intactId="EBI-720609">
        <id>O76024</id>
    </interactant>
    <interactant intactId="EBI-747505">
        <id>Q8TAB5</id>
        <label>C1orf216</label>
    </interactant>
    <organismsDiffer>false</organismsDiffer>
    <experiments>3</experiments>
</comment>
<comment type="interaction">
    <interactant intactId="EBI-720609">
        <id>O76024</id>
    </interactant>
    <interactant intactId="EBI-22013264">
        <id>Q14C60</id>
        <label>C21orf29</label>
    </interactant>
    <organismsDiffer>false</organismsDiffer>
    <experiments>3</experiments>
</comment>
<comment type="interaction">
    <interactant intactId="EBI-720609">
        <id>O76024</id>
    </interactant>
    <interactant intactId="EBI-10692329">
        <id>Q6P5X5-2</id>
        <label>C22orf39</label>
    </interactant>
    <organismsDiffer>false</organismsDiffer>
    <experiments>3</experiments>
</comment>
<comment type="interaction">
    <interactant intactId="EBI-720609">
        <id>O76024</id>
    </interactant>
    <interactant intactId="EBI-5458641">
        <id>Q9BVC5</id>
        <label>C2orf49</label>
    </interactant>
    <organismsDiffer>false</organismsDiffer>
    <experiments>3</experiments>
</comment>
<comment type="interaction">
    <interactant intactId="EBI-720609">
        <id>O76024</id>
    </interactant>
    <interactant intactId="EBI-751612">
        <id>Q9BRJ6</id>
        <label>C7orf50</label>
    </interactant>
    <organismsDiffer>false</organismsDiffer>
    <experiments>3</experiments>
</comment>
<comment type="interaction">
    <interactant intactId="EBI-720609">
        <id>O76024</id>
    </interactant>
    <interactant intactId="EBI-751596">
        <id>Q96LL4</id>
        <label>C8orf48</label>
    </interactant>
    <organismsDiffer>false</organismsDiffer>
    <experiments>3</experiments>
</comment>
<comment type="interaction">
    <interactant intactId="EBI-720609">
        <id>O76024</id>
    </interactant>
    <interactant intactId="EBI-3920838">
        <id>Q96NX5</id>
        <label>CAMK1G</label>
    </interactant>
    <organismsDiffer>false</organismsDiffer>
    <experiments>3</experiments>
</comment>
<comment type="interaction">
    <interactant intactId="EBI-720609">
        <id>O76024</id>
    </interactant>
    <interactant intactId="EBI-25850646">
        <id>Q8N5S9-2</id>
        <label>CAMKK1</label>
    </interactant>
    <organismsDiffer>false</organismsDiffer>
    <experiments>3</experiments>
</comment>
<comment type="interaction">
    <interactant intactId="EBI-720609">
        <id>O76024</id>
    </interactant>
    <interactant intactId="EBI-12248206">
        <id>P29466-3</id>
        <label>CASP1</label>
    </interactant>
    <organismsDiffer>false</organismsDiffer>
    <experiments>3</experiments>
</comment>
<comment type="interaction">
    <interactant intactId="EBI-720609">
        <id>O76024</id>
    </interactant>
    <interactant intactId="EBI-355410">
        <id>Q8N163</id>
        <label>CCAR2</label>
    </interactant>
    <organismsDiffer>false</organismsDiffer>
    <experiments>3</experiments>
</comment>
<comment type="interaction">
    <interactant intactId="EBI-720609">
        <id>O76024</id>
    </interactant>
    <interactant intactId="EBI-49119542">
        <id>Q6ZP82-1</id>
        <label>CCDC141</label>
    </interactant>
    <organismsDiffer>false</organismsDiffer>
    <experiments>3</experiments>
</comment>
<comment type="interaction">
    <interactant intactId="EBI-720609">
        <id>O76024</id>
    </interactant>
    <interactant intactId="EBI-12165781">
        <id>Q96LX7-5</id>
        <label>CCDC17</label>
    </interactant>
    <organismsDiffer>false</organismsDiffer>
    <experiments>3</experiments>
</comment>
<comment type="interaction">
    <interactant intactId="EBI-720609">
        <id>O76024</id>
    </interactant>
    <interactant intactId="EBI-10181422">
        <id>A0A1B0GWI1</id>
        <label>CCDC196</label>
    </interactant>
    <organismsDiffer>false</organismsDiffer>
    <experiments>3</experiments>
</comment>
<comment type="interaction">
    <interactant intactId="EBI-720609">
        <id>O76024</id>
    </interactant>
    <interactant intactId="EBI-2557532">
        <id>Q9Y3X0</id>
        <label>CCDC9</label>
    </interactant>
    <organismsDiffer>false</organismsDiffer>
    <experiments>3</experiments>
</comment>
<comment type="interaction">
    <interactant intactId="EBI-720609">
        <id>O76024</id>
    </interactant>
    <interactant intactId="EBI-375033">
        <id>O96020</id>
        <label>CCNE2</label>
    </interactant>
    <organismsDiffer>false</organismsDiffer>
    <experiments>3</experiments>
</comment>
<comment type="interaction">
    <interactant intactId="EBI-720609">
        <id>O76024</id>
    </interactant>
    <interactant intactId="EBI-357407">
        <id>P78371</id>
        <label>CCT2</label>
    </interactant>
    <organismsDiffer>false</organismsDiffer>
    <experiments>3</experiments>
</comment>
<comment type="interaction">
    <interactant intactId="EBI-720609">
        <id>O76024</id>
    </interactant>
    <interactant intactId="EBI-7797864">
        <id>P11912</id>
        <label>CD79A</label>
    </interactant>
    <organismsDiffer>false</organismsDiffer>
    <experiments>3</experiments>
</comment>
<comment type="interaction">
    <interactant intactId="EBI-720609">
        <id>O76024</id>
    </interactant>
    <interactant intactId="EBI-7054803">
        <id>Q9BWT1</id>
        <label>CDCA7</label>
    </interactant>
    <organismsDiffer>false</organismsDiffer>
    <experiments>3</experiments>
</comment>
<comment type="interaction">
    <interactant intactId="EBI-720609">
        <id>O76024</id>
    </interactant>
    <interactant intactId="EBI-10194801">
        <id>Q5VV42</id>
        <label>CDKAL1</label>
    </interactant>
    <organismsDiffer>false</organismsDiffer>
    <experiments>3</experiments>
</comment>
<comment type="interaction">
    <interactant intactId="EBI-720609">
        <id>O76024</id>
    </interactant>
    <interactant intactId="EBI-11953200">
        <id>Q494V2-2</id>
        <label>CFAP100</label>
    </interactant>
    <organismsDiffer>false</organismsDiffer>
    <experiments>3</experiments>
</comment>
<comment type="interaction">
    <interactant intactId="EBI-720609">
        <id>O76024</id>
    </interactant>
    <interactant intactId="EBI-743375">
        <id>Q9NX63</id>
        <label>CHCHD3</label>
    </interactant>
    <organismsDiffer>false</organismsDiffer>
    <experiments>3</experiments>
</comment>
<comment type="interaction">
    <interactant intactId="EBI-720609">
        <id>O76024</id>
    </interactant>
    <interactant intactId="EBI-10961487">
        <id>O14646-2</id>
        <label>CHD1</label>
    </interactant>
    <organismsDiffer>false</organismsDiffer>
    <experiments>3</experiments>
</comment>
<comment type="interaction">
    <interactant intactId="EBI-720609">
        <id>O76024</id>
    </interactant>
    <interactant intactId="EBI-744045">
        <id>Q9Y3D0</id>
        <label>CIAO2B</label>
    </interactant>
    <organismsDiffer>false</organismsDiffer>
    <experiments>3</experiments>
</comment>
<comment type="interaction">
    <interactant intactId="EBI-720609">
        <id>O76024</id>
    </interactant>
    <interactant intactId="EBI-937732">
        <id>Q99967</id>
        <label>CITED2</label>
    </interactant>
    <organismsDiffer>false</organismsDiffer>
    <experiments>3</experiments>
</comment>
<comment type="interaction">
    <interactant intactId="EBI-720609">
        <id>O76024</id>
    </interactant>
    <interactant intactId="EBI-1050662">
        <id>P12532</id>
        <label>CKMT1B</label>
    </interactant>
    <organismsDiffer>false</organismsDiffer>
    <experiments>3</experiments>
</comment>
<comment type="interaction">
    <interactant intactId="EBI-720609">
        <id>O76024</id>
    </interactant>
    <interactant intactId="EBI-3957044">
        <id>Q9Y240</id>
        <label>CLEC11A</label>
    </interactant>
    <organismsDiffer>false</organismsDiffer>
    <experiments>3</experiments>
</comment>
<comment type="interaction">
    <interactant intactId="EBI-720609">
        <id>O76024</id>
    </interactant>
    <interactant intactId="EBI-11749983">
        <id>Q9UHP7-3</id>
        <label>CLEC2D</label>
    </interactant>
    <organismsDiffer>false</organismsDiffer>
    <experiments>3</experiments>
</comment>
<comment type="interaction">
    <interactant intactId="EBI-720609">
        <id>O76024</id>
    </interactant>
    <interactant intactId="EBI-1171113">
        <id>Q14677</id>
        <label>CLINT1</label>
    </interactant>
    <organismsDiffer>false</organismsDiffer>
    <experiments>3</experiments>
</comment>
<comment type="interaction">
    <interactant intactId="EBI-720609">
        <id>O76024</id>
    </interactant>
    <interactant intactId="EBI-12823145">
        <id>Q96DZ5</id>
        <label>CLIP3</label>
    </interactant>
    <organismsDiffer>false</organismsDiffer>
    <experiments>3</experiments>
</comment>
<comment type="interaction">
    <interactant intactId="EBI-720609">
        <id>O76024</id>
    </interactant>
    <interactant intactId="EBI-1056029">
        <id>Q16740</id>
        <label>CLPP</label>
    </interactant>
    <organismsDiffer>false</organismsDiffer>
    <experiments>3</experiments>
</comment>
<comment type="interaction">
    <interactant intactId="EBI-720609">
        <id>O76024</id>
    </interactant>
    <interactant intactId="EBI-395649">
        <id>Q9BQ75</id>
        <label>CMSS1</label>
    </interactant>
    <organismsDiffer>false</organismsDiffer>
    <experiments>3</experiments>
</comment>
<comment type="interaction">
    <interactant intactId="EBI-720609">
        <id>O76024</id>
    </interactant>
    <interactant intactId="EBI-2835965">
        <id>Q9BT09</id>
        <label>CNPY3</label>
    </interactant>
    <organismsDiffer>false</organismsDiffer>
    <experiments>3</experiments>
</comment>
<comment type="interaction">
    <interactant intactId="EBI-720609">
        <id>O76024</id>
    </interactant>
    <interactant intactId="EBI-25836090">
        <id>Q6PJW8-3</id>
        <label>CNST</label>
    </interactant>
    <organismsDiffer>false</organismsDiffer>
    <experiments>3</experiments>
</comment>
<comment type="interaction">
    <interactant intactId="EBI-720609">
        <id>O76024</id>
    </interactant>
    <interactant intactId="EBI-25896722">
        <id>O43405-2</id>
        <label>COCH</label>
    </interactant>
    <organismsDiffer>false</organismsDiffer>
    <experiments>3</experiments>
</comment>
<comment type="interaction">
    <interactant intactId="EBI-720609">
        <id>O76024</id>
    </interactant>
    <interactant intactId="EBI-372265">
        <id>P21964</id>
        <label>COMT</label>
    </interactant>
    <organismsDiffer>false</organismsDiffer>
    <experiments>3</experiments>
</comment>
<comment type="interaction">
    <interactant intactId="EBI-720609">
        <id>O76024</id>
    </interactant>
    <interactant intactId="EBI-1050386">
        <id>P61201</id>
        <label>COPS2</label>
    </interactant>
    <organismsDiffer>false</organismsDiffer>
    <experiments>3</experiments>
</comment>
<comment type="interaction">
    <interactant intactId="EBI-720609">
        <id>O76024</id>
    </interactant>
    <interactant intactId="EBI-946968">
        <id>Q9P021</id>
        <label>CRIPT</label>
    </interactant>
    <organismsDiffer>false</organismsDiffer>
    <experiments>3</experiments>
</comment>
<comment type="interaction">
    <interactant intactId="EBI-720609">
        <id>O76024</id>
    </interactant>
    <interactant intactId="EBI-724303">
        <id>P01040</id>
        <label>CSTA</label>
    </interactant>
    <organismsDiffer>false</organismsDiffer>
    <experiments>3</experiments>
</comment>
<comment type="interaction">
    <interactant intactId="EBI-720609">
        <id>O76024</id>
    </interactant>
    <interactant intactId="EBI-12024320">
        <id>Q8TB03</id>
        <label>CXorf38</label>
    </interactant>
    <organismsDiffer>false</organismsDiffer>
    <experiments>3</experiments>
</comment>
<comment type="interaction">
    <interactant intactId="EBI-720609">
        <id>O76024</id>
    </interactant>
    <interactant intactId="EBI-1047284">
        <id>P00167</id>
        <label>CYB5A</label>
    </interactant>
    <organismsDiffer>false</organismsDiffer>
    <experiments>3</experiments>
</comment>
<comment type="interaction">
    <interactant intactId="EBI-720609">
        <id>O76024</id>
    </interactant>
    <interactant intactId="EBI-1048143">
        <id>Q7L576</id>
        <label>CYFIP1</label>
    </interactant>
    <organismsDiffer>false</organismsDiffer>
    <experiments>3</experiments>
</comment>
<comment type="interaction">
    <interactant intactId="EBI-720609">
        <id>O76024</id>
    </interactant>
    <interactant intactId="EBI-9090939">
        <id>Q5D0E6-2</id>
        <label>DALRD3</label>
    </interactant>
    <organismsDiffer>false</organismsDiffer>
    <experiments>3</experiments>
</comment>
<comment type="interaction">
    <interactant intactId="EBI-720609">
        <id>O76024</id>
    </interactant>
    <interactant intactId="EBI-25842815">
        <id>Q5TAQ9-2</id>
        <label>DCAF8</label>
    </interactant>
    <organismsDiffer>false</organismsDiffer>
    <experiments>3</experiments>
</comment>
<comment type="interaction">
    <interactant intactId="EBI-720609">
        <id>O76024</id>
    </interactant>
    <interactant intactId="EBI-3508943">
        <id>Q9H816</id>
        <label>DCLRE1B</label>
    </interactant>
    <organismsDiffer>false</organismsDiffer>
    <experiments>3</experiments>
</comment>
<comment type="interaction">
    <interactant intactId="EBI-720609">
        <id>O76024</id>
    </interactant>
    <interactant intactId="EBI-348253">
        <id>O00148</id>
        <label>DDX39A</label>
    </interactant>
    <organismsDiffer>false</organismsDiffer>
    <experiments>3</experiments>
</comment>
<comment type="interaction">
    <interactant intactId="EBI-720609">
        <id>O76024</id>
    </interactant>
    <interactant intactId="EBI-962633">
        <id>P78524</id>
        <label>DENND2B</label>
    </interactant>
    <organismsDiffer>false</organismsDiffer>
    <experiments>3</experiments>
</comment>
<comment type="interaction">
    <interactant intactId="EBI-720609">
        <id>O76024</id>
    </interactant>
    <interactant intactId="EBI-13075846">
        <id>Q68D51-2</id>
        <label>DENND2C</label>
    </interactant>
    <organismsDiffer>false</organismsDiffer>
    <experiments>3</experiments>
</comment>
<comment type="interaction">
    <interactant intactId="EBI-720609">
        <id>O76024</id>
    </interactant>
    <interactant intactId="EBI-10230179">
        <id>Q96F81</id>
        <label>DISP1</label>
    </interactant>
    <organismsDiffer>false</organismsDiffer>
    <experiments>3</experiments>
</comment>
<comment type="interaction">
    <interactant intactId="EBI-720609">
        <id>O76024</id>
    </interactant>
    <interactant intactId="EBI-25842538">
        <id>Q8NDP9</id>
        <label>DKFZp547K2416</label>
    </interactant>
    <organismsDiffer>false</organismsDiffer>
    <experiments>3</experiments>
</comment>
<comment type="interaction">
    <interactant intactId="EBI-720609">
        <id>O76024</id>
    </interactant>
    <interactant intactId="EBI-12019838">
        <id>Q9P1A6-3</id>
        <label>DLGAP2</label>
    </interactant>
    <organismsDiffer>false</organismsDiffer>
    <experiments>3</experiments>
</comment>
<comment type="interaction">
    <interactant intactId="EBI-720609">
        <id>O76024</id>
    </interactant>
    <interactant intactId="EBI-3939812">
        <id>Q5VZB9</id>
        <label>DMRTA1</label>
    </interactant>
    <organismsDiffer>false</organismsDiffer>
    <experiments>3</experiments>
</comment>
<comment type="interaction">
    <interactant intactId="EBI-720609">
        <id>O76024</id>
    </interactant>
    <interactant intactId="EBI-4397791">
        <id>Q9NNZ3</id>
        <label>DNAJC4</label>
    </interactant>
    <organismsDiffer>false</organismsDiffer>
    <experiments>3</experiments>
</comment>
<comment type="interaction">
    <interactant intactId="EBI-720609">
        <id>O76024</id>
    </interactant>
    <interactant intactId="EBI-20894690">
        <id>P49184</id>
        <label>DNASE1L1</label>
    </interactant>
    <organismsDiffer>false</organismsDiffer>
    <experiments>3</experiments>
</comment>
<comment type="interaction">
    <interactant intactId="EBI-720609">
        <id>O76024</id>
    </interactant>
    <interactant intactId="EBI-923653">
        <id>Q9Y6K1</id>
        <label>DNMT3A</label>
    </interactant>
    <organismsDiffer>false</organismsDiffer>
    <experiments>3</experiments>
</comment>
<comment type="interaction">
    <interactant intactId="EBI-720609">
        <id>O76024</id>
    </interactant>
    <interactant intactId="EBI-10694655">
        <id>Q7L591-3</id>
        <label>DOK3</label>
    </interactant>
    <organismsDiffer>false</organismsDiffer>
    <experiments>3</experiments>
</comment>
<comment type="interaction">
    <interactant intactId="EBI-720609">
        <id>O76024</id>
    </interactant>
    <interactant intactId="EBI-719542">
        <id>O14531</id>
        <label>DPYSL4</label>
    </interactant>
    <organismsDiffer>false</organismsDiffer>
    <experiments>3</experiments>
</comment>
<comment type="interaction">
    <interactant intactId="EBI-720609">
        <id>O76024</id>
    </interactant>
    <interactant intactId="EBI-724653">
        <id>Q9BPU6</id>
        <label>DPYSL5</label>
    </interactant>
    <organismsDiffer>false</organismsDiffer>
    <experiments>3</experiments>
</comment>
<comment type="interaction">
    <interactant intactId="EBI-720609">
        <id>O76024</id>
    </interactant>
    <interactant intactId="EBI-3443956">
        <id>Q9BY84</id>
        <label>DUSP16</label>
    </interactant>
    <organismsDiffer>false</organismsDiffer>
    <experiments>3</experiments>
</comment>
<comment type="interaction">
    <interactant intactId="EBI-720609">
        <id>O76024</id>
    </interactant>
    <interactant intactId="EBI-739789">
        <id>Q92997</id>
        <label>DVL3</label>
    </interactant>
    <organismsDiffer>false</organismsDiffer>
    <experiments>3</experiments>
</comment>
<comment type="interaction">
    <interactant intactId="EBI-720609">
        <id>O76024</id>
    </interactant>
    <interactant intactId="EBI-372173">
        <id>O77932</id>
        <label>DXO</label>
    </interactant>
    <organismsDiffer>false</organismsDiffer>
    <experiments>3</experiments>
</comment>
<comment type="interaction">
    <interactant intactId="EBI-720609">
        <id>O76024</id>
    </interactant>
    <interactant intactId="EBI-1176455">
        <id>P63172</id>
        <label>DYNLT1</label>
    </interactant>
    <organismsDiffer>false</organismsDiffer>
    <experiments>3</experiments>
</comment>
<comment type="interaction">
    <interactant intactId="EBI-720609">
        <id>O76024</id>
    </interactant>
    <interactant intactId="EBI-12208839">
        <id>Q9H1Z8</id>
        <label>ECRG4</label>
    </interactant>
    <organismsDiffer>false</organismsDiffer>
    <experiments>3</experiments>
</comment>
<comment type="interaction">
    <interactant intactId="EBI-720609">
        <id>O76024</id>
    </interactant>
    <interactant intactId="EBI-2870947">
        <id>Q3B7T1</id>
        <label>EDRF1</label>
    </interactant>
    <organismsDiffer>false</organismsDiffer>
    <experiments>3</experiments>
</comment>
<comment type="interaction">
    <interactant intactId="EBI-720609">
        <id>O76024</id>
    </interactant>
    <interactant intactId="EBI-711990">
        <id>O00303</id>
        <label>EIF3F</label>
    </interactant>
    <organismsDiffer>false</organismsDiffer>
    <experiments>3</experiments>
</comment>
<comment type="interaction">
    <interactant intactId="EBI-720609">
        <id>O76024</id>
    </interactant>
    <interactant intactId="EBI-928530">
        <id>O60841</id>
        <label>EIF5B</label>
    </interactant>
    <organismsDiffer>false</organismsDiffer>
    <experiments>3</experiments>
</comment>
<comment type="interaction">
    <interactant intactId="EBI-720609">
        <id>O76024</id>
    </interactant>
    <interactant intactId="EBI-12866582">
        <id>I6L9I8</id>
        <label>EPN3</label>
    </interactant>
    <organismsDiffer>false</organismsDiffer>
    <experiments>3</experiments>
</comment>
<comment type="interaction">
    <interactant intactId="EBI-720609">
        <id>O76024</id>
    </interactant>
    <interactant intactId="EBI-21574901">
        <id>Q8TE68-3</id>
        <label>EPS8L1</label>
    </interactant>
    <organismsDiffer>false</organismsDiffer>
    <experiments>3</experiments>
</comment>
<comment type="interaction">
    <interactant intactId="EBI-720609">
        <id>O76024</id>
    </interactant>
    <interactant intactId="EBI-3940939">
        <id>Q9H6S3</id>
        <label>EPS8L2</label>
    </interactant>
    <organismsDiffer>false</organismsDiffer>
    <experiments>3</experiments>
</comment>
<comment type="interaction">
    <interactant intactId="EBI-720609">
        <id>O76024</id>
    </interactant>
    <interactant intactId="EBI-1042535">
        <id>Q2NKX8</id>
        <label>ERCC6L</label>
    </interactant>
    <organismsDiffer>false</organismsDiffer>
    <experiments>3</experiments>
</comment>
<comment type="interaction">
    <interactant intactId="EBI-720609">
        <id>O76024</id>
    </interactant>
    <interactant intactId="EBI-12260294">
        <id>Q9NQ30</id>
        <label>ESM1</label>
    </interactant>
    <organismsDiffer>false</organismsDiffer>
    <experiments>3</experiments>
</comment>
<comment type="interaction">
    <interactant intactId="EBI-720609">
        <id>O76024</id>
    </interactant>
    <interactant intactId="EBI-78473">
        <id>P03372</id>
        <label>ESR1</label>
    </interactant>
    <organismsDiffer>false</organismsDiffer>
    <experiments>3</experiments>
</comment>
<comment type="interaction">
    <interactant intactId="EBI-720609">
        <id>O76024</id>
    </interactant>
    <interactant intactId="EBI-10213520">
        <id>Q6NXG1</id>
        <label>ESRP1</label>
    </interactant>
    <organismsDiffer>false</organismsDiffer>
    <experiments>3</experiments>
</comment>
<comment type="interaction">
    <interactant intactId="EBI-720609">
        <id>O76024</id>
    </interactant>
    <interactant intactId="EBI-6448852">
        <id>Q9UI08-2</id>
        <label>EVL</label>
    </interactant>
    <organismsDiffer>false</organismsDiffer>
    <experiments>3</experiments>
</comment>
<comment type="interaction">
    <interactant intactId="EBI-720609">
        <id>O76024</id>
    </interactant>
    <interactant intactId="EBI-25896785">
        <id>Q01844-4</id>
        <label>EWSR1</label>
    </interactant>
    <organismsDiffer>false</organismsDiffer>
    <experiments>3</experiments>
</comment>
<comment type="interaction">
    <interactant intactId="EBI-720609">
        <id>O76024</id>
    </interactant>
    <interactant intactId="EBI-949824">
        <id>O00471</id>
        <label>EXOC5</label>
    </interactant>
    <organismsDiffer>false</organismsDiffer>
    <experiments>3</experiments>
</comment>
<comment type="interaction">
    <interactant intactId="EBI-720609">
        <id>O76024</id>
    </interactant>
    <interactant intactId="EBI-9089567">
        <id>Q99504</id>
        <label>EYA3</label>
    </interactant>
    <organismsDiffer>false</organismsDiffer>
    <experiments>3</experiments>
</comment>
<comment type="interaction">
    <interactant intactId="EBI-720609">
        <id>O76024</id>
    </interactant>
    <interactant intactId="EBI-10697159">
        <id>O15540</id>
        <label>FABP7</label>
    </interactant>
    <organismsDiffer>false</organismsDiffer>
    <experiments>3</experiments>
</comment>
<comment type="interaction">
    <interactant intactId="EBI-720609">
        <id>O76024</id>
    </interactant>
    <interactant intactId="EBI-12902289">
        <id>Q6P587-2</id>
        <label>FAHD1</label>
    </interactant>
    <organismsDiffer>false</organismsDiffer>
    <experiments>3</experiments>
</comment>
<comment type="interaction">
    <interactant intactId="EBI-720609">
        <id>O76024</id>
    </interactant>
    <interactant intactId="EBI-6309082">
        <id>Q6SJ93</id>
        <label>FAM111B</label>
    </interactant>
    <organismsDiffer>false</organismsDiffer>
    <experiments>3</experiments>
</comment>
<comment type="interaction">
    <interactant intactId="EBI-720609">
        <id>O76024</id>
    </interactant>
    <interactant intactId="EBI-3893327">
        <id>Q6P1L5</id>
        <label>FAM117B</label>
    </interactant>
    <organismsDiffer>false</organismsDiffer>
    <experiments>3</experiments>
</comment>
<comment type="interaction">
    <interactant intactId="EBI-720609">
        <id>O76024</id>
    </interactant>
    <interactant intactId="EBI-25835236">
        <id>Q49AJ0-4</id>
        <label>FAM135B</label>
    </interactant>
    <organismsDiffer>false</organismsDiffer>
    <experiments>3</experiments>
</comment>
<comment type="interaction">
    <interactant intactId="EBI-720609">
        <id>O76024</id>
    </interactant>
    <interactant intactId="EBI-11793142">
        <id>Q96GL9</id>
        <label>FAM163A</label>
    </interactant>
    <organismsDiffer>false</organismsDiffer>
    <experiments>3</experiments>
</comment>
<comment type="interaction">
    <interactant intactId="EBI-720609">
        <id>O76024</id>
    </interactant>
    <interactant intactId="EBI-18304435">
        <id>Q5JX71</id>
        <label>FAM209A</label>
    </interactant>
    <organismsDiffer>false</organismsDiffer>
    <experiments>3</experiments>
</comment>
<comment type="interaction">
    <interactant intactId="EBI-720609">
        <id>O76024</id>
    </interactant>
    <interactant intactId="EBI-11956087">
        <id>Q5HYJ3-3</id>
        <label>FAM76B</label>
    </interactant>
    <organismsDiffer>false</organismsDiffer>
    <experiments>3</experiments>
</comment>
<comment type="interaction">
    <interactant intactId="EBI-720609">
        <id>O76024</id>
    </interactant>
    <interactant intactId="EBI-5461838">
        <id>Q17RN3</id>
        <label>FAM98C</label>
    </interactant>
    <organismsDiffer>false</organismsDiffer>
    <experiments>3</experiments>
</comment>
<comment type="interaction">
    <interactant intactId="EBI-720609">
        <id>O76024</id>
    </interactant>
    <interactant intactId="EBI-8468186">
        <id>Q8IZU1</id>
        <label>FAM9A</label>
    </interactant>
    <organismsDiffer>false</organismsDiffer>
    <experiments>3</experiments>
</comment>
<comment type="interaction">
    <interactant intactId="EBI-720609">
        <id>O76024</id>
    </interactant>
    <interactant intactId="EBI-81610">
        <id>O15287</id>
        <label>FANCG</label>
    </interactant>
    <organismsDiffer>false</organismsDiffer>
    <experiments>3</experiments>
</comment>
<comment type="interaction">
    <interactant intactId="EBI-720609">
        <id>O76024</id>
    </interactant>
    <interactant intactId="EBI-21975404">
        <id>Q8TC84</id>
        <label>FANK1</label>
    </interactant>
    <organismsDiffer>false</organismsDiffer>
    <experiments>3</experiments>
</comment>
<comment type="interaction">
    <interactant intactId="EBI-720609">
        <id>O76024</id>
    </interactant>
    <interactant intactId="EBI-3957005">
        <id>Q53R41</id>
        <label>FASTKD1</label>
    </interactant>
    <organismsDiffer>false</organismsDiffer>
    <experiments>3</experiments>
</comment>
<comment type="interaction">
    <interactant intactId="EBI-720609">
        <id>O76024</id>
    </interactant>
    <interactant intactId="EBI-724767">
        <id>Q8NFZ0</id>
        <label>FBH1</label>
    </interactant>
    <organismsDiffer>false</organismsDiffer>
    <experiments>3</experiments>
</comment>
<comment type="interaction">
    <interactant intactId="EBI-720609">
        <id>O76024</id>
    </interactant>
    <interactant intactId="EBI-947897">
        <id>Q9UBX5</id>
        <label>FBLN5</label>
    </interactant>
    <organismsDiffer>false</organismsDiffer>
    <experiments>3</experiments>
</comment>
<comment type="interaction">
    <interactant intactId="EBI-720609">
        <id>O76024</id>
    </interactant>
    <interactant intactId="EBI-960409">
        <id>Q9UKT5</id>
        <label>FBXO4</label>
    </interactant>
    <organismsDiffer>false</organismsDiffer>
    <experiments>3</experiments>
</comment>
<comment type="interaction">
    <interactant intactId="EBI-720609">
        <id>O76024</id>
    </interactant>
    <interactant intactId="EBI-2506081">
        <id>Q6P3S6</id>
        <label>FBXO42</label>
    </interactant>
    <organismsDiffer>false</organismsDiffer>
    <experiments>3</experiments>
</comment>
<comment type="interaction">
    <interactant intactId="EBI-720609">
        <id>O76024</id>
    </interactant>
    <interactant intactId="EBI-396453">
        <id>Q9UHY8</id>
        <label>FEZ2</label>
    </interactant>
    <organismsDiffer>false</organismsDiffer>
    <experiments>3</experiments>
</comment>
<comment type="interaction">
    <interactant intactId="EBI-720609">
        <id>O76024</id>
    </interactant>
    <interactant intactId="EBI-744510">
        <id>P15407</id>
        <label>FOSL1</label>
    </interactant>
    <organismsDiffer>false</organismsDiffer>
    <experiments>3</experiments>
</comment>
<comment type="interaction">
    <interactant intactId="EBI-720609">
        <id>O76024</id>
    </interactant>
    <interactant intactId="EBI-713279">
        <id>P02792</id>
        <label>FTL</label>
    </interactant>
    <organismsDiffer>false</organismsDiffer>
    <experiments>3</experiments>
</comment>
<comment type="interaction">
    <interactant intactId="EBI-720609">
        <id>O76024</id>
    </interactant>
    <interactant intactId="EBI-751757">
        <id>Q7L622</id>
        <label>G2E3</label>
    </interactant>
    <organismsDiffer>false</organismsDiffer>
    <experiments>3</experiments>
</comment>
<comment type="interaction">
    <interactant intactId="EBI-720609">
        <id>O76024</id>
    </interactant>
    <interactant intactId="EBI-3906612">
        <id>P35575</id>
        <label>G6PC1</label>
    </interactant>
    <organismsDiffer>false</organismsDiffer>
    <experiments>3</experiments>
</comment>
<comment type="interaction">
    <interactant intactId="EBI-720609">
        <id>O76024</id>
    </interactant>
    <interactant intactId="EBI-3907241">
        <id>Q8NCL4</id>
        <label>GALNT6</label>
    </interactant>
    <organismsDiffer>false</organismsDiffer>
    <experiments>3</experiments>
</comment>
<comment type="interaction">
    <interactant intactId="EBI-720609">
        <id>O76024</id>
    </interactant>
    <interactant intactId="EBI-9090198">
        <id>P15976-2</id>
        <label>GATA1</label>
    </interactant>
    <organismsDiffer>false</organismsDiffer>
    <experiments>3</experiments>
</comment>
<comment type="interaction">
    <interactant intactId="EBI-720609">
        <id>O76024</id>
    </interactant>
    <interactant intactId="EBI-21856389">
        <id>P23769-2</id>
        <label>GATA2</label>
    </interactant>
    <organismsDiffer>false</organismsDiffer>
    <experiments>3</experiments>
</comment>
<comment type="interaction">
    <interactant intactId="EBI-720609">
        <id>O76024</id>
    </interactant>
    <interactant intactId="EBI-744302">
        <id>P14136</id>
        <label>GFAP</label>
    </interactant>
    <organismsDiffer>false</organismsDiffer>
    <experiments>3</experiments>
</comment>
<comment type="interaction">
    <interactant intactId="EBI-720609">
        <id>O76024</id>
    </interactant>
    <interactant intactId="EBI-8799578">
        <id>Q9NXC2</id>
        <label>GFOD1</label>
    </interactant>
    <organismsDiffer>false</organismsDiffer>
    <experiments>3</experiments>
</comment>
<comment type="interaction">
    <interactant intactId="EBI-720609">
        <id>O76024</id>
    </interactant>
    <interactant intactId="EBI-14061927">
        <id>P10075</id>
        <label>GLI4</label>
    </interactant>
    <organismsDiffer>false</organismsDiffer>
    <experiments>3</experiments>
</comment>
<comment type="interaction">
    <interactant intactId="EBI-720609">
        <id>O76024</id>
    </interactant>
    <interactant intactId="EBI-11975289">
        <id>Q9Y223-2</id>
        <label>GNE</label>
    </interactant>
    <organismsDiffer>false</organismsDiffer>
    <experiments>3</experiments>
</comment>
<comment type="interaction">
    <interactant intactId="EBI-720609">
        <id>O76024</id>
    </interactant>
    <interactant intactId="EBI-22000587">
        <id>Q9HBQ8</id>
        <label>GOLGA2P5</label>
    </interactant>
    <organismsDiffer>false</organismsDiffer>
    <experiments>3</experiments>
</comment>
<comment type="interaction">
    <interactant intactId="EBI-720609">
        <id>O76024</id>
    </interactant>
    <interactant intactId="EBI-751540">
        <id>O95872</id>
        <label>GPANK1</label>
    </interactant>
    <organismsDiffer>false</organismsDiffer>
    <experiments>3</experiments>
</comment>
<comment type="interaction">
    <interactant intactId="EBI-720609">
        <id>O76024</id>
    </interactant>
    <interactant intactId="EBI-25896879">
        <id>Q8IYG2</id>
        <label>GPC3</label>
    </interactant>
    <organismsDiffer>false</organismsDiffer>
    <experiments>3</experiments>
</comment>
<comment type="interaction">
    <interactant intactId="EBI-720609">
        <id>O76024</id>
    </interactant>
    <interactant intactId="EBI-21649723">
        <id>Q7Z602</id>
        <label>GPR141</label>
    </interactant>
    <organismsDiffer>false</organismsDiffer>
    <experiments>3</experiments>
</comment>
<comment type="interaction">
    <interactant intactId="EBI-720609">
        <id>O76024</id>
    </interactant>
    <interactant intactId="EBI-11905631">
        <id>P0CG08</id>
        <label>GPR89B</label>
    </interactant>
    <organismsDiffer>false</organismsDiffer>
    <experiments>3</experiments>
</comment>
<comment type="interaction">
    <interactant intactId="EBI-720609">
        <id>O76024</id>
    </interactant>
    <interactant intactId="EBI-347538">
        <id>Q9Y4H4</id>
        <label>GPSM3</label>
    </interactant>
    <organismsDiffer>false</organismsDiffer>
    <experiments>3</experiments>
</comment>
<comment type="interaction">
    <interactant intactId="EBI-720609">
        <id>O76024</id>
    </interactant>
    <interactant intactId="EBI-25832107">
        <id>Q8IY40</id>
        <label>GRIK2</label>
    </interactant>
    <organismsDiffer>false</organismsDiffer>
    <experiments>3</experiments>
</comment>
<comment type="interaction">
    <interactant intactId="EBI-720609">
        <id>O76024</id>
    </interactant>
    <interactant intactId="EBI-6447217">
        <id>O75409</id>
        <label>H2AP</label>
    </interactant>
    <organismsDiffer>false</organismsDiffer>
    <experiments>3</experiments>
</comment>
<comment type="interaction">
    <interactant intactId="EBI-720609">
        <id>O76024</id>
    </interactant>
    <interactant intactId="EBI-2868501">
        <id>Q6NXT2</id>
        <label>H3-5</label>
    </interactant>
    <organismsDiffer>false</organismsDiffer>
    <experiments>3</experiments>
</comment>
<comment type="interaction">
    <interactant intactId="EBI-720609">
        <id>O76024</id>
    </interactant>
    <interactant intactId="EBI-79722">
        <id>P68431</id>
        <label>H3C12</label>
    </interactant>
    <organismsDiffer>false</organismsDiffer>
    <experiments>3</experiments>
</comment>
<comment type="interaction">
    <interactant intactId="EBI-720609">
        <id>O76024</id>
    </interactant>
    <interactant intactId="EBI-25843825">
        <id>A8K0U2</id>
        <label>hCG_2001421</label>
    </interactant>
    <organismsDiffer>false</organismsDiffer>
    <experiments>3</experiments>
</comment>
<comment type="interaction">
    <interactant intactId="EBI-720609">
        <id>O76024</id>
    </interactant>
    <interactant intactId="EBI-9834454">
        <id>P08631-2</id>
        <label>HCK</label>
    </interactant>
    <organismsDiffer>false</organismsDiffer>
    <experiments>3</experiments>
</comment>
<comment type="interaction">
    <interactant intactId="EBI-720609">
        <id>O76024</id>
    </interactant>
    <interactant intactId="EBI-747421">
        <id>Q03014</id>
        <label>HHEX</label>
    </interactant>
    <organismsDiffer>false</organismsDiffer>
    <experiments>3</experiments>
</comment>
<comment type="interaction">
    <interactant intactId="EBI-720609">
        <id>O76024</id>
    </interactant>
    <interactant intactId="EBI-2965780">
        <id>P52790</id>
        <label>HK3</label>
    </interactant>
    <organismsDiffer>false</organismsDiffer>
    <experiments>3</experiments>
</comment>
<comment type="interaction">
    <interactant intactId="EBI-720609">
        <id>O76024</id>
    </interactant>
    <interactant intactId="EBI-12098658">
        <id>O75330-3</id>
        <label>HMMR</label>
    </interactant>
    <organismsDiffer>false</organismsDiffer>
    <experiments>3</experiments>
</comment>
<comment type="interaction">
    <interactant intactId="EBI-720609">
        <id>O76024</id>
    </interactant>
    <interactant intactId="EBI-299727">
        <id>O14979</id>
        <label>HNRNPDL</label>
    </interactant>
    <organismsDiffer>false</organismsDiffer>
    <experiments>3</experiments>
</comment>
<comment type="interaction">
    <interactant intactId="EBI-720609">
        <id>O76024</id>
    </interactant>
    <interactant intactId="EBI-25835621">
        <id>Q96EW2-2</id>
        <label>HSPBAP1</label>
    </interactant>
    <organismsDiffer>false</organismsDiffer>
    <experiments>3</experiments>
</comment>
<comment type="interaction">
    <interactant intactId="EBI-720609">
        <id>O76024</id>
    </interactant>
    <interactant intactId="EBI-9091197">
        <id>Q8IY31-3</id>
        <label>IFT20</label>
    </interactant>
    <organismsDiffer>false</organismsDiffer>
    <experiments>3</experiments>
</comment>
<comment type="interaction">
    <interactant intactId="EBI-720609">
        <id>O76024</id>
    </interactant>
    <interactant intactId="EBI-2831948">
        <id>P22692</id>
        <label>IGFBP4</label>
    </interactant>
    <organismsDiffer>false</organismsDiffer>
    <experiments>3</experiments>
</comment>
<comment type="interaction">
    <interactant intactId="EBI-720609">
        <id>O76024</id>
    </interactant>
    <interactant intactId="EBI-17178971">
        <id>Q14005-2</id>
        <label>IL16</label>
    </interactant>
    <organismsDiffer>false</organismsDiffer>
    <experiments>3</experiments>
</comment>
<comment type="interaction">
    <interactant intactId="EBI-720609">
        <id>O76024</id>
    </interactant>
    <interactant intactId="EBI-21018056">
        <id>O95256</id>
        <label>IL18RAP</label>
    </interactant>
    <organismsDiffer>false</organismsDiffer>
    <experiments>4</experiments>
</comment>
<comment type="interaction">
    <interactant intactId="EBI-720609">
        <id>O76024</id>
    </interactant>
    <interactant intactId="EBI-20831744">
        <id>Q96RQ9</id>
        <label>IL4I1</label>
    </interactant>
    <organismsDiffer>false</organismsDiffer>
    <experiments>3</experiments>
</comment>
<comment type="interaction">
    <interactant intactId="EBI-720609">
        <id>O76024</id>
    </interactant>
    <interactant intactId="EBI-743980">
        <id>Q9NXX0</id>
        <label>ILF3</label>
    </interactant>
    <organismsDiffer>false</organismsDiffer>
    <experiments>3</experiments>
</comment>
<comment type="interaction">
    <interactant intactId="EBI-720609">
        <id>O76024</id>
    </interactant>
    <interactant intactId="EBI-2866661">
        <id>Q9UNL4</id>
        <label>ING4</label>
    </interactant>
    <organismsDiffer>false</organismsDiffer>
    <experiments>3</experiments>
</comment>
<comment type="interaction">
    <interactant intactId="EBI-720609">
        <id>O76024</id>
    </interactant>
    <interactant intactId="EBI-21602071">
        <id>Q8WYH8-2</id>
        <label>ING5</label>
    </interactant>
    <organismsDiffer>false</organismsDiffer>
    <experiments>3</experiments>
</comment>
<comment type="interaction">
    <interactant intactId="EBI-720609">
        <id>O76024</id>
    </interactant>
    <interactant intactId="EBI-10238842">
        <id>Q8IXL9</id>
        <label>IQCF2</label>
    </interactant>
    <organismsDiffer>false</organismsDiffer>
    <experiments>3</experiments>
</comment>
<comment type="interaction">
    <interactant intactId="EBI-720609">
        <id>O76024</id>
    </interactant>
    <interactant intactId="EBI-10220600">
        <id>Q8NA54</id>
        <label>IQUB</label>
    </interactant>
    <organismsDiffer>false</organismsDiffer>
    <experiments>3</experiments>
</comment>
<comment type="interaction">
    <interactant intactId="EBI-720609">
        <id>O76024</id>
    </interactant>
    <interactant intactId="EBI-25840037">
        <id>Q9Y6F6-3</id>
        <label>IRAG1</label>
    </interactant>
    <organismsDiffer>false</organismsDiffer>
    <experiments>3</experiments>
</comment>
<comment type="interaction">
    <interactant intactId="EBI-720609">
        <id>O76024</id>
    </interactant>
    <interactant intactId="EBI-10258659">
        <id>Q86U28</id>
        <label>ISCA2</label>
    </interactant>
    <organismsDiffer>false</organismsDiffer>
    <experiments>3</experiments>
</comment>
<comment type="interaction">
    <interactant intactId="EBI-720609">
        <id>O76024</id>
    </interactant>
    <interactant intactId="EBI-9090173">
        <id>P0C870</id>
        <label>JMJD7</label>
    </interactant>
    <organismsDiffer>false</organismsDiffer>
    <experiments>3</experiments>
</comment>
<comment type="interaction">
    <interactant intactId="EBI-720609">
        <id>O76024</id>
    </interactant>
    <interactant intactId="EBI-25871195">
        <id>Q9NVX7-2</id>
        <label>KBTBD4</label>
    </interactant>
    <organismsDiffer>false</organismsDiffer>
    <experiments>3</experiments>
</comment>
<comment type="interaction">
    <interactant intactId="EBI-720609">
        <id>O76024</id>
    </interactant>
    <interactant intactId="EBI-7932244">
        <id>Q9Y691</id>
        <label>KCNMB2</label>
    </interactant>
    <organismsDiffer>false</organismsDiffer>
    <experiments>3</experiments>
</comment>
<comment type="interaction">
    <interactant intactId="EBI-720609">
        <id>O76024</id>
    </interactant>
    <interactant intactId="EBI-742916">
        <id>Q8WZ19</id>
        <label>KCTD13</label>
    </interactant>
    <organismsDiffer>false</organismsDiffer>
    <experiments>3</experiments>
</comment>
<comment type="interaction">
    <interactant intactId="EBI-720609">
        <id>O76024</id>
    </interactant>
    <interactant intactId="EBI-12382297">
        <id>Q96SI1-2</id>
        <label>KCTD15</label>
    </interactant>
    <organismsDiffer>false</organismsDiffer>
    <experiments>3</experiments>
</comment>
<comment type="interaction">
    <interactant intactId="EBI-720609">
        <id>O76024</id>
    </interactant>
    <interactant intactId="EBI-3909166">
        <id>Q06136</id>
        <label>KDSR</label>
    </interactant>
    <organismsDiffer>false</organismsDiffer>
    <experiments>3</experiments>
</comment>
<comment type="interaction">
    <interactant intactId="EBI-720609">
        <id>O76024</id>
    </interactant>
    <interactant intactId="EBI-751001">
        <id>Q14145</id>
        <label>KEAP1</label>
    </interactant>
    <organismsDiffer>false</organismsDiffer>
    <experiments>3</experiments>
</comment>
<comment type="interaction">
    <interactant intactId="EBI-720609">
        <id>O76024</id>
    </interactant>
    <interactant intactId="EBI-20764875">
        <id>A0A384DVV8</id>
        <label>KIAA0040</label>
    </interactant>
    <organismsDiffer>false</organismsDiffer>
    <experiments>3</experiments>
</comment>
<comment type="interaction">
    <interactant intactId="EBI-720609">
        <id>O76024</id>
    </interactant>
    <interactant intactId="EBI-739493">
        <id>Q6ZU52</id>
        <label>KIAA0408</label>
    </interactant>
    <organismsDiffer>false</organismsDiffer>
    <experiments>3</experiments>
</comment>
<comment type="interaction">
    <interactant intactId="EBI-720609">
        <id>O76024</id>
    </interactant>
    <interactant intactId="EBI-2679809">
        <id>Q12756</id>
        <label>KIF1A</label>
    </interactant>
    <organismsDiffer>false</organismsDiffer>
    <experiments>3</experiments>
</comment>
<comment type="interaction">
    <interactant intactId="EBI-720609">
        <id>O76024</id>
    </interactant>
    <interactant intactId="EBI-2796400">
        <id>Q9UIH9</id>
        <label>KLF15</label>
    </interactant>
    <organismsDiffer>false</organismsDiffer>
    <experiments>3</experiments>
</comment>
<comment type="interaction">
    <interactant intactId="EBI-720609">
        <id>O76024</id>
    </interactant>
    <interactant intactId="EBI-8472267">
        <id>P57682</id>
        <label>KLF3</label>
    </interactant>
    <organismsDiffer>false</organismsDiffer>
    <experiments>3</experiments>
</comment>
<comment type="interaction">
    <interactant intactId="EBI-720609">
        <id>O76024</id>
    </interactant>
    <interactant intactId="EBI-714379">
        <id>Q9Y2M5</id>
        <label>KLHL20</label>
    </interactant>
    <organismsDiffer>false</organismsDiffer>
    <experiments>3</experiments>
</comment>
<comment type="interaction">
    <interactant intactId="EBI-720609">
        <id>O76024</id>
    </interactant>
    <interactant intactId="EBI-742756">
        <id>P08727</id>
        <label>KRT19</label>
    </interactant>
    <organismsDiffer>false</organismsDiffer>
    <experiments>3</experiments>
</comment>
<comment type="interaction">
    <interactant intactId="EBI-720609">
        <id>O76024</id>
    </interactant>
    <interactant intactId="EBI-8473062">
        <id>Q8N1A0</id>
        <label>KRT222</label>
    </interactant>
    <organismsDiffer>false</organismsDiffer>
    <experiments>3</experiments>
</comment>
<comment type="interaction">
    <interactant intactId="EBI-720609">
        <id>O76024</id>
    </interactant>
    <interactant intactId="EBI-1049638">
        <id>Q14525</id>
        <label>KRT33B</label>
    </interactant>
    <organismsDiffer>false</organismsDiffer>
    <experiments>3</experiments>
</comment>
<comment type="interaction">
    <interactant intactId="EBI-720609">
        <id>O76024</id>
    </interactant>
    <interactant intactId="EBI-10241252">
        <id>Q3SY46</id>
        <label>KRTAP13-3</label>
    </interactant>
    <organismsDiffer>false</organismsDiffer>
    <experiments>3</experiments>
</comment>
<comment type="interaction">
    <interactant intactId="EBI-720609">
        <id>O76024</id>
    </interactant>
    <interactant intactId="EBI-10241353">
        <id>Q3SYF9</id>
        <label>KRTAP19-7</label>
    </interactant>
    <organismsDiffer>false</organismsDiffer>
    <experiments>3</experiments>
</comment>
<comment type="interaction">
    <interactant intactId="EBI-720609">
        <id>O76024</id>
    </interactant>
    <interactant intactId="EBI-10261141">
        <id>Q8IUC2</id>
        <label>KRTAP8-1</label>
    </interactant>
    <organismsDiffer>false</organismsDiffer>
    <experiments>3</experiments>
</comment>
<comment type="interaction">
    <interactant intactId="EBI-720609">
        <id>O76024</id>
    </interactant>
    <interactant intactId="EBI-9088686">
        <id>Q14847-2</id>
        <label>LASP1</label>
    </interactant>
    <organismsDiffer>false</organismsDiffer>
    <experiments>3</experiments>
</comment>
<comment type="interaction">
    <interactant intactId="EBI-720609">
        <id>O76024</id>
    </interactant>
    <interactant intactId="EBI-8473670">
        <id>O95447</id>
        <label>LCA5L</label>
    </interactant>
    <organismsDiffer>false</organismsDiffer>
    <experiments>3</experiments>
</comment>
<comment type="interaction">
    <interactant intactId="EBI-720609">
        <id>O76024</id>
    </interactant>
    <interactant intactId="EBI-9104464">
        <id>P04180</id>
        <label>LCAT</label>
    </interactant>
    <organismsDiffer>false</organismsDiffer>
    <experiments>3</experiments>
</comment>
<comment type="interaction">
    <interactant intactId="EBI-720609">
        <id>O76024</id>
    </interactant>
    <interactant intactId="EBI-10245913">
        <id>Q5T7P3</id>
        <label>LCE1B</label>
    </interactant>
    <organismsDiffer>false</organismsDiffer>
    <experiments>3</experiments>
</comment>
<comment type="interaction">
    <interactant intactId="EBI-720609">
        <id>O76024</id>
    </interactant>
    <interactant intactId="EBI-10246607">
        <id>Q5TA79</id>
        <label>LCE2A</label>
    </interactant>
    <organismsDiffer>false</organismsDiffer>
    <experiments>3</experiments>
</comment>
<comment type="interaction">
    <interactant intactId="EBI-720609">
        <id>O76024</id>
    </interactant>
    <interactant intactId="EBI-739546">
        <id>Q96PV6</id>
        <label>LENG8</label>
    </interactant>
    <organismsDiffer>false</organismsDiffer>
    <experiments>3</experiments>
</comment>
<comment type="interaction">
    <interactant intactId="EBI-720609">
        <id>O76024</id>
    </interactant>
    <interactant intactId="EBI-740058">
        <id>O00214</id>
        <label>LGALS8</label>
    </interactant>
    <organismsDiffer>false</organismsDiffer>
    <experiments>3</experiments>
</comment>
<comment type="interaction">
    <interactant intactId="EBI-720609">
        <id>O76024</id>
    </interactant>
    <interactant intactId="EBI-10258746">
        <id>Q9UPM6</id>
        <label>LHX6</label>
    </interactant>
    <organismsDiffer>false</organismsDiffer>
    <experiments>3</experiments>
</comment>
<comment type="interaction">
    <interactant intactId="EBI-720609">
        <id>O76024</id>
    </interactant>
    <interactant intactId="EBI-8474075">
        <id>Q68G74</id>
        <label>LHX8</label>
    </interactant>
    <organismsDiffer>false</organismsDiffer>
    <experiments>3</experiments>
</comment>
<comment type="interaction">
    <interactant intactId="EBI-720609">
        <id>O76024</id>
    </interactant>
    <interactant intactId="EBI-2340947">
        <id>Q8N448</id>
        <label>LNX2</label>
    </interactant>
    <organismsDiffer>false</organismsDiffer>
    <experiments>3</experiments>
</comment>
<comment type="interaction">
    <interactant intactId="EBI-720609">
        <id>O76024</id>
    </interactant>
    <interactant intactId="EBI-9088215">
        <id>A2RU56</id>
        <label>LOC401296</label>
    </interactant>
    <organismsDiffer>false</organismsDiffer>
    <experiments>3</experiments>
</comment>
<comment type="interaction">
    <interactant intactId="EBI-720609">
        <id>O76024</id>
    </interactant>
    <interactant intactId="EBI-749562">
        <id>Q96JB6</id>
        <label>LOXL4</label>
    </interactant>
    <organismsDiffer>false</organismsDiffer>
    <experiments>3</experiments>
</comment>
<comment type="interaction">
    <interactant intactId="EBI-720609">
        <id>O76024</id>
    </interactant>
    <interactant intactId="EBI-5278370">
        <id>Q14693</id>
        <label>LPIN1</label>
    </interactant>
    <organismsDiffer>false</organismsDiffer>
    <experiments>3</experiments>
</comment>
<comment type="interaction">
    <interactant intactId="EBI-720609">
        <id>O76024</id>
    </interactant>
    <interactant intactId="EBI-25862057">
        <id>Q6Q4G3-4</id>
        <label>LVRN</label>
    </interactant>
    <organismsDiffer>false</organismsDiffer>
    <experiments>3</experiments>
</comment>
<comment type="interaction">
    <interactant intactId="EBI-720609">
        <id>O76024</id>
    </interactant>
    <interactant intactId="EBI-720354">
        <id>Q9H063</id>
        <label>MAF1</label>
    </interactant>
    <organismsDiffer>false</organismsDiffer>
    <experiments>3</experiments>
</comment>
<comment type="interaction">
    <interactant intactId="EBI-720609">
        <id>O76024</id>
    </interactant>
    <interactant intactId="EBI-741835">
        <id>Q96M61</id>
        <label>MAGEB18</label>
    </interactant>
    <organismsDiffer>false</organismsDiffer>
    <experiments>3</experiments>
</comment>
<comment type="interaction">
    <interactant intactId="EBI-720609">
        <id>O76024</id>
    </interactant>
    <interactant intactId="EBI-12056869">
        <id>Q9UDY8-2</id>
        <label>MALT1</label>
    </interactant>
    <organismsDiffer>false</organismsDiffer>
    <experiments>3</experiments>
</comment>
<comment type="interaction">
    <interactant intactId="EBI-720609">
        <id>O76024</id>
    </interactant>
    <interactant intactId="EBI-448135">
        <id>P52564</id>
        <label>MAP2K6</label>
    </interactant>
    <organismsDiffer>false</organismsDiffer>
    <experiments>3</experiments>
</comment>
<comment type="interaction">
    <interactant intactId="EBI-720609">
        <id>O76024</id>
    </interactant>
    <interactant intactId="EBI-25848049">
        <id>P61244-4</id>
        <label>MAX</label>
    </interactant>
    <organismsDiffer>false</organismsDiffer>
    <experiments>3</experiments>
</comment>
<comment type="interaction">
    <interactant intactId="EBI-720609">
        <id>O76024</id>
    </interactant>
    <interactant intactId="EBI-6448717">
        <id>O95243-2</id>
        <label>MBD4</label>
    </interactant>
    <organismsDiffer>false</organismsDiffer>
    <experiments>3</experiments>
</comment>
<comment type="interaction">
    <interactant intactId="EBI-720609">
        <id>O76024</id>
    </interactant>
    <interactant intactId="EBI-10182361">
        <id>Q9NS73-5</id>
        <label>MBIP</label>
    </interactant>
    <organismsDiffer>false</organismsDiffer>
    <experiments>3</experiments>
</comment>
<comment type="interaction">
    <interactant intactId="EBI-720609">
        <id>O76024</id>
    </interactant>
    <interactant intactId="EBI-21375623">
        <id>O15068-4</id>
        <label>MCF2L</label>
    </interactant>
    <organismsDiffer>false</organismsDiffer>
    <experiments>3</experiments>
</comment>
<comment type="interaction">
    <interactant intactId="EBI-720609">
        <id>O76024</id>
    </interactant>
    <interactant intactId="EBI-23820194">
        <id>Q03112-9</id>
        <label>MECOM</label>
    </interactant>
    <organismsDiffer>false</organismsDiffer>
    <experiments>3</experiments>
</comment>
<comment type="interaction">
    <interactant intactId="EBI-720609">
        <id>O76024</id>
    </interactant>
    <interactant intactId="EBI-1189067">
        <id>P51608</id>
        <label>MECP2</label>
    </interactant>
    <organismsDiffer>false</organismsDiffer>
    <experiments>3</experiments>
</comment>
<comment type="interaction">
    <interactant intactId="EBI-720609">
        <id>O76024</id>
    </interactant>
    <interactant intactId="EBI-12954271">
        <id>Q15528-2</id>
        <label>MED22</label>
    </interactant>
    <organismsDiffer>false</organismsDiffer>
    <experiments>3</experiments>
</comment>
<comment type="interaction">
    <interactant intactId="EBI-720609">
        <id>O76024</id>
    </interactant>
    <interactant intactId="EBI-8487781">
        <id>Q8N6F8</id>
        <label>METTL27</label>
    </interactant>
    <organismsDiffer>false</organismsDiffer>
    <experiments>3</experiments>
</comment>
<comment type="interaction">
    <interactant intactId="EBI-720609">
        <id>O76024</id>
    </interactant>
    <interactant intactId="EBI-1104552">
        <id>Q9NYP9</id>
        <label>MIS18A</label>
    </interactant>
    <organismsDiffer>false</organismsDiffer>
    <experiments>3</experiments>
</comment>
<comment type="interaction">
    <interactant intactId="EBI-720609">
        <id>O76024</id>
    </interactant>
    <interactant intactId="EBI-8475277">
        <id>Q15049</id>
        <label>MLC1</label>
    </interactant>
    <organismsDiffer>false</organismsDiffer>
    <experiments>3</experiments>
</comment>
<comment type="interaction">
    <interactant intactId="EBI-720609">
        <id>O76024</id>
    </interactant>
    <interactant intactId="EBI-25835557">
        <id>A0A0A0MR05</id>
        <label>MLST8</label>
    </interactant>
    <organismsDiffer>false</organismsDiffer>
    <experiments>3</experiments>
</comment>
<comment type="interaction">
    <interactant intactId="EBI-720609">
        <id>O76024</id>
    </interactant>
    <interactant intactId="EBI-25840143">
        <id>Q86VF5-3</id>
        <label>MOGAT3</label>
    </interactant>
    <organismsDiffer>false</organismsDiffer>
    <experiments>3</experiments>
</comment>
<comment type="interaction">
    <interactant intactId="EBI-720609">
        <id>O76024</id>
    </interactant>
    <interactant intactId="EBI-2512452">
        <id>Q8N594</id>
        <label>MPND</label>
    </interactant>
    <organismsDiffer>false</organismsDiffer>
    <experiments>3</experiments>
</comment>
<comment type="interaction">
    <interactant intactId="EBI-720609">
        <id>O76024</id>
    </interactant>
    <interactant intactId="EBI-995714">
        <id>Q9Y605</id>
        <label>MRFAP1</label>
    </interactant>
    <organismsDiffer>false</organismsDiffer>
    <experiments>3</experiments>
</comment>
<comment type="interaction">
    <interactant intactId="EBI-720609">
        <id>O76024</id>
    </interactant>
    <interactant intactId="EBI-748896">
        <id>Q96HT8</id>
        <label>MRFAP1L1</label>
    </interactant>
    <organismsDiffer>false</organismsDiffer>
    <experiments>3</experiments>
</comment>
<comment type="interaction">
    <interactant intactId="EBI-720609">
        <id>O76024</id>
    </interactant>
    <interactant intactId="EBI-1046443">
        <id>Q9Y2R5</id>
        <label>MRPS17</label>
    </interactant>
    <organismsDiffer>false</organismsDiffer>
    <experiments>3</experiments>
</comment>
<comment type="interaction">
    <interactant intactId="EBI-720609">
        <id>O76024</id>
    </interactant>
    <interactant intactId="EBI-25860238">
        <id>O43196-4</id>
        <label>MSH5</label>
    </interactant>
    <organismsDiffer>false</organismsDiffer>
    <experiments>3</experiments>
</comment>
<comment type="interaction">
    <interactant intactId="EBI-720609">
        <id>O76024</id>
    </interactant>
    <interactant intactId="EBI-2560796">
        <id>Q8N5Y2</id>
        <label>MSL3</label>
    </interactant>
    <organismsDiffer>false</organismsDiffer>
    <experiments>3</experiments>
</comment>
<comment type="interaction">
    <interactant intactId="EBI-720609">
        <id>O76024</id>
    </interactant>
    <interactant intactId="EBI-10699187">
        <id>Q8IXL7-2</id>
        <label>MSRB3</label>
    </interactant>
    <organismsDiffer>false</organismsDiffer>
    <experiments>3</experiments>
</comment>
<comment type="interaction">
    <interactant intactId="EBI-720609">
        <id>O76024</id>
    </interactant>
    <interactant intactId="EBI-1390771">
        <id>Q96A32</id>
        <label>MYL11</label>
    </interactant>
    <organismsDiffer>false</organismsDiffer>
    <experiments>3</experiments>
</comment>
<comment type="interaction">
    <interactant intactId="EBI-720609">
        <id>O76024</id>
    </interactant>
    <interactant intactId="EBI-356910">
        <id>Q9H1R3</id>
        <label>MYLK2</label>
    </interactant>
    <organismsDiffer>false</organismsDiffer>
    <experiments>3</experiments>
</comment>
<comment type="interaction">
    <interactant intactId="EBI-720609">
        <id>O76024</id>
    </interactant>
    <interactant intactId="EBI-2863682">
        <id>Q9Y3Q0</id>
        <label>NAALAD2</label>
    </interactant>
    <organismsDiffer>false</organismsDiffer>
    <experiments>3</experiments>
</comment>
<comment type="interaction">
    <interactant intactId="EBI-720609">
        <id>O76024</id>
    </interactant>
    <interactant intactId="EBI-1056979">
        <id>Q969V3</id>
        <label>NCLN</label>
    </interactant>
    <organismsDiffer>false</organismsDiffer>
    <experiments>3</experiments>
</comment>
<comment type="interaction">
    <interactant intactId="EBI-720609">
        <id>O76024</id>
    </interactant>
    <interactant intactId="EBI-718177">
        <id>Q99608</id>
        <label>NDN</label>
    </interactant>
    <organismsDiffer>false</organismsDiffer>
    <experiments>3</experiments>
</comment>
<comment type="interaction">
    <interactant intactId="EBI-720609">
        <id>O76024</id>
    </interactant>
    <interactant intactId="EBI-2606839">
        <id>Q9P032</id>
        <label>NDUFAF4</label>
    </interactant>
    <organismsDiffer>false</organismsDiffer>
    <experiments>3</experiments>
</comment>
<comment type="interaction">
    <interactant intactId="EBI-720609">
        <id>O76024</id>
    </interactant>
    <interactant intactId="EBI-25876328">
        <id>P28331-5</id>
        <label>NDUFS1</label>
    </interactant>
    <organismsDiffer>false</organismsDiffer>
    <experiments>3</experiments>
</comment>
<comment type="interaction">
    <interactant intactId="EBI-720609">
        <id>O76024</id>
    </interactant>
    <interactant intactId="EBI-10178578">
        <id>I6L9F6</id>
        <label>NEFL</label>
    </interactant>
    <organismsDiffer>false</organismsDiffer>
    <experiments>3</experiments>
</comment>
<comment type="interaction">
    <interactant intactId="EBI-720609">
        <id>O76024</id>
    </interactant>
    <interactant intactId="EBI-718372">
        <id>Q8N5V2</id>
        <label>NGEF</label>
    </interactant>
    <organismsDiffer>false</organismsDiffer>
    <experiments>3</experiments>
</comment>
<comment type="interaction">
    <interactant intactId="EBI-720609">
        <id>O76024</id>
    </interactant>
    <interactant intactId="EBI-25860999">
        <id>Q96AM0</id>
        <label>NLRP1</label>
    </interactant>
    <organismsDiffer>false</organismsDiffer>
    <experiments>3</experiments>
</comment>
<comment type="interaction">
    <interactant intactId="EBI-720609">
        <id>O76024</id>
    </interactant>
    <interactant intactId="EBI-25860267">
        <id>Q6IAD4</id>
        <label>NOTCH1</label>
    </interactant>
    <organismsDiffer>false</organismsDiffer>
    <experiments>3</experiments>
</comment>
<comment type="interaction">
    <interactant intactId="EBI-720609">
        <id>O76024</id>
    </interactant>
    <interactant intactId="EBI-25840002">
        <id>O15130-2</id>
        <label>NPFF</label>
    </interactant>
    <organismsDiffer>false</organismsDiffer>
    <experiments>3</experiments>
</comment>
<comment type="interaction">
    <interactant intactId="EBI-720609">
        <id>O76024</id>
    </interactant>
    <interactant intactId="EBI-6144053">
        <id>Q14995</id>
        <label>NR1D2</label>
    </interactant>
    <organismsDiffer>false</organismsDiffer>
    <experiments>3</experiments>
</comment>
<comment type="interaction">
    <interactant intactId="EBI-720609">
        <id>O76024</id>
    </interactant>
    <interactant intactId="EBI-25842707">
        <id>Q6X4W1-6</id>
        <label>NSMF</label>
    </interactant>
    <organismsDiffer>false</organismsDiffer>
    <experiments>3</experiments>
</comment>
<comment type="interaction">
    <interactant intactId="EBI-720609">
        <id>O76024</id>
    </interactant>
    <interactant intactId="EBI-25834643">
        <id>P36639-4</id>
        <label>NUDT1</label>
    </interactant>
    <organismsDiffer>false</organismsDiffer>
    <experiments>3</experiments>
</comment>
<comment type="interaction">
    <interactant intactId="EBI-720609">
        <id>O76024</id>
    </interactant>
    <interactant intactId="EBI-4280066">
        <id>Q9NZJ9</id>
        <label>NUDT4</label>
    </interactant>
    <organismsDiffer>false</organismsDiffer>
    <experiments>3</experiments>
</comment>
<comment type="interaction">
    <interactant intactId="EBI-720609">
        <id>O76024</id>
    </interactant>
    <interactant intactId="EBI-1210753">
        <id>Q7Z417</id>
        <label>NUFIP2</label>
    </interactant>
    <organismsDiffer>false</organismsDiffer>
    <experiments>3</experiments>
</comment>
<comment type="interaction">
    <interactant intactId="EBI-720609">
        <id>O76024</id>
    </interactant>
    <interactant intactId="EBI-18577082">
        <id>O15381-5</id>
        <label>NVL</label>
    </interactant>
    <organismsDiffer>false</organismsDiffer>
    <experiments>3</experiments>
</comment>
<comment type="interaction">
    <interactant intactId="EBI-720609">
        <id>O76024</id>
    </interactant>
    <interactant intactId="EBI-9090919">
        <id>Q5BJF6-2</id>
        <label>ODF2</label>
    </interactant>
    <organismsDiffer>false</organismsDiffer>
    <experiments>3</experiments>
</comment>
<comment type="interaction">
    <interactant intactId="EBI-720609">
        <id>O76024</id>
    </interactant>
    <interactant intactId="EBI-536879">
        <id>O43482</id>
        <label>OIP5</label>
    </interactant>
    <organismsDiffer>false</organismsDiffer>
    <experiments>3</experiments>
</comment>
<comment type="interaction">
    <interactant intactId="EBI-720609">
        <id>O76024</id>
    </interactant>
    <interactant intactId="EBI-9091423">
        <id>Q96CV9-2</id>
        <label>OPTN</label>
    </interactant>
    <organismsDiffer>false</organismsDiffer>
    <experiments>3</experiments>
</comment>
<comment type="interaction">
    <interactant intactId="EBI-720609">
        <id>O76024</id>
    </interactant>
    <interactant intactId="EBI-1058491">
        <id>Q96FW1</id>
        <label>OTUB1</label>
    </interactant>
    <organismsDiffer>false</organismsDiffer>
    <experiments>3</experiments>
</comment>
<comment type="interaction">
    <interactant intactId="EBI-720609">
        <id>O76024</id>
    </interactant>
    <interactant intactId="EBI-10300896">
        <id>Q9BWI9</id>
        <label>OTUB2</label>
    </interactant>
    <organismsDiffer>false</organismsDiffer>
    <experiments>3</experiments>
</comment>
<comment type="interaction">
    <interactant intactId="EBI-720609">
        <id>O76024</id>
    </interactant>
    <interactant intactId="EBI-25830200">
        <id>Q6GQQ9-2</id>
        <label>OTUD7B</label>
    </interactant>
    <organismsDiffer>false</organismsDiffer>
    <experiments>3</experiments>
</comment>
<comment type="interaction">
    <interactant intactId="EBI-720609">
        <id>O76024</id>
    </interactant>
    <interactant intactId="EBI-10235794">
        <id>Q15077</id>
        <label>P2RY6</label>
    </interactant>
    <organismsDiffer>false</organismsDiffer>
    <experiments>3</experiments>
</comment>
<comment type="interaction">
    <interactant intactId="EBI-720609">
        <id>O76024</id>
    </interactant>
    <interactant intactId="EBI-1055272">
        <id>Q9H361</id>
        <label>PABPC3</label>
    </interactant>
    <organismsDiffer>false</organismsDiffer>
    <experiments>3</experiments>
</comment>
<comment type="interaction">
    <interactant intactId="EBI-720609">
        <id>O76024</id>
    </interactant>
    <interactant intactId="EBI-741896">
        <id>Q9P286</id>
        <label>PAK5</label>
    </interactant>
    <organismsDiffer>false</organismsDiffer>
    <experiments>3</experiments>
</comment>
<comment type="interaction">
    <interactant intactId="EBI-720609">
        <id>O76024</id>
    </interactant>
    <interactant intactId="EBI-16399860">
        <id>O75781-2</id>
        <label>PALM</label>
    </interactant>
    <organismsDiffer>false</organismsDiffer>
    <experiments>3</experiments>
</comment>
<comment type="interaction">
    <interactant intactId="EBI-720609">
        <id>O76024</id>
    </interactant>
    <interactant intactId="EBI-2811699">
        <id>Q9NP74</id>
        <label>PALMD</label>
    </interactant>
    <organismsDiffer>false</organismsDiffer>
    <experiments>3</experiments>
</comment>
<comment type="interaction">
    <interactant intactId="EBI-720609">
        <id>O76024</id>
    </interactant>
    <interactant intactId="EBI-2513978">
        <id>Q8N3R9</id>
        <label>PALS1</label>
    </interactant>
    <organismsDiffer>false</organismsDiffer>
    <experiments>3</experiments>
</comment>
<comment type="interaction">
    <interactant intactId="EBI-720609">
        <id>O76024</id>
    </interactant>
    <interactant intactId="EBI-11022007">
        <id>Q9HBE1-4</id>
        <label>PATZ1</label>
    </interactant>
    <organismsDiffer>false</organismsDiffer>
    <experiments>3</experiments>
</comment>
<comment type="interaction">
    <interactant intactId="EBI-720609">
        <id>O76024</id>
    </interactant>
    <interactant intactId="EBI-21584477">
        <id>Q9Y5G3-2</id>
        <label>PCDHGB1</label>
    </interactant>
    <organismsDiffer>false</organismsDiffer>
    <experiments>3</experiments>
</comment>
<comment type="interaction">
    <interactant intactId="EBI-720609">
        <id>O76024</id>
    </interactant>
    <interactant intactId="EBI-12386584">
        <id>P22061-2</id>
        <label>PCMT1</label>
    </interactant>
    <organismsDiffer>false</organismsDiffer>
    <experiments>3</experiments>
</comment>
<comment type="interaction">
    <interactant intactId="EBI-720609">
        <id>O76024</id>
    </interactant>
    <interactant intactId="EBI-1043580">
        <id>Q9BRX2</id>
        <label>PELO</label>
    </interactant>
    <organismsDiffer>false</organismsDiffer>
    <experiments>3</experiments>
</comment>
<comment type="interaction">
    <interactant intactId="EBI-720609">
        <id>O76024</id>
    </interactant>
    <interactant intactId="EBI-2557276">
        <id>O15534</id>
        <label>PER1</label>
    </interactant>
    <organismsDiffer>false</organismsDiffer>
    <experiments>3</experiments>
</comment>
<comment type="interaction">
    <interactant intactId="EBI-720609">
        <id>O76024</id>
    </interactant>
    <interactant intactId="EBI-17183069">
        <id>Q96FX8</id>
        <label>PERP</label>
    </interactant>
    <organismsDiffer>false</organismsDiffer>
    <experiments>3</experiments>
</comment>
<comment type="interaction">
    <interactant intactId="EBI-720609">
        <id>O76024</id>
    </interactant>
    <interactant intactId="EBI-12339509">
        <id>Q96LB9</id>
        <label>PGLYRP3</label>
    </interactant>
    <organismsDiffer>false</organismsDiffer>
    <experiments>3</experiments>
</comment>
<comment type="interaction">
    <interactant intactId="EBI-720609">
        <id>O76024</id>
    </interactant>
    <interactant intactId="EBI-2555365">
        <id>Q7RTV0</id>
        <label>PHF5A</label>
    </interactant>
    <organismsDiffer>false</organismsDiffer>
    <experiments>3</experiments>
</comment>
<comment type="interaction">
    <interactant intactId="EBI-720609">
        <id>O76024</id>
    </interactant>
    <interactant intactId="EBI-14084211">
        <id>A2BDE7</id>
        <label>PHLDA1</label>
    </interactant>
    <organismsDiffer>false</organismsDiffer>
    <experiments>3</experiments>
</comment>
<comment type="interaction">
    <interactant intactId="EBI-720609">
        <id>O76024</id>
    </interactant>
    <interactant intactId="EBI-629434">
        <id>O75925</id>
        <label>PIAS1</label>
    </interactant>
    <organismsDiffer>false</organismsDiffer>
    <experiments>3</experiments>
</comment>
<comment type="interaction">
    <interactant intactId="EBI-720609">
        <id>O76024</id>
    </interactant>
    <interactant intactId="EBI-9090282">
        <id>P27986-2</id>
        <label>PIK3R1</label>
    </interactant>
    <organismsDiffer>false</organismsDiffer>
    <experiments>3</experiments>
</comment>
<comment type="interaction">
    <interactant intactId="EBI-720609">
        <id>O76024</id>
    </interactant>
    <interactant intactId="EBI-3916751">
        <id>Q9BZM1</id>
        <label>PLA2G12A</label>
    </interactant>
    <organismsDiffer>false</organismsDiffer>
    <experiments>3</experiments>
</comment>
<comment type="interaction">
    <interactant intactId="EBI-720609">
        <id>O76024</id>
    </interactant>
    <interactant intactId="EBI-12832742">
        <id>Q9UF11-2</id>
        <label>PLEKHB1</label>
    </interactant>
    <organismsDiffer>false</organismsDiffer>
    <experiments>3</experiments>
</comment>
<comment type="interaction">
    <interactant intactId="EBI-720609">
        <id>O76024</id>
    </interactant>
    <interactant intactId="EBI-21503705">
        <id>Q58EX7-2</id>
        <label>PLEKHG4</label>
    </interactant>
    <organismsDiffer>false</organismsDiffer>
    <experiments>3</experiments>
</comment>
<comment type="interaction">
    <interactant intactId="EBI-720609">
        <id>O76024</id>
    </interactant>
    <interactant intactId="EBI-12891828">
        <id>Q6ZR37</id>
        <label>PLEKHG7</label>
    </interactant>
    <organismsDiffer>false</organismsDiffer>
    <experiments>3</experiments>
</comment>
<comment type="interaction">
    <interactant intactId="EBI-720609">
        <id>O76024</id>
    </interactant>
    <interactant intactId="EBI-2115275">
        <id>Q99541</id>
        <label>PLIN2</label>
    </interactant>
    <organismsDiffer>false</organismsDiffer>
    <experiments>3</experiments>
</comment>
<comment type="interaction">
    <interactant intactId="EBI-720609">
        <id>O76024</id>
    </interactant>
    <interactant intactId="EBI-18063495">
        <id>Q8TBJ4</id>
        <label>PLPPR1</label>
    </interactant>
    <organismsDiffer>false</organismsDiffer>
    <experiments>3</experiments>
</comment>
<comment type="interaction">
    <interactant intactId="EBI-720609">
        <id>O76024</id>
    </interactant>
    <interactant intactId="EBI-713836">
        <id>P06746</id>
        <label>POLB</label>
    </interactant>
    <organismsDiffer>false</organismsDiffer>
    <experiments>3</experiments>
</comment>
<comment type="interaction">
    <interactant intactId="EBI-720609">
        <id>O76024</id>
    </interactant>
    <interactant intactId="EBI-710067">
        <id>Q9H1D9</id>
        <label>POLR3F</label>
    </interactant>
    <organismsDiffer>false</organismsDiffer>
    <experiments>3</experiments>
</comment>
<comment type="interaction">
    <interactant intactId="EBI-720609">
        <id>O76024</id>
    </interactant>
    <interactant intactId="EBI-10196507">
        <id>P09565</id>
        <label>PP9974</label>
    </interactant>
    <organismsDiffer>false</organismsDiffer>
    <experiments>3</experiments>
</comment>
<comment type="interaction">
    <interactant intactId="EBI-720609">
        <id>O76024</id>
    </interactant>
    <interactant intactId="EBI-9089276">
        <id>Q8NI37</id>
        <label>PPTC7</label>
    </interactant>
    <organismsDiffer>false</organismsDiffer>
    <experiments>3</experiments>
</comment>
<comment type="interaction">
    <interactant intactId="EBI-720609">
        <id>O76024</id>
    </interactant>
    <interactant intactId="EBI-1383852">
        <id>P54646</id>
        <label>PRKAA2</label>
    </interactant>
    <organismsDiffer>false</organismsDiffer>
    <experiments>3</experiments>
</comment>
<comment type="interaction">
    <interactant intactId="EBI-720609">
        <id>O76024</id>
    </interactant>
    <interactant intactId="EBI-749195">
        <id>P60891</id>
        <label>PRPS1</label>
    </interactant>
    <organismsDiffer>false</organismsDiffer>
    <experiments>3</experiments>
</comment>
<comment type="interaction">
    <interactant intactId="EBI-720609">
        <id>O76024</id>
    </interactant>
    <interactant intactId="EBI-4290895">
        <id>P11908</id>
        <label>PRPS2</label>
    </interactant>
    <organismsDiffer>false</organismsDiffer>
    <experiments>3</experiments>
</comment>
<comment type="interaction">
    <interactant intactId="EBI-720609">
        <id>O76024</id>
    </interactant>
    <interactant intactId="EBI-743880">
        <id>Q8WUY3</id>
        <label>PRUNE2</label>
    </interactant>
    <organismsDiffer>false</organismsDiffer>
    <experiments>3</experiments>
</comment>
<comment type="interaction">
    <interactant intactId="EBI-720609">
        <id>O76024</id>
    </interactant>
    <interactant intactId="EBI-348394">
        <id>P25788-2</id>
        <label>PSMA3</label>
    </interactant>
    <organismsDiffer>false</organismsDiffer>
    <experiments>3</experiments>
</comment>
<comment type="interaction">
    <interactant intactId="EBI-720609">
        <id>O76024</id>
    </interactant>
    <interactant intactId="EBI-372273">
        <id>P20618</id>
        <label>PSMB1</label>
    </interactant>
    <organismsDiffer>false</organismsDiffer>
    <experiments>3</experiments>
</comment>
<comment type="interaction">
    <interactant intactId="EBI-720609">
        <id>O76024</id>
    </interactant>
    <interactant intactId="EBI-372312">
        <id>P28062-2</id>
        <label>PSMB8</label>
    </interactant>
    <organismsDiffer>false</organismsDiffer>
    <experiments>3</experiments>
</comment>
<comment type="interaction">
    <interactant intactId="EBI-720609">
        <id>O76024</id>
    </interactant>
    <interactant intactId="EBI-357669">
        <id>P62333</id>
        <label>PSMC6</label>
    </interactant>
    <organismsDiffer>false</organismsDiffer>
    <experiments>3</experiments>
</comment>
<comment type="interaction">
    <interactant intactId="EBI-720609">
        <id>O76024</id>
    </interactant>
    <interactant intactId="EBI-752143">
        <id>Q16401</id>
        <label>PSMD5</label>
    </interactant>
    <organismsDiffer>false</organismsDiffer>
    <experiments>3</experiments>
</comment>
<comment type="interaction">
    <interactant intactId="EBI-720609">
        <id>O76024</id>
    </interactant>
    <interactant intactId="EBI-1056327">
        <id>Q8TBK9</id>
        <label>PTMA</label>
    </interactant>
    <organismsDiffer>false</organismsDiffer>
    <experiments>3</experiments>
</comment>
<comment type="interaction">
    <interactant intactId="EBI-720609">
        <id>O76024</id>
    </interactant>
    <interactant intactId="EBI-948453">
        <id>Q14671</id>
        <label>PUM1</label>
    </interactant>
    <organismsDiffer>false</organismsDiffer>
    <experiments>3</experiments>
</comment>
<comment type="interaction">
    <interactant intactId="EBI-720609">
        <id>O76024</id>
    </interactant>
    <interactant intactId="EBI-25841978">
        <id>Q7Z7K5</id>
        <label>PXN</label>
    </interactant>
    <organismsDiffer>false</organismsDiffer>
    <experiments>3</experiments>
</comment>
<comment type="interaction">
    <interactant intactId="EBI-720609">
        <id>O76024</id>
    </interactant>
    <interactant intactId="EBI-347462">
        <id>P47897</id>
        <label>QARS1</label>
    </interactant>
    <organismsDiffer>false</organismsDiffer>
    <experiments>3</experiments>
</comment>
<comment type="interaction">
    <interactant intactId="EBI-720609">
        <id>O76024</id>
    </interactant>
    <interactant intactId="EBI-722234">
        <id>Q15907</id>
        <label>RAB11B</label>
    </interactant>
    <organismsDiffer>false</organismsDiffer>
    <experiments>3</experiments>
</comment>
<comment type="interaction">
    <interactant intactId="EBI-720609">
        <id>O76024</id>
    </interactant>
    <interactant intactId="EBI-746228">
        <id>Q9Y5P3</id>
        <label>RAI2</label>
    </interactant>
    <organismsDiffer>false</organismsDiffer>
    <experiments>3</experiments>
</comment>
<comment type="interaction">
    <interactant intactId="EBI-720609">
        <id>O76024</id>
    </interactant>
    <interactant intactId="EBI-11743772">
        <id>Q7Z6E9-3</id>
        <label>RBBP6</label>
    </interactant>
    <organismsDiffer>false</organismsDiffer>
    <experiments>3</experiments>
</comment>
<comment type="interaction">
    <interactant intactId="EBI-720609">
        <id>O76024</id>
    </interactant>
    <interactant intactId="EBI-954272">
        <id>Q96PK6</id>
        <label>RBM14</label>
    </interactant>
    <organismsDiffer>false</organismsDiffer>
    <experiments>3</experiments>
</comment>
<comment type="interaction">
    <interactant intactId="EBI-720609">
        <id>O76024</id>
    </interactant>
    <interactant intactId="EBI-10269922">
        <id>Q8NDT2-2</id>
        <label>RBM15B</label>
    </interactant>
    <organismsDiffer>false</organismsDiffer>
    <experiments>3</experiments>
</comment>
<comment type="interaction">
    <interactant intactId="EBI-720609">
        <id>O76024</id>
    </interactant>
    <interactant intactId="EBI-740272">
        <id>Q96I25</id>
        <label>RBM17</label>
    </interactant>
    <organismsDiffer>false</organismsDiffer>
    <experiments>3</experiments>
</comment>
<comment type="interaction">
    <interactant intactId="EBI-720609">
        <id>O76024</id>
    </interactant>
    <interactant intactId="EBI-1504830">
        <id>Q9P2K3-2</id>
        <label>RCOR3</label>
    </interactant>
    <organismsDiffer>false</organismsDiffer>
    <experiments>3</experiments>
</comment>
<comment type="interaction">
    <interactant intactId="EBI-720609">
        <id>O76024</id>
    </interactant>
    <interactant intactId="EBI-17589229">
        <id>Q6NTF9-3</id>
        <label>RHBDD2</label>
    </interactant>
    <organismsDiffer>false</organismsDiffer>
    <experiments>3</experiments>
</comment>
<comment type="interaction">
    <interactant intactId="EBI-720609">
        <id>O76024</id>
    </interactant>
    <interactant intactId="EBI-746325">
        <id>Q8TCX5</id>
        <label>RHPN1</label>
    </interactant>
    <organismsDiffer>false</organismsDiffer>
    <experiments>3</experiments>
</comment>
<comment type="interaction">
    <interactant intactId="EBI-720609">
        <id>O76024</id>
    </interactant>
    <interactant intactId="EBI-2797992">
        <id>Q9H871</id>
        <label>RMND5A</label>
    </interactant>
    <organismsDiffer>false</organismsDiffer>
    <experiments>3</experiments>
</comment>
<comment type="interaction">
    <interactant intactId="EBI-720609">
        <id>O76024</id>
    </interactant>
    <interactant intactId="EBI-714023">
        <id>Q8N5U6</id>
        <label>RNF10</label>
    </interactant>
    <organismsDiffer>false</organismsDiffer>
    <experiments>3</experiments>
</comment>
<comment type="interaction">
    <interactant intactId="EBI-720609">
        <id>O76024</id>
    </interactant>
    <interactant intactId="EBI-11750630">
        <id>Q9NTX7-2</id>
        <label>RNF146</label>
    </interactant>
    <organismsDiffer>false</organismsDiffer>
    <experiments>3</experiments>
</comment>
<comment type="interaction">
    <interactant intactId="EBI-720609">
        <id>O76024</id>
    </interactant>
    <interactant intactId="EBI-914207">
        <id>Q8IYW5</id>
        <label>RNF168</label>
    </interactant>
    <organismsDiffer>false</organismsDiffer>
    <experiments>3</experiments>
</comment>
<comment type="interaction">
    <interactant intactId="EBI-720609">
        <id>O76024</id>
    </interactant>
    <interactant intactId="EBI-743938">
        <id>Q96D59</id>
        <label>RNF183</label>
    </interactant>
    <organismsDiffer>false</organismsDiffer>
    <experiments>3</experiments>
</comment>
<comment type="interaction">
    <interactant intactId="EBI-720609">
        <id>O76024</id>
    </interactant>
    <interactant intactId="EBI-751555">
        <id>Q9H0X6</id>
        <label>RNF208</label>
    </interactant>
    <organismsDiffer>false</organismsDiffer>
    <experiments>3</experiments>
</comment>
<comment type="interaction">
    <interactant intactId="EBI-720609">
        <id>O76024</id>
    </interactant>
    <interactant intactId="EBI-25866807">
        <id>Q9H0F5-2</id>
        <label>RNF38</label>
    </interactant>
    <organismsDiffer>false</organismsDiffer>
    <experiments>3</experiments>
</comment>
<comment type="interaction">
    <interactant intactId="EBI-720609">
        <id>O76024</id>
    </interactant>
    <interactant intactId="EBI-1237106">
        <id>P13489</id>
        <label>RNH1</label>
    </interactant>
    <organismsDiffer>false</organismsDiffer>
    <experiments>3</experiments>
</comment>
<comment type="interaction">
    <interactant intactId="EBI-720609">
        <id>O76024</id>
    </interactant>
    <interactant intactId="EBI-1056348">
        <id>P39023</id>
        <label>RPL3</label>
    </interactant>
    <organismsDiffer>false</organismsDiffer>
    <experiments>3</experiments>
</comment>
<comment type="interaction">
    <interactant intactId="EBI-720609">
        <id>O76024</id>
    </interactant>
    <interactant intactId="EBI-347895">
        <id>P62244</id>
        <label>RPS15A</label>
    </interactant>
    <organismsDiffer>false</organismsDiffer>
    <experiments>3</experiments>
</comment>
<comment type="interaction">
    <interactant intactId="EBI-720609">
        <id>O76024</id>
    </interactant>
    <interactant intactId="EBI-357375">
        <id>P62979</id>
        <label>RPS27A</label>
    </interactant>
    <organismsDiffer>false</organismsDiffer>
    <experiments>3</experiments>
</comment>
<comment type="interaction">
    <interactant intactId="EBI-720609">
        <id>O76024</id>
    </interactant>
    <interactant intactId="EBI-354112">
        <id>P08865</id>
        <label>RPSA</label>
    </interactant>
    <organismsDiffer>false</organismsDiffer>
    <experiments>3</experiments>
</comment>
<comment type="interaction">
    <interactant intactId="EBI-720609">
        <id>O76024</id>
    </interactant>
    <interactant intactId="EBI-10248967">
        <id>Q66K80</id>
        <label>RUSC1-AS1</label>
    </interactant>
    <organismsDiffer>false</organismsDiffer>
    <experiments>3</experiments>
</comment>
<comment type="interaction">
    <interactant intactId="EBI-720609">
        <id>O76024</id>
    </interactant>
    <interactant intactId="EBI-8636004">
        <id>Q96GQ5</id>
        <label>RUSF1</label>
    </interactant>
    <organismsDiffer>false</organismsDiffer>
    <experiments>3</experiments>
</comment>
<comment type="interaction">
    <interactant intactId="EBI-720609">
        <id>O76024</id>
    </interactant>
    <interactant intactId="EBI-3914763">
        <id>Q9Y2B1</id>
        <label>RXYLT1</label>
    </interactant>
    <organismsDiffer>false</organismsDiffer>
    <experiments>3</experiments>
</comment>
<comment type="interaction">
    <interactant intactId="EBI-720609">
        <id>O76024</id>
    </interactant>
    <interactant intactId="EBI-743700">
        <id>P25815</id>
        <label>S100P</label>
    </interactant>
    <organismsDiffer>false</organismsDiffer>
    <experiments>3</experiments>
</comment>
<comment type="interaction">
    <interactant intactId="EBI-720609">
        <id>O76024</id>
    </interactant>
    <interactant intactId="EBI-11528848">
        <id>Q8N6K7-2</id>
        <label>SAMD3</label>
    </interactant>
    <organismsDiffer>false</organismsDiffer>
    <experiments>3</experiments>
</comment>
<comment type="interaction">
    <interactant intactId="EBI-720609">
        <id>O76024</id>
    </interactant>
    <interactant intactId="EBI-12148649">
        <id>Q7Z3H4</id>
        <label>SAMD7</label>
    </interactant>
    <organismsDiffer>false</organismsDiffer>
    <experiments>3</experiments>
</comment>
<comment type="interaction">
    <interactant intactId="EBI-720609">
        <id>O76024</id>
    </interactant>
    <interactant intactId="EBI-347495">
        <id>P82979</id>
        <label>SARNP</label>
    </interactant>
    <organismsDiffer>false</organismsDiffer>
    <experiments>3</experiments>
</comment>
<comment type="interaction">
    <interactant intactId="EBI-720609">
        <id>O76024</id>
    </interactant>
    <interactant intactId="EBI-4403649">
        <id>Q969E2</id>
        <label>SCAMP4</label>
    </interactant>
    <organismsDiffer>false</organismsDiffer>
    <experiments>3</experiments>
</comment>
<comment type="interaction">
    <interactant intactId="EBI-720609">
        <id>O76024</id>
    </interactant>
    <interactant intactId="EBI-1172957">
        <id>P34741</id>
        <label>SDC2</label>
    </interactant>
    <organismsDiffer>false</organismsDiffer>
    <experiments>3</experiments>
</comment>
<comment type="interaction">
    <interactant intactId="EBI-720609">
        <id>O76024</id>
    </interactant>
    <interactant intactId="EBI-727004">
        <id>O00560</id>
        <label>SDCBP</label>
    </interactant>
    <organismsDiffer>false</organismsDiffer>
    <experiments>3</experiments>
</comment>
<comment type="interaction">
    <interactant intactId="EBI-720609">
        <id>O76024</id>
    </interactant>
    <interactant intactId="EBI-8007671">
        <id>P16581</id>
        <label>SELE</label>
    </interactant>
    <organismsDiffer>false</organismsDiffer>
    <experiments>3</experiments>
</comment>
<comment type="interaction">
    <interactant intactId="EBI-720609">
        <id>O76024</id>
    </interactant>
    <interactant intactId="EBI-10303490">
        <id>Q9C0C4</id>
        <label>SEMA4C</label>
    </interactant>
    <organismsDiffer>false</organismsDiffer>
    <experiments>3</experiments>
</comment>
<comment type="interaction">
    <interactant intactId="EBI-720609">
        <id>O76024</id>
    </interactant>
    <interactant intactId="EBI-9089805">
        <id>Q9NTN9-3</id>
        <label>SEMA4G</label>
    </interactant>
    <organismsDiffer>false</organismsDiffer>
    <experiments>3</experiments>
</comment>
<comment type="interaction">
    <interactant intactId="EBI-720609">
        <id>O76024</id>
    </interactant>
    <interactant intactId="EBI-2880236">
        <id>Q9H4L4</id>
        <label>SENP3</label>
    </interactant>
    <organismsDiffer>false</organismsDiffer>
    <experiments>3</experiments>
</comment>
<comment type="interaction">
    <interactant intactId="EBI-720609">
        <id>O76024</id>
    </interactant>
    <interactant intactId="EBI-745901">
        <id>Q14141</id>
        <label>SEPTIN6</label>
    </interactant>
    <organismsDiffer>false</organismsDiffer>
    <experiments>3</experiments>
</comment>
<comment type="interaction">
    <interactant intactId="EBI-720609">
        <id>O76024</id>
    </interactant>
    <interactant intactId="EBI-1045571">
        <id>Q13530</id>
        <label>SERINC3</label>
    </interactant>
    <organismsDiffer>false</organismsDiffer>
    <experiments>3</experiments>
</comment>
<comment type="interaction">
    <interactant intactId="EBI-720609">
        <id>O76024</id>
    </interactant>
    <interactant intactId="EBI-25899828">
        <id>O14796-2</id>
        <label>SH2D1B</label>
    </interactant>
    <organismsDiffer>false</organismsDiffer>
    <experiments>3</experiments>
</comment>
<comment type="interaction">
    <interactant intactId="EBI-720609">
        <id>O76024</id>
    </interactant>
    <interactant intactId="EBI-346595">
        <id>Q96B97</id>
        <label>SH3KBP1</label>
    </interactant>
    <organismsDiffer>false</organismsDiffer>
    <experiments>3</experiments>
</comment>
<comment type="interaction">
    <interactant intactId="EBI-720609">
        <id>O76024</id>
    </interactant>
    <interactant intactId="EBI-22000547">
        <id>Q9NUL5-3</id>
        <label>SHFL</label>
    </interactant>
    <organismsDiffer>false</organismsDiffer>
    <experiments>3</experiments>
</comment>
<comment type="interaction">
    <interactant intactId="EBI-720609">
        <id>O76024</id>
    </interactant>
    <interactant intactId="EBI-2560428">
        <id>Q8IYI0</id>
        <label>SHLD1</label>
    </interactant>
    <organismsDiffer>false</organismsDiffer>
    <experiments>3</experiments>
</comment>
<comment type="interaction">
    <interactant intactId="EBI-720609">
        <id>O76024</id>
    </interactant>
    <interactant intactId="EBI-9092164">
        <id>O60902-3</id>
        <label>SHOX2</label>
    </interactant>
    <organismsDiffer>false</organismsDiffer>
    <experiments>3</experiments>
</comment>
<comment type="interaction">
    <interactant intactId="EBI-720609">
        <id>O76024</id>
    </interactant>
    <interactant intactId="EBI-12182077">
        <id>Q8N1H7</id>
        <label>SIX6OS1</label>
    </interactant>
    <organismsDiffer>false</organismsDiffer>
    <experiments>3</experiments>
</comment>
<comment type="interaction">
    <interactant intactId="EBI-720609">
        <id>O76024</id>
    </interactant>
    <interactant intactId="EBI-2902468">
        <id>P12757</id>
        <label>SKIL</label>
    </interactant>
    <organismsDiffer>false</organismsDiffer>
    <experiments>3</experiments>
</comment>
<comment type="interaction">
    <interactant intactId="EBI-720609">
        <id>O76024</id>
    </interactant>
    <interactant intactId="EBI-17460043">
        <id>Q13183</id>
        <label>SLC13A2</label>
    </interactant>
    <organismsDiffer>false</organismsDiffer>
    <experiments>3</experiments>
</comment>
<comment type="interaction">
    <interactant intactId="EBI-720609">
        <id>O76024</id>
    </interactant>
    <interactant intactId="EBI-11041701">
        <id>O15403</id>
        <label>SLC16A6</label>
    </interactant>
    <organismsDiffer>false</organismsDiffer>
    <experiments>3</experiments>
</comment>
<comment type="interaction">
    <interactant intactId="EBI-720609">
        <id>O76024</id>
    </interactant>
    <interactant intactId="EBI-12832276">
        <id>P08195-4</id>
        <label>SLC3A2</label>
    </interactant>
    <organismsDiffer>false</organismsDiffer>
    <experiments>3</experiments>
</comment>
<comment type="interaction">
    <interactant intactId="EBI-720609">
        <id>O76024</id>
    </interactant>
    <interactant intactId="EBI-21657139">
        <id>Q86UG4-2</id>
        <label>SLCO6A1</label>
    </interactant>
    <organismsDiffer>false</organismsDiffer>
    <experiments>3</experiments>
</comment>
<comment type="interaction">
    <interactant intactId="EBI-720609">
        <id>O76024</id>
    </interactant>
    <interactant intactId="EBI-20855537">
        <id>O94933</id>
        <label>SLITRK3</label>
    </interactant>
    <organismsDiffer>false</organismsDiffer>
    <experiments>3</experiments>
</comment>
<comment type="interaction">
    <interactant intactId="EBI-720609">
        <id>O76024</id>
    </interactant>
    <interactant intactId="EBI-11100581">
        <id>P53814-5</id>
        <label>SMTN</label>
    </interactant>
    <organismsDiffer>false</organismsDiffer>
    <experiments>3</experiments>
</comment>
<comment type="interaction">
    <interactant intactId="EBI-720609">
        <id>O76024</id>
    </interactant>
    <interactant intactId="EBI-298027">
        <id>Q2TAY7</id>
        <label>SMU1</label>
    </interactant>
    <organismsDiffer>false</organismsDiffer>
    <experiments>3</experiments>
</comment>
<comment type="interaction">
    <interactant intactId="EBI-720609">
        <id>O76024</id>
    </interactant>
    <interactant intactId="EBI-9845742">
        <id>Q9HCE7-2</id>
        <label>SMURF1</label>
    </interactant>
    <organismsDiffer>false</organismsDiffer>
    <experiments>3</experiments>
</comment>
<comment type="interaction">
    <interactant intactId="EBI-720609">
        <id>O76024</id>
    </interactant>
    <interactant intactId="EBI-1760638">
        <id>Q92966</id>
        <label>SNAPC3</label>
    </interactant>
    <organismsDiffer>false</organismsDiffer>
    <experiments>3</experiments>
</comment>
<comment type="interaction">
    <interactant intactId="EBI-720609">
        <id>O76024</id>
    </interactant>
    <interactant intactId="EBI-11959123">
        <id>Q99932-2</id>
        <label>SPAG8</label>
    </interactant>
    <organismsDiffer>false</organismsDiffer>
    <experiments>3</experiments>
</comment>
<comment type="interaction">
    <interactant intactId="EBI-720609">
        <id>O76024</id>
    </interactant>
    <interactant intactId="EBI-8635958">
        <id>Q6RVD6</id>
        <label>SPATA8</label>
    </interactant>
    <organismsDiffer>false</organismsDiffer>
    <experiments>3</experiments>
</comment>
<comment type="interaction">
    <interactant intactId="EBI-720609">
        <id>O76024</id>
    </interactant>
    <interactant intactId="EBI-10200479">
        <id>P20155</id>
        <label>SPINK2</label>
    </interactant>
    <organismsDiffer>false</organismsDiffer>
    <experiments>3</experiments>
</comment>
<comment type="interaction">
    <interactant intactId="EBI-720609">
        <id>O76024</id>
    </interactant>
    <interactant intactId="EBI-750784">
        <id>Q8TCT8</id>
        <label>SPPL2A</label>
    </interactant>
    <organismsDiffer>false</organismsDiffer>
    <experiments>3</experiments>
</comment>
<comment type="interaction">
    <interactant intactId="EBI-720609">
        <id>O76024</id>
    </interactant>
    <interactant intactId="EBI-7082156">
        <id>Q7Z698</id>
        <label>SPRED2</label>
    </interactant>
    <organismsDiffer>false</organismsDiffer>
    <experiments>3</experiments>
</comment>
<comment type="interaction">
    <interactant intactId="EBI-720609">
        <id>O76024</id>
    </interactant>
    <interactant intactId="EBI-354861">
        <id>Q9C004</id>
        <label>SPRY4</label>
    </interactant>
    <organismsDiffer>false</organismsDiffer>
    <experiments>3</experiments>
</comment>
<comment type="interaction">
    <interactant intactId="EBI-720609">
        <id>O76024</id>
    </interactant>
    <interactant intactId="EBI-17858294">
        <id>Q8NEQ6</id>
        <label>SRARP</label>
    </interactant>
    <organismsDiffer>false</organismsDiffer>
    <experiments>3</experiments>
</comment>
<comment type="interaction">
    <interactant intactId="EBI-720609">
        <id>O76024</id>
    </interactant>
    <interactant intactId="EBI-18616594">
        <id>Q8IXS7</id>
        <label>SRGAP3</label>
    </interactant>
    <organismsDiffer>false</organismsDiffer>
    <experiments>3</experiments>
</comment>
<comment type="interaction">
    <interactant intactId="EBI-720609">
        <id>O76024</id>
    </interactant>
    <interactant intactId="EBI-373258">
        <id>O75886</id>
        <label>STAM2</label>
    </interactant>
    <organismsDiffer>false</organismsDiffer>
    <experiments>3</experiments>
</comment>
<comment type="interaction">
    <interactant intactId="EBI-720609">
        <id>O76024</id>
    </interactant>
    <interactant intactId="EBI-1044428">
        <id>Q9UJZ1</id>
        <label>STOML2</label>
    </interactant>
    <organismsDiffer>false</organismsDiffer>
    <experiments>3</experiments>
</comment>
<comment type="interaction">
    <interactant intactId="EBI-720609">
        <id>O76024</id>
    </interactant>
    <interactant intactId="EBI-22013242">
        <id>A1L378</id>
        <label>STRC</label>
    </interactant>
    <organismsDiffer>false</organismsDiffer>
    <experiments>3</experiments>
</comment>
<comment type="interaction">
    <interactant intactId="EBI-720609">
        <id>O76024</id>
    </interactant>
    <interactant intactId="EBI-719212">
        <id>P46977</id>
        <label>STT3A</label>
    </interactant>
    <organismsDiffer>false</organismsDiffer>
    <experiments>3</experiments>
</comment>
<comment type="interaction">
    <interactant intactId="EBI-720609">
        <id>O76024</id>
    </interactant>
    <interactant intactId="EBI-357085">
        <id>Q9UNE7</id>
        <label>STUB1</label>
    </interactant>
    <organismsDiffer>false</organismsDiffer>
    <experiments>3</experiments>
</comment>
<comment type="interaction">
    <interactant intactId="EBI-720609">
        <id>O76024</id>
    </interactant>
    <interactant intactId="EBI-10318905">
        <id>Q08AL9</id>
        <label>STXBP4</label>
    </interactant>
    <organismsDiffer>false</organismsDiffer>
    <experiments>3</experiments>
</comment>
<comment type="interaction">
    <interactant intactId="EBI-720609">
        <id>O76024</id>
    </interactant>
    <interactant intactId="EBI-723091">
        <id>Q8NBJ7</id>
        <label>SUMF2</label>
    </interactant>
    <organismsDiffer>false</organismsDiffer>
    <experiments>3</experiments>
</comment>
<comment type="interaction">
    <interactant intactId="EBI-720609">
        <id>O76024</id>
    </interactant>
    <interactant intactId="EBI-10283466">
        <id>A1L190</id>
        <label>SYCE3</label>
    </interactant>
    <organismsDiffer>false</organismsDiffer>
    <experiments>3</experiments>
</comment>
<comment type="interaction">
    <interactant intactId="EBI-720609">
        <id>O76024</id>
    </interactant>
    <interactant intactId="EBI-11285923">
        <id>Q9H7C4</id>
        <label>SYNC</label>
    </interactant>
    <organismsDiffer>false</organismsDiffer>
    <experiments>3</experiments>
</comment>
<comment type="interaction">
    <interactant intactId="EBI-720609">
        <id>O76024</id>
    </interactant>
    <interactant intactId="EBI-25861603">
        <id>Q17RD7-3</id>
        <label>SYT16</label>
    </interactant>
    <organismsDiffer>false</organismsDiffer>
    <experiments>3</experiments>
</comment>
<comment type="interaction">
    <interactant intactId="EBI-720609">
        <id>O76024</id>
    </interactant>
    <interactant intactId="EBI-17284568">
        <id>Q9BQG1</id>
        <label>SYT3</label>
    </interactant>
    <organismsDiffer>false</organismsDiffer>
    <experiments>3</experiments>
</comment>
<comment type="interaction">
    <interactant intactId="EBI-720609">
        <id>O76024</id>
    </interactant>
    <interactant intactId="EBI-12243980">
        <id>Q8TDW5-2</id>
        <label>SYTL5</label>
    </interactant>
    <organismsDiffer>false</organismsDiffer>
    <experiments>3</experiments>
</comment>
<comment type="interaction">
    <interactant intactId="EBI-720609">
        <id>O76024</id>
    </interactant>
    <interactant intactId="EBI-18173581">
        <id>Q86TJ2-3</id>
        <label>TADA2B</label>
    </interactant>
    <organismsDiffer>false</organismsDiffer>
    <experiments>3</experiments>
</comment>
<comment type="interaction">
    <interactant intactId="EBI-720609">
        <id>O76024</id>
    </interactant>
    <interactant intactId="EBI-21575846">
        <id>Q8WUA7-2</id>
        <label>TBC1D22A</label>
    </interactant>
    <organismsDiffer>false</organismsDiffer>
    <experiments>3</experiments>
</comment>
<comment type="interaction">
    <interactant intactId="EBI-720609">
        <id>O76024</id>
    </interactant>
    <interactant intactId="EBI-716225">
        <id>P62380</id>
        <label>TBPL1</label>
    </interactant>
    <organismsDiffer>false</organismsDiffer>
    <experiments>3</experiments>
</comment>
<comment type="interaction">
    <interactant intactId="EBI-720609">
        <id>O76024</id>
    </interactant>
    <interactant intactId="EBI-2511291">
        <id>Q96EI5</id>
        <label>TCEAL4</label>
    </interactant>
    <organismsDiffer>false</organismsDiffer>
    <experiments>3</experiments>
</comment>
<comment type="interaction">
    <interactant intactId="EBI-720609">
        <id>O76024</id>
    </interactant>
    <interactant intactId="EBI-2116184">
        <id>Q8IYN2</id>
        <label>TCEAL8</label>
    </interactant>
    <organismsDiffer>false</organismsDiffer>
    <experiments>3</experiments>
</comment>
<comment type="interaction">
    <interactant intactId="EBI-720609">
        <id>O76024</id>
    </interactant>
    <interactant intactId="EBI-745182">
        <id>Q9BQ70</id>
        <label>TCF25</label>
    </interactant>
    <organismsDiffer>false</organismsDiffer>
    <experiments>3</experiments>
</comment>
<comment type="interaction">
    <interactant intactId="EBI-720609">
        <id>O76024</id>
    </interactant>
    <interactant intactId="EBI-3923210">
        <id>Q8TDR4</id>
        <label>TCP10L</label>
    </interactant>
    <organismsDiffer>false</organismsDiffer>
    <experiments>3</experiments>
</comment>
<comment type="interaction">
    <interactant intactId="EBI-720609">
        <id>O76024</id>
    </interactant>
    <interactant intactId="EBI-348333">
        <id>Q13569</id>
        <label>TDG</label>
    </interactant>
    <organismsDiffer>false</organismsDiffer>
    <experiments>3</experiments>
</comment>
<comment type="interaction">
    <interactant intactId="EBI-720609">
        <id>O76024</id>
    </interactant>
    <interactant intactId="EBI-12151837">
        <id>P28347-2</id>
        <label>TEAD1</label>
    </interactant>
    <organismsDiffer>false</organismsDiffer>
    <experiments>3</experiments>
</comment>
<comment type="interaction">
    <interactant intactId="EBI-720609">
        <id>O76024</id>
    </interactant>
    <interactant intactId="EBI-752030">
        <id>Q96A09</id>
        <label>TENT5B</label>
    </interactant>
    <organismsDiffer>false</organismsDiffer>
    <experiments>3</experiments>
</comment>
<comment type="interaction">
    <interactant intactId="EBI-720609">
        <id>O76024</id>
    </interactant>
    <interactant intactId="EBI-710997">
        <id>P54274</id>
        <label>TERF1</label>
    </interactant>
    <organismsDiffer>false</organismsDiffer>
    <experiments>2</experiments>
</comment>
<comment type="interaction">
    <interactant intactId="EBI-720609">
        <id>O76024</id>
    </interactant>
    <interactant intactId="EBI-13323487">
        <id>Q8NA77</id>
        <label>TEX19</label>
    </interactant>
    <organismsDiffer>false</organismsDiffer>
    <experiments>3</experiments>
</comment>
<comment type="interaction">
    <interactant intactId="EBI-720609">
        <id>O76024</id>
    </interactant>
    <interactant intactId="EBI-25842075">
        <id>P21980-2</id>
        <label>TGM2</label>
    </interactant>
    <organismsDiffer>false</organismsDiffer>
    <experiments>3</experiments>
</comment>
<comment type="interaction">
    <interactant intactId="EBI-720609">
        <id>O76024</id>
    </interactant>
    <interactant intactId="EBI-15105991">
        <id>Q9BTF0</id>
        <label>THUMPD2</label>
    </interactant>
    <organismsDiffer>false</organismsDiffer>
    <experiments>3</experiments>
</comment>
<comment type="interaction">
    <interactant intactId="EBI-720609">
        <id>O76024</id>
    </interactant>
    <interactant intactId="EBI-2372529">
        <id>O60830</id>
        <label>TIMM17B</label>
    </interactant>
    <organismsDiffer>false</organismsDiffer>
    <experiments>3</experiments>
</comment>
<comment type="interaction">
    <interactant intactId="EBI-720609">
        <id>O76024</id>
    </interactant>
    <interactant intactId="EBI-1049822">
        <id>O60220</id>
        <label>TIMM8A</label>
    </interactant>
    <organismsDiffer>false</organismsDiffer>
    <experiments>3</experiments>
</comment>
<comment type="interaction">
    <interactant intactId="EBI-720609">
        <id>O76024</id>
    </interactant>
    <interactant intactId="EBI-16825459">
        <id>Q9BXR5</id>
        <label>TLR10</label>
    </interactant>
    <organismsDiffer>false</organismsDiffer>
    <experiments>3</experiments>
</comment>
<comment type="interaction">
    <interactant intactId="EBI-720609">
        <id>O76024</id>
    </interactant>
    <interactant intactId="EBI-25871541">
        <id>A0AVI4-2</id>
        <label>TMEM129</label>
    </interactant>
    <organismsDiffer>false</organismsDiffer>
    <experiments>3</experiments>
</comment>
<comment type="interaction">
    <interactant intactId="EBI-720609">
        <id>O76024</id>
    </interactant>
    <interactant intactId="EBI-25830583">
        <id>Q8N0U2</id>
        <label>TMEM61</label>
    </interactant>
    <organismsDiffer>false</organismsDiffer>
    <experiments>3</experiments>
</comment>
<comment type="interaction">
    <interactant intactId="EBI-720609">
        <id>O76024</id>
    </interactant>
    <interactant intactId="EBI-10242677">
        <id>Q53NU3</id>
        <label>tmp_locus_54</label>
    </interactant>
    <organismsDiffer>false</organismsDiffer>
    <experiments>3</experiments>
</comment>
<comment type="interaction">
    <interactant intactId="EBI-720609">
        <id>O76024</id>
    </interactant>
    <interactant intactId="EBI-9089156">
        <id>Q8IUR5-4</id>
        <label>TMTC1</label>
    </interactant>
    <organismsDiffer>false</organismsDiffer>
    <experiments>3</experiments>
</comment>
<comment type="interaction">
    <interactant intactId="EBI-720609">
        <id>O76024</id>
    </interactant>
    <interactant intactId="EBI-25831574">
        <id>Q71RG4-4</id>
        <label>TMUB2</label>
    </interactant>
    <organismsDiffer>false</organismsDiffer>
    <experiments>3</experiments>
</comment>
<comment type="interaction">
    <interactant intactId="EBI-720609">
        <id>O76024</id>
    </interactant>
    <interactant intactId="EBI-704146">
        <id>P19429</id>
        <label>TNNI3</label>
    </interactant>
    <organismsDiffer>false</organismsDiffer>
    <experiments>3</experiments>
</comment>
<comment type="interaction">
    <interactant intactId="EBI-720609">
        <id>O76024</id>
    </interactant>
    <interactant intactId="EBI-740098">
        <id>P36406</id>
        <label>TRIM23</label>
    </interactant>
    <organismsDiffer>false</organismsDiffer>
    <experiments>3</experiments>
</comment>
<comment type="interaction">
    <interactant intactId="EBI-720609">
        <id>O76024</id>
    </interactant>
    <interactant intactId="EBI-17716262">
        <id>Q9UPQ4-2</id>
        <label>TRIM35</label>
    </interactant>
    <organismsDiffer>false</organismsDiffer>
    <experiments>3</experiments>
</comment>
<comment type="interaction">
    <interactant intactId="EBI-720609">
        <id>O76024</id>
    </interactant>
    <interactant intactId="EBI-3197877">
        <id>Q9BVS5</id>
        <label>TRMT61B</label>
    </interactant>
    <organismsDiffer>false</organismsDiffer>
    <experiments>3</experiments>
</comment>
<comment type="interaction">
    <interactant intactId="EBI-720609">
        <id>O76024</id>
    </interactant>
    <interactant intactId="EBI-25861172">
        <id>Q96Q11-3</id>
        <label>TRNT1</label>
    </interactant>
    <organismsDiffer>false</organismsDiffer>
    <experiments>3</experiments>
</comment>
<comment type="interaction">
    <interactant intactId="EBI-720609">
        <id>O76024</id>
    </interactant>
    <interactant intactId="EBI-12806590">
        <id>Q86WV8</id>
        <label>TSC1</label>
    </interactant>
    <organismsDiffer>false</organismsDiffer>
    <experiments>3</experiments>
</comment>
<comment type="interaction">
    <interactant intactId="EBI-720609">
        <id>O76024</id>
    </interactant>
    <interactant intactId="EBI-739485">
        <id>Q9Y3Q8</id>
        <label>TSC22D4</label>
    </interactant>
    <organismsDiffer>false</organismsDiffer>
    <experiments>3</experiments>
</comment>
<comment type="interaction">
    <interactant intactId="EBI-720609">
        <id>O76024</id>
    </interactant>
    <interactant intactId="EBI-717229">
        <id>Q9Y5U2</id>
        <label>TSSC4</label>
    </interactant>
    <organismsDiffer>false</organismsDiffer>
    <experiments>3</experiments>
</comment>
<comment type="interaction">
    <interactant intactId="EBI-720609">
        <id>O76024</id>
    </interactant>
    <interactant intactId="EBI-742074">
        <id>Q99614</id>
        <label>TTC1</label>
    </interactant>
    <organismsDiffer>false</organismsDiffer>
    <experiments>3</experiments>
</comment>
<comment type="interaction">
    <interactant intactId="EBI-720609">
        <id>O76024</id>
    </interactant>
    <interactant intactId="EBI-9090990">
        <id>Q5W5X9-3</id>
        <label>TTC23</label>
    </interactant>
    <organismsDiffer>false</organismsDiffer>
    <experiments>3</experiments>
</comment>
<comment type="interaction">
    <interactant intactId="EBI-720609">
        <id>O76024</id>
    </interactant>
    <interactant intactId="EBI-356735">
        <id>Q9BUF5</id>
        <label>TUBB6</label>
    </interactant>
    <organismsDiffer>false</organismsDiffer>
    <experiments>3</experiments>
</comment>
<comment type="interaction">
    <interactant intactId="EBI-720609">
        <id>O76024</id>
    </interactant>
    <interactant intactId="EBI-10964469">
        <id>Q9UGJ1-2</id>
        <label>TUBGCP4</label>
    </interactant>
    <organismsDiffer>false</organismsDiffer>
    <experiments>3</experiments>
</comment>
<comment type="interaction">
    <interactant intactId="EBI-720609">
        <id>O76024</id>
    </interactant>
    <interactant intactId="EBI-11988865">
        <id>A5PKU2</id>
        <label>TUSC5</label>
    </interactant>
    <organismsDiffer>false</organismsDiffer>
    <experiments>3</experiments>
</comment>
<comment type="interaction">
    <interactant intactId="EBI-720609">
        <id>O76024</id>
    </interactant>
    <interactant intactId="EBI-9088812">
        <id>Q5VYS8-5</id>
        <label>TUT7</label>
    </interactant>
    <organismsDiffer>false</organismsDiffer>
    <experiments>3</experiments>
</comment>
<comment type="interaction">
    <interactant intactId="EBI-720609">
        <id>O76024</id>
    </interactant>
    <interactant intactId="EBI-749370">
        <id>Q9BSL1</id>
        <label>UBAC1</label>
    </interactant>
    <organismsDiffer>false</organismsDiffer>
    <experiments>3</experiments>
</comment>
<comment type="interaction">
    <interactant intactId="EBI-720609">
        <id>O76024</id>
    </interactant>
    <interactant intactId="EBI-25840976">
        <id>Q8NBM4-4</id>
        <label>UBAC2</label>
    </interactant>
    <organismsDiffer>false</organismsDiffer>
    <experiments>3</experiments>
</comment>
<comment type="interaction">
    <interactant intactId="EBI-720609">
        <id>O76024</id>
    </interactant>
    <interactant intactId="EBI-348496">
        <id>Q969T4</id>
        <label>UBE2E3</label>
    </interactant>
    <organismsDiffer>false</organismsDiffer>
    <experiments>3</experiments>
</comment>
<comment type="interaction">
    <interactant intactId="EBI-720609">
        <id>O76024</id>
    </interactant>
    <interactant intactId="EBI-2340110">
        <id>Q8N2K1</id>
        <label>UBE2J2</label>
    </interactant>
    <organismsDiffer>false</organismsDiffer>
    <experiments>3</experiments>
</comment>
<comment type="interaction">
    <interactant intactId="EBI-720609">
        <id>O76024</id>
    </interactant>
    <interactant intactId="EBI-473850">
        <id>P61086</id>
        <label>UBE2K</label>
    </interactant>
    <organismsDiffer>false</organismsDiffer>
    <experiments>3</experiments>
</comment>
<comment type="interaction">
    <interactant intactId="EBI-720609">
        <id>O76024</id>
    </interactant>
    <interactant intactId="EBI-11530712">
        <id>Q04323-2</id>
        <label>UBXN1</label>
    </interactant>
    <organismsDiffer>false</organismsDiffer>
    <experiments>3</experiments>
</comment>
<comment type="interaction">
    <interactant intactId="EBI-720609">
        <id>O76024</id>
    </interactant>
    <interactant intactId="EBI-10696113">
        <id>O75604-3</id>
        <label>USP2</label>
    </interactant>
    <organismsDiffer>false</organismsDiffer>
    <experiments>3</experiments>
</comment>
<comment type="interaction">
    <interactant intactId="EBI-720609">
        <id>O76024</id>
    </interactant>
    <interactant intactId="EBI-25876491">
        <id>Q96B65</id>
        <label>USP25</label>
    </interactant>
    <organismsDiffer>false</organismsDiffer>
    <experiments>3</experiments>
</comment>
<comment type="interaction">
    <interactant intactId="EBI-720609">
        <id>O76024</id>
    </interactant>
    <interactant intactId="EBI-22013216">
        <id>A2RRA6</id>
        <label>USP35</label>
    </interactant>
    <organismsDiffer>false</organismsDiffer>
    <experiments>3</experiments>
</comment>
<comment type="interaction">
    <interactant intactId="EBI-720609">
        <id>O76024</id>
    </interactant>
    <interactant intactId="EBI-354022">
        <id>P45880</id>
        <label>VDAC2</label>
    </interactant>
    <organismsDiffer>false</organismsDiffer>
    <experiments>3</experiments>
</comment>
<comment type="interaction">
    <interactant intactId="EBI-720609">
        <id>O76024</id>
    </interactant>
    <interactant intactId="EBI-2850578">
        <id>Q8NEZ2</id>
        <label>VPS37A</label>
    </interactant>
    <organismsDiffer>false</organismsDiffer>
    <experiments>3</experiments>
</comment>
<comment type="interaction">
    <interactant intactId="EBI-720609">
        <id>O76024</id>
    </interactant>
    <interactant intactId="EBI-6427899">
        <id>P58304</id>
        <label>VSX2</label>
    </interactant>
    <organismsDiffer>false</organismsDiffer>
    <experiments>3</experiments>
</comment>
<comment type="interaction">
    <interactant intactId="EBI-720609">
        <id>O76024</id>
    </interactant>
    <interactant intactId="EBI-1237307">
        <id>Q9BQA1</id>
        <label>WDR77</label>
    </interactant>
    <organismsDiffer>false</organismsDiffer>
    <experiments>3</experiments>
</comment>
<comment type="interaction">
    <interactant intactId="EBI-720609">
        <id>O76024</id>
    </interactant>
    <interactant intactId="EBI-7705033">
        <id>Q9BRX9</id>
        <label>WDR83</label>
    </interactant>
    <organismsDiffer>false</organismsDiffer>
    <experiments>3</experiments>
</comment>
<comment type="interaction">
    <interactant intactId="EBI-720609">
        <id>O76024</id>
    </interactant>
    <interactant intactId="EBI-25840023">
        <id>Q15007-2</id>
        <label>WTAP</label>
    </interactant>
    <organismsDiffer>false</organismsDiffer>
    <experiments>3</experiments>
</comment>
<comment type="interaction">
    <interactant intactId="EBI-720609">
        <id>O76024</id>
    </interactant>
    <interactant intactId="EBI-12040603">
        <id>Q9NZC7-5</id>
        <label>WWOX</label>
    </interactant>
    <organismsDiffer>false</organismsDiffer>
    <experiments>3</experiments>
</comment>
<comment type="interaction">
    <interactant intactId="EBI-720609">
        <id>O76024</id>
    </interactant>
    <interactant intactId="EBI-743923">
        <id>O00308</id>
        <label>WWP2</label>
    </interactant>
    <organismsDiffer>false</organismsDiffer>
    <experiments>6</experiments>
</comment>
<comment type="interaction">
    <interactant intactId="EBI-720609">
        <id>O76024</id>
    </interactant>
    <interactant intactId="EBI-353208">
        <id>P12956</id>
        <label>XRCC6</label>
    </interactant>
    <organismsDiffer>false</organismsDiffer>
    <experiments>3</experiments>
</comment>
<comment type="interaction">
    <interactant intactId="EBI-720609">
        <id>O76024</id>
    </interactant>
    <interactant intactId="EBI-2799703">
        <id>O95070</id>
        <label>YIF1A</label>
    </interactant>
    <organismsDiffer>false</organismsDiffer>
    <experiments>3</experiments>
</comment>
<comment type="interaction">
    <interactant intactId="EBI-720609">
        <id>O76024</id>
    </interactant>
    <interactant intactId="EBI-765538">
        <id>P25490</id>
        <label>YY1</label>
    </interactant>
    <organismsDiffer>false</organismsDiffer>
    <experiments>3</experiments>
</comment>
<comment type="interaction">
    <interactant intactId="EBI-720609">
        <id>O76024</id>
    </interactant>
    <interactant intactId="EBI-25842419">
        <id>O43167-2</id>
        <label>ZBTB24</label>
    </interactant>
    <organismsDiffer>false</organismsDiffer>
    <experiments>3</experiments>
</comment>
<comment type="interaction">
    <interactant intactId="EBI-720609">
        <id>O76024</id>
    </interactant>
    <interactant intactId="EBI-14104088">
        <id>Q53FD0-2</id>
        <label>ZC2HC1C</label>
    </interactant>
    <organismsDiffer>false</organismsDiffer>
    <experiments>3</experiments>
</comment>
<comment type="interaction">
    <interactant intactId="EBI-720609">
        <id>O76024</id>
    </interactant>
    <interactant intactId="EBI-11124401">
        <id>Q8TBF4</id>
        <label>ZCRB1</label>
    </interactant>
    <organismsDiffer>false</organismsDiffer>
    <experiments>3</experiments>
</comment>
<comment type="interaction">
    <interactant intactId="EBI-720609">
        <id>O76024</id>
    </interactant>
    <interactant intactId="EBI-524753">
        <id>Q8IUH5</id>
        <label>ZDHHC17</label>
    </interactant>
    <organismsDiffer>false</organismsDiffer>
    <experiments>3</experiments>
</comment>
<comment type="interaction">
    <interactant intactId="EBI-720609">
        <id>O76024</id>
    </interactant>
    <interactant intactId="EBI-25840130">
        <id>Q5W0Z9-4</id>
        <label>ZDHHC20</label>
    </interactant>
    <organismsDiffer>false</organismsDiffer>
    <experiments>3</experiments>
</comment>
<comment type="interaction">
    <interactant intactId="EBI-720609">
        <id>O76024</id>
    </interactant>
    <interactant intactId="EBI-711679">
        <id>Q9NTW7</id>
        <label>ZFP64</label>
    </interactant>
    <organismsDiffer>false</organismsDiffer>
    <experiments>3</experiments>
</comment>
<comment type="interaction">
    <interactant intactId="EBI-720609">
        <id>O76024</id>
    </interactant>
    <interactant intactId="EBI-2602314">
        <id>Q15776</id>
        <label>ZKSCAN8</label>
    </interactant>
    <organismsDiffer>false</organismsDiffer>
    <experiments>3</experiments>
</comment>
<comment type="interaction">
    <interactant intactId="EBI-720609">
        <id>O76024</id>
    </interactant>
    <interactant intactId="EBI-2555767">
        <id>Q15973</id>
        <label>ZNF124</label>
    </interactant>
    <organismsDiffer>false</organismsDiffer>
    <experiments>3</experiments>
</comment>
<comment type="interaction">
    <interactant intactId="EBI-720609">
        <id>O76024</id>
    </interactant>
    <interactant intactId="EBI-10746567">
        <id>P52744</id>
        <label>ZNF138</label>
    </interactant>
    <organismsDiffer>false</organismsDiffer>
    <experiments>3</experiments>
</comment>
<comment type="interaction">
    <interactant intactId="EBI-720609">
        <id>O76024</id>
    </interactant>
    <interactant intactId="EBI-12055755">
        <id>Q9UJW8-4</id>
        <label>ZNF180</label>
    </interactant>
    <organismsDiffer>false</organismsDiffer>
    <experiments>3</experiments>
</comment>
<comment type="interaction">
    <interactant intactId="EBI-720609">
        <id>O76024</id>
    </interactant>
    <interactant intactId="EBI-21856539">
        <id>Q9UK10</id>
        <label>ZNF225</label>
    </interactant>
    <organismsDiffer>false</organismsDiffer>
    <experiments>3</experiments>
</comment>
<comment type="interaction">
    <interactant intactId="EBI-720609">
        <id>O76024</id>
    </interactant>
    <interactant intactId="EBI-8787052">
        <id>Q16600</id>
        <label>ZNF239</label>
    </interactant>
    <organismsDiffer>false</organismsDiffer>
    <experiments>3</experiments>
</comment>
<comment type="interaction">
    <interactant intactId="EBI-720609">
        <id>O76024</id>
    </interactant>
    <interactant intactId="EBI-12988373">
        <id>Q9NR11-2</id>
        <label>ZNF302</label>
    </interactant>
    <organismsDiffer>false</organismsDiffer>
    <experiments>3</experiments>
</comment>
<comment type="interaction">
    <interactant intactId="EBI-720609">
        <id>O76024</id>
    </interactant>
    <interactant intactId="EBI-2813661">
        <id>Q8N895</id>
        <label>ZNF366</label>
    </interactant>
    <organismsDiffer>false</organismsDiffer>
    <experiments>3</experiments>
</comment>
<comment type="interaction">
    <interactant intactId="EBI-720609">
        <id>O76024</id>
    </interactant>
    <interactant intactId="EBI-8489702">
        <id>Q9C0F3</id>
        <label>ZNF436</label>
    </interactant>
    <organismsDiffer>false</organismsDiffer>
    <experiments>3</experiments>
</comment>
<comment type="interaction">
    <interactant intactId="EBI-720609">
        <id>O76024</id>
    </interactant>
    <interactant intactId="EBI-726439">
        <id>Q8IYI8</id>
        <label>ZNF440</label>
    </interactant>
    <organismsDiffer>false</organismsDiffer>
    <experiments>3</experiments>
</comment>
<comment type="interaction">
    <interactant intactId="EBI-720609">
        <id>O76024</id>
    </interactant>
    <interactant intactId="EBI-12010736">
        <id>Q8N0Y2-2</id>
        <label>ZNF444</label>
    </interactant>
    <organismsDiffer>false</organismsDiffer>
    <experiments>3</experiments>
</comment>
<comment type="interaction">
    <interactant intactId="EBI-720609">
        <id>O76024</id>
    </interactant>
    <interactant intactId="EBI-25831733">
        <id>Q96MN9-2</id>
        <label>ZNF488</label>
    </interactant>
    <organismsDiffer>false</organismsDiffer>
    <experiments>3</experiments>
</comment>
<comment type="interaction">
    <interactant intactId="EBI-720609">
        <id>O76024</id>
    </interactant>
    <interactant intactId="EBI-10486136">
        <id>Q6ZNH5</id>
        <label>ZNF497</label>
    </interactant>
    <organismsDiffer>false</organismsDiffer>
    <experiments>3</experiments>
</comment>
<comment type="interaction">
    <interactant intactId="EBI-720609">
        <id>O76024</id>
    </interactant>
    <interactant intactId="EBI-10283126">
        <id>Q96C55</id>
        <label>ZNF524</label>
    </interactant>
    <organismsDiffer>false</organismsDiffer>
    <experiments>3</experiments>
</comment>
<comment type="interaction">
    <interactant intactId="EBI-720609">
        <id>O76024</id>
    </interactant>
    <interactant intactId="EBI-8490788">
        <id>Q68EA5</id>
        <label>ZNF57</label>
    </interactant>
    <organismsDiffer>false</organismsDiffer>
    <experiments>3</experiments>
</comment>
<comment type="interaction">
    <interactant intactId="EBI-720609">
        <id>O76024</id>
    </interactant>
    <interactant intactId="EBI-10172590">
        <id>Q7Z3I7</id>
        <label>ZNF572</label>
    </interactant>
    <organismsDiffer>false</organismsDiffer>
    <experiments>3</experiments>
</comment>
<comment type="interaction">
    <interactant intactId="EBI-720609">
        <id>O76024</id>
    </interactant>
    <interactant intactId="EBI-12038525">
        <id>Q96I27-2</id>
        <label>ZNF625</label>
    </interactant>
    <organismsDiffer>false</organismsDiffer>
    <experiments>3</experiments>
</comment>
<comment type="interaction">
    <interactant intactId="EBI-720609">
        <id>O76024</id>
    </interactant>
    <interactant intactId="EBI-12939666">
        <id>Q96N77-2</id>
        <label>ZNF641</label>
    </interactant>
    <organismsDiffer>false</organismsDiffer>
    <experiments>3</experiments>
</comment>
<comment type="interaction">
    <interactant intactId="EBI-720609">
        <id>O76024</id>
    </interactant>
    <interactant intactId="EBI-745276">
        <id>Q9BS34</id>
        <label>ZNF670</label>
    </interactant>
    <organismsDiffer>false</organismsDiffer>
    <experiments>3</experiments>
</comment>
<comment type="interaction">
    <interactant intactId="EBI-720609">
        <id>O76024</id>
    </interactant>
    <interactant intactId="EBI-11090299">
        <id>Q9H7X3</id>
        <label>ZNF696</label>
    </interactant>
    <organismsDiffer>false</organismsDiffer>
    <experiments>3</experiments>
</comment>
<comment type="interaction">
    <interactant intactId="EBI-720609">
        <id>O76024</id>
    </interactant>
    <interactant intactId="EBI-25845217">
        <id>Q5TEC3</id>
        <label>ZNF697</label>
    </interactant>
    <organismsDiffer>false</organismsDiffer>
    <experiments>3</experiments>
</comment>
<comment type="interaction">
    <interactant intactId="EBI-720609">
        <id>O76024</id>
    </interactant>
    <interactant intactId="EBI-10251462">
        <id>Q6NX45</id>
        <label>ZNF774</label>
    </interactant>
    <organismsDiffer>false</organismsDiffer>
    <experiments>3</experiments>
</comment>
<comment type="interaction">
    <interactant intactId="EBI-720609">
        <id>O76024</id>
    </interactant>
    <interactant intactId="EBI-2849119">
        <id>Q3KP31</id>
        <label>ZNF791</label>
    </interactant>
    <organismsDiffer>false</organismsDiffer>
    <experiments>3</experiments>
</comment>
<comment type="interaction">
    <interactant intactId="EBI-720609">
        <id>O76024</id>
    </interactant>
    <interactant intactId="EBI-18036029">
        <id>Q3KNS6-3</id>
        <label>ZNF829</label>
    </interactant>
    <organismsDiffer>false</organismsDiffer>
    <experiments>3</experiments>
</comment>
<comment type="interaction">
    <interactant intactId="EBI-720609">
        <id>O76024</id>
    </interactant>
    <interactant intactId="EBI-3920053">
        <id>Q16670</id>
        <label>ZSCAN26</label>
    </interactant>
    <organismsDiffer>false</organismsDiffer>
    <experiments>3</experiments>
</comment>
<comment type="interaction">
    <interactant intactId="EBI-720609">
        <id>O76024</id>
    </interactant>
    <interactant intactId="EBI-751531">
        <id>O15535</id>
        <label>ZSCAN9</label>
    </interactant>
    <organismsDiffer>false</organismsDiffer>
    <experiments>3</experiments>
</comment>
<comment type="interaction">
    <interactant intactId="EBI-720609">
        <id>O76024</id>
    </interactant>
    <interactant intactId="EBI-1538838">
        <id>Q2QGD7</id>
        <label>ZXDC</label>
    </interactant>
    <organismsDiffer>false</organismsDiffer>
    <experiments>3</experiments>
</comment>
<comment type="interaction">
    <interactant intactId="EBI-720609">
        <id>O76024</id>
    </interactant>
    <interactant intactId="EBI-10211777">
        <id>A0A384ME25</id>
    </interactant>
    <organismsDiffer>false</organismsDiffer>
    <experiments>3</experiments>
</comment>
<comment type="interaction">
    <interactant intactId="EBI-720609">
        <id>O76024</id>
    </interactant>
    <interactant intactId="EBI-25831943">
        <id>Q7L8T7</id>
    </interactant>
    <organismsDiffer>false</organismsDiffer>
    <experiments>3</experiments>
</comment>
<comment type="interaction">
    <interactant intactId="EBI-720609">
        <id>O76024</id>
    </interactant>
    <interactant intactId="EBI-9088990">
        <id>Q7Z783</id>
    </interactant>
    <organismsDiffer>false</organismsDiffer>
    <experiments>3</experiments>
</comment>
<comment type="interaction">
    <interactant intactId="EBI-720609">
        <id>O76024</id>
    </interactant>
    <interactant intactId="EBI-10259496">
        <id>Q86V28</id>
    </interactant>
    <organismsDiffer>false</organismsDiffer>
    <experiments>3</experiments>
</comment>
<comment type="interaction">
    <interactant intactId="EBI-720609">
        <id>O76024</id>
    </interactant>
    <interactant intactId="EBI-22013570">
        <id>Q9BQ29</id>
    </interactant>
    <organismsDiffer>false</organismsDiffer>
    <experiments>3</experiments>
</comment>
<comment type="subcellular location">
    <subcellularLocation>
        <location evidence="34">Endoplasmic reticulum membrane</location>
        <topology evidence="2">Multi-pass membrane protein</topology>
    </subcellularLocation>
    <subcellularLocation>
        <location evidence="25">Cytoplasmic vesicle</location>
        <location evidence="25">Secretory vesicle</location>
    </subcellularLocation>
    <text evidence="25">Co-localizes with ATP6V1A in the secretory granules in neuroblastoma cell lines.</text>
</comment>
<comment type="tissue specificity">
    <text>Highly expressed in heart followed by brain, placenta, lung and pancreas. Weakly expressed in liver, kidney and skeletal muscle. Also expressed in islet and beta-cell insulinoma cell line.</text>
</comment>
<comment type="polymorphism">
    <text>Arg-456-His, Arg-611-His and Ile-720-Val polymorphisms are in tight linkage disequilibrium with one another and associated with type 1 diabetes in Japanese.</text>
</comment>
<comment type="disease" evidence="4 8 9 14 22 23 30 31">
    <disease id="DI-01151">
        <name>Wolfram syndrome 1</name>
        <acronym>WFS1</acronym>
        <description>A rare disorder characterized by juvenile-onset insulin-dependent diabetes mellitus with optic atrophy. Other manifestations include diabetes insipidus, sensorineural deafness, dementia, psychiatric illnesses.</description>
        <dbReference type="MIM" id="222300"/>
    </disease>
    <text>The disease is caused by variants affecting the gene represented in this entry.</text>
</comment>
<comment type="disease" evidence="10 11 12 17 18 19 21 27 28">
    <disease id="DI-00838">
        <name>Deafness, autosomal dominant, 6</name>
        <acronym>DFNA6</acronym>
        <description>A form of non-syndromic sensorineural hearing loss. Sensorineural deafness results from damage to the neural receptors of the inner ear, the nerve pathways to the brain, or the area of the brain that receives sound information. DFNA6 is a low-frequency hearing loss in which frequencies of 2000 Hz and below are predominantly affected. Many patients have tinnitus, but there are otherwise no associated features such as vertigo. Because high-frequency hearing is generally preserved, patients retain excellent understanding of speech, although presbycusis or noise exposure may cause high-frequency loss later in life. DFNA6 worsens over time without progressing to profound deafness.</description>
        <dbReference type="MIM" id="600965"/>
    </disease>
    <text>The disease is caused by variants affecting the gene represented in this entry.</text>
</comment>
<comment type="disease" evidence="15 20 22">
    <disease id="DI-03292">
        <name>Wolfram-like syndrome autosomal dominant</name>
        <acronym>WFSL</acronym>
        <description>A disease characterized by the clinical triad of congenital progressive hearing impairment, diabetes mellitus, and optic atrophy. The hearing impairment, which is usually diagnosed in the first decade of life, is relatively constant and alters mainly low- and middle-frequency ranges.</description>
        <dbReference type="MIM" id="614296"/>
    </disease>
    <text>The disease is caused by variants affecting the gene represented in this entry.</text>
</comment>
<comment type="disease" evidence="26">
    <disease id="DI-04010">
        <name>Cataract 41</name>
        <acronym>CTRCT41</acronym>
        <description>An opacification of the crystalline lens of the eye that frequently results in visual impairment or blindness. Opacities vary in morphology, are often confined to a portion of the lens, and may be static or progressive.</description>
        <dbReference type="MIM" id="116400"/>
    </disease>
    <text>The disease is caused by variants affecting the gene represented in this entry.</text>
</comment>
<evidence type="ECO:0000250" key="1">
    <source>
        <dbReference type="UniProtKB" id="P56695"/>
    </source>
</evidence>
<evidence type="ECO:0000255" key="2"/>
<evidence type="ECO:0000256" key="3">
    <source>
        <dbReference type="SAM" id="MobiDB-lite"/>
    </source>
</evidence>
<evidence type="ECO:0000269" key="4">
    <source>
    </source>
</evidence>
<evidence type="ECO:0000269" key="5">
    <source>
    </source>
</evidence>
<evidence type="ECO:0000269" key="6">
    <source>
    </source>
</evidence>
<evidence type="ECO:0000269" key="7">
    <source>
    </source>
</evidence>
<evidence type="ECO:0000269" key="8">
    <source>
    </source>
</evidence>
<evidence type="ECO:0000269" key="9">
    <source>
    </source>
</evidence>
<evidence type="ECO:0000269" key="10">
    <source>
    </source>
</evidence>
<evidence type="ECO:0000269" key="11">
    <source>
    </source>
</evidence>
<evidence type="ECO:0000269" key="12">
    <source>
    </source>
</evidence>
<evidence type="ECO:0000269" key="13">
    <source>
    </source>
</evidence>
<evidence type="ECO:0000269" key="14">
    <source>
    </source>
</evidence>
<evidence type="ECO:0000269" key="15">
    <source>
    </source>
</evidence>
<evidence type="ECO:0000269" key="16">
    <source>
    </source>
</evidence>
<evidence type="ECO:0000269" key="17">
    <source>
    </source>
</evidence>
<evidence type="ECO:0000269" key="18">
    <source>
    </source>
</evidence>
<evidence type="ECO:0000269" key="19">
    <source>
    </source>
</evidence>
<evidence type="ECO:0000269" key="20">
    <source>
    </source>
</evidence>
<evidence type="ECO:0000269" key="21">
    <source>
    </source>
</evidence>
<evidence type="ECO:0000269" key="22">
    <source>
    </source>
</evidence>
<evidence type="ECO:0000269" key="23">
    <source>
    </source>
</evidence>
<evidence type="ECO:0000269" key="24">
    <source>
    </source>
</evidence>
<evidence type="ECO:0000269" key="25">
    <source>
    </source>
</evidence>
<evidence type="ECO:0000269" key="26">
    <source>
    </source>
</evidence>
<evidence type="ECO:0000269" key="27">
    <source>
    </source>
</evidence>
<evidence type="ECO:0000269" key="28">
    <source>
    </source>
</evidence>
<evidence type="ECO:0000269" key="29">
    <source>
    </source>
</evidence>
<evidence type="ECO:0000269" key="30">
    <source>
    </source>
</evidence>
<evidence type="ECO:0000269" key="31">
    <source>
    </source>
</evidence>
<evidence type="ECO:0000269" key="32">
    <source ref="5"/>
</evidence>
<evidence type="ECO:0000305" key="33"/>
<evidence type="ECO:0000305" key="34">
    <source>
    </source>
</evidence>
<evidence type="ECO:0007744" key="35">
    <source>
    </source>
</evidence>
<evidence type="ECO:0007744" key="36">
    <source>
    </source>
</evidence>
<reference key="1">
    <citation type="journal article" date="1998" name="Hum. Mol. Genet.">
        <title>Diabetes insipidus, diabetes mellitus, optic atrophy and deafness (DIDMOAD) caused by mutations in a novel gene (wolframin) coding for a predicted transmembrane protein.</title>
        <authorList>
            <person name="Strom T.M."/>
            <person name="Hoertnagel K."/>
            <person name="Hofmann S."/>
            <person name="Gekeler F."/>
            <person name="Scharfe C."/>
            <person name="Rabl W."/>
            <person name="Gerbitz K.-D."/>
            <person name="Meitinger T."/>
        </authorList>
    </citation>
    <scope>NUCLEOTIDE SEQUENCE [MRNA]</scope>
    <scope>VARIANTS WFS1 461-THR--VAL-463 DEL; ILE-333 AND CYS-669</scope>
    <source>
        <tissue>Brain</tissue>
    </source>
</reference>
<reference key="2">
    <citation type="journal article" date="1998" name="Nat. Genet.">
        <title>A gene encoding a transmembrane protein is mutated in patients with diabetes mellitus and optic atrophy (Wolfram Syndrome).</title>
        <authorList>
            <person name="Inoue H."/>
            <person name="Tanizawa Y."/>
            <person name="Wasson J."/>
            <person name="Behn P."/>
            <person name="Kalidas K."/>
            <person name="Bernal-Mizrachi E."/>
            <person name="Mueckler M."/>
            <person name="Marshall H."/>
            <person name="Donis-Keller H."/>
            <person name="Crock P."/>
            <person name="Rogers D."/>
            <person name="Mikuni M."/>
            <person name="Kumashiro H."/>
            <person name="Higashi K."/>
            <person name="Sobue G."/>
            <person name="Oka Y."/>
            <person name="Permutt M.A."/>
        </authorList>
    </citation>
    <scope>NUCLEOTIDE SEQUENCE [MRNA]</scope>
    <scope>VARIANTS WFS1 LEU-504; 508-TYR--LEU-512 DEL; VAL-695 AND LEU-724</scope>
    <scope>VARIANTS ILE-333; HIS-456 AND HIS-611</scope>
    <source>
        <tissue>Brain</tissue>
    </source>
</reference>
<reference key="3">
    <citation type="journal article" date="2004" name="Nat. Genet.">
        <title>Complete sequencing and characterization of 21,243 full-length human cDNAs.</title>
        <authorList>
            <person name="Ota T."/>
            <person name="Suzuki Y."/>
            <person name="Nishikawa T."/>
            <person name="Otsuki T."/>
            <person name="Sugiyama T."/>
            <person name="Irie R."/>
            <person name="Wakamatsu A."/>
            <person name="Hayashi K."/>
            <person name="Sato H."/>
            <person name="Nagai K."/>
            <person name="Kimura K."/>
            <person name="Makita H."/>
            <person name="Sekine M."/>
            <person name="Obayashi M."/>
            <person name="Nishi T."/>
            <person name="Shibahara T."/>
            <person name="Tanaka T."/>
            <person name="Ishii S."/>
            <person name="Yamamoto J."/>
            <person name="Saito K."/>
            <person name="Kawai Y."/>
            <person name="Isono Y."/>
            <person name="Nakamura Y."/>
            <person name="Nagahari K."/>
            <person name="Murakami K."/>
            <person name="Yasuda T."/>
            <person name="Iwayanagi T."/>
            <person name="Wagatsuma M."/>
            <person name="Shiratori A."/>
            <person name="Sudo H."/>
            <person name="Hosoiri T."/>
            <person name="Kaku Y."/>
            <person name="Kodaira H."/>
            <person name="Kondo H."/>
            <person name="Sugawara M."/>
            <person name="Takahashi M."/>
            <person name="Kanda K."/>
            <person name="Yokoi T."/>
            <person name="Furuya T."/>
            <person name="Kikkawa E."/>
            <person name="Omura Y."/>
            <person name="Abe K."/>
            <person name="Kamihara K."/>
            <person name="Katsuta N."/>
            <person name="Sato K."/>
            <person name="Tanikawa M."/>
            <person name="Yamazaki M."/>
            <person name="Ninomiya K."/>
            <person name="Ishibashi T."/>
            <person name="Yamashita H."/>
            <person name="Murakawa K."/>
            <person name="Fujimori K."/>
            <person name="Tanai H."/>
            <person name="Kimata M."/>
            <person name="Watanabe M."/>
            <person name="Hiraoka S."/>
            <person name="Chiba Y."/>
            <person name="Ishida S."/>
            <person name="Ono Y."/>
            <person name="Takiguchi S."/>
            <person name="Watanabe S."/>
            <person name="Yosida M."/>
            <person name="Hotuta T."/>
            <person name="Kusano J."/>
            <person name="Kanehori K."/>
            <person name="Takahashi-Fujii A."/>
            <person name="Hara H."/>
            <person name="Tanase T.-O."/>
            <person name="Nomura Y."/>
            <person name="Togiya S."/>
            <person name="Komai F."/>
            <person name="Hara R."/>
            <person name="Takeuchi K."/>
            <person name="Arita M."/>
            <person name="Imose N."/>
            <person name="Musashino K."/>
            <person name="Yuuki H."/>
            <person name="Oshima A."/>
            <person name="Sasaki N."/>
            <person name="Aotsuka S."/>
            <person name="Yoshikawa Y."/>
            <person name="Matsunawa H."/>
            <person name="Ichihara T."/>
            <person name="Shiohata N."/>
            <person name="Sano S."/>
            <person name="Moriya S."/>
            <person name="Momiyama H."/>
            <person name="Satoh N."/>
            <person name="Takami S."/>
            <person name="Terashima Y."/>
            <person name="Suzuki O."/>
            <person name="Nakagawa S."/>
            <person name="Senoh A."/>
            <person name="Mizoguchi H."/>
            <person name="Goto Y."/>
            <person name="Shimizu F."/>
            <person name="Wakebe H."/>
            <person name="Hishigaki H."/>
            <person name="Watanabe T."/>
            <person name="Sugiyama A."/>
            <person name="Takemoto M."/>
            <person name="Kawakami B."/>
            <person name="Yamazaki M."/>
            <person name="Watanabe K."/>
            <person name="Kumagai A."/>
            <person name="Itakura S."/>
            <person name="Fukuzumi Y."/>
            <person name="Fujimori Y."/>
            <person name="Komiyama M."/>
            <person name="Tashiro H."/>
            <person name="Tanigami A."/>
            <person name="Fujiwara T."/>
            <person name="Ono T."/>
            <person name="Yamada K."/>
            <person name="Fujii Y."/>
            <person name="Ozaki K."/>
            <person name="Hirao M."/>
            <person name="Ohmori Y."/>
            <person name="Kawabata A."/>
            <person name="Hikiji T."/>
            <person name="Kobatake N."/>
            <person name="Inagaki H."/>
            <person name="Ikema Y."/>
            <person name="Okamoto S."/>
            <person name="Okitani R."/>
            <person name="Kawakami T."/>
            <person name="Noguchi S."/>
            <person name="Itoh T."/>
            <person name="Shigeta K."/>
            <person name="Senba T."/>
            <person name="Matsumura K."/>
            <person name="Nakajima Y."/>
            <person name="Mizuno T."/>
            <person name="Morinaga M."/>
            <person name="Sasaki M."/>
            <person name="Togashi T."/>
            <person name="Oyama M."/>
            <person name="Hata H."/>
            <person name="Watanabe M."/>
            <person name="Komatsu T."/>
            <person name="Mizushima-Sugano J."/>
            <person name="Satoh T."/>
            <person name="Shirai Y."/>
            <person name="Takahashi Y."/>
            <person name="Nakagawa K."/>
            <person name="Okumura K."/>
            <person name="Nagase T."/>
            <person name="Nomura N."/>
            <person name="Kikuchi H."/>
            <person name="Masuho Y."/>
            <person name="Yamashita R."/>
            <person name="Nakai K."/>
            <person name="Yada T."/>
            <person name="Nakamura Y."/>
            <person name="Ohara O."/>
            <person name="Isogai T."/>
            <person name="Sugano S."/>
        </authorList>
    </citation>
    <scope>NUCLEOTIDE SEQUENCE [LARGE SCALE MRNA]</scope>
    <scope>VARIANT ILE-333</scope>
    <source>
        <tissue>Amygdala</tissue>
    </source>
</reference>
<reference key="4">
    <citation type="journal article" date="2005" name="Nature">
        <title>Generation and annotation of the DNA sequences of human chromosomes 2 and 4.</title>
        <authorList>
            <person name="Hillier L.W."/>
            <person name="Graves T.A."/>
            <person name="Fulton R.S."/>
            <person name="Fulton L.A."/>
            <person name="Pepin K.H."/>
            <person name="Minx P."/>
            <person name="Wagner-McPherson C."/>
            <person name="Layman D."/>
            <person name="Wylie K."/>
            <person name="Sekhon M."/>
            <person name="Becker M.C."/>
            <person name="Fewell G.A."/>
            <person name="Delehaunty K.D."/>
            <person name="Miner T.L."/>
            <person name="Nash W.E."/>
            <person name="Kremitzki C."/>
            <person name="Oddy L."/>
            <person name="Du H."/>
            <person name="Sun H."/>
            <person name="Bradshaw-Cordum H."/>
            <person name="Ali J."/>
            <person name="Carter J."/>
            <person name="Cordes M."/>
            <person name="Harris A."/>
            <person name="Isak A."/>
            <person name="van Brunt A."/>
            <person name="Nguyen C."/>
            <person name="Du F."/>
            <person name="Courtney L."/>
            <person name="Kalicki J."/>
            <person name="Ozersky P."/>
            <person name="Abbott S."/>
            <person name="Armstrong J."/>
            <person name="Belter E.A."/>
            <person name="Caruso L."/>
            <person name="Cedroni M."/>
            <person name="Cotton M."/>
            <person name="Davidson T."/>
            <person name="Desai A."/>
            <person name="Elliott G."/>
            <person name="Erb T."/>
            <person name="Fronick C."/>
            <person name="Gaige T."/>
            <person name="Haakenson W."/>
            <person name="Haglund K."/>
            <person name="Holmes A."/>
            <person name="Harkins R."/>
            <person name="Kim K."/>
            <person name="Kruchowski S.S."/>
            <person name="Strong C.M."/>
            <person name="Grewal N."/>
            <person name="Goyea E."/>
            <person name="Hou S."/>
            <person name="Levy A."/>
            <person name="Martinka S."/>
            <person name="Mead K."/>
            <person name="McLellan M.D."/>
            <person name="Meyer R."/>
            <person name="Randall-Maher J."/>
            <person name="Tomlinson C."/>
            <person name="Dauphin-Kohlberg S."/>
            <person name="Kozlowicz-Reilly A."/>
            <person name="Shah N."/>
            <person name="Swearengen-Shahid S."/>
            <person name="Snider J."/>
            <person name="Strong J.T."/>
            <person name="Thompson J."/>
            <person name="Yoakum M."/>
            <person name="Leonard S."/>
            <person name="Pearman C."/>
            <person name="Trani L."/>
            <person name="Radionenko M."/>
            <person name="Waligorski J.E."/>
            <person name="Wang C."/>
            <person name="Rock S.M."/>
            <person name="Tin-Wollam A.-M."/>
            <person name="Maupin R."/>
            <person name="Latreille P."/>
            <person name="Wendl M.C."/>
            <person name="Yang S.-P."/>
            <person name="Pohl C."/>
            <person name="Wallis J.W."/>
            <person name="Spieth J."/>
            <person name="Bieri T.A."/>
            <person name="Berkowicz N."/>
            <person name="Nelson J.O."/>
            <person name="Osborne J."/>
            <person name="Ding L."/>
            <person name="Meyer R."/>
            <person name="Sabo A."/>
            <person name="Shotland Y."/>
            <person name="Sinha P."/>
            <person name="Wohldmann P.E."/>
            <person name="Cook L.L."/>
            <person name="Hickenbotham M.T."/>
            <person name="Eldred J."/>
            <person name="Williams D."/>
            <person name="Jones T.A."/>
            <person name="She X."/>
            <person name="Ciccarelli F.D."/>
            <person name="Izaurralde E."/>
            <person name="Taylor J."/>
            <person name="Schmutz J."/>
            <person name="Myers R.M."/>
            <person name="Cox D.R."/>
            <person name="Huang X."/>
            <person name="McPherson J.D."/>
            <person name="Mardis E.R."/>
            <person name="Clifton S.W."/>
            <person name="Warren W.C."/>
            <person name="Chinwalla A.T."/>
            <person name="Eddy S.R."/>
            <person name="Marra M.A."/>
            <person name="Ovcharenko I."/>
            <person name="Furey T.S."/>
            <person name="Miller W."/>
            <person name="Eichler E.E."/>
            <person name="Bork P."/>
            <person name="Suyama M."/>
            <person name="Torrents D."/>
            <person name="Waterston R.H."/>
            <person name="Wilson R.K."/>
        </authorList>
    </citation>
    <scope>NUCLEOTIDE SEQUENCE [LARGE SCALE GENOMIC DNA]</scope>
</reference>
<reference key="5">
    <citation type="submission" date="2005-09" db="EMBL/GenBank/DDBJ databases">
        <authorList>
            <person name="Mural R.J."/>
            <person name="Istrail S."/>
            <person name="Sutton G.G."/>
            <person name="Florea L."/>
            <person name="Halpern A.L."/>
            <person name="Mobarry C.M."/>
            <person name="Lippert R."/>
            <person name="Walenz B."/>
            <person name="Shatkay H."/>
            <person name="Dew I."/>
            <person name="Miller J.R."/>
            <person name="Flanigan M.J."/>
            <person name="Edwards N.J."/>
            <person name="Bolanos R."/>
            <person name="Fasulo D."/>
            <person name="Halldorsson B.V."/>
            <person name="Hannenhalli S."/>
            <person name="Turner R."/>
            <person name="Yooseph S."/>
            <person name="Lu F."/>
            <person name="Nusskern D.R."/>
            <person name="Shue B.C."/>
            <person name="Zheng X.H."/>
            <person name="Zhong F."/>
            <person name="Delcher A.L."/>
            <person name="Huson D.H."/>
            <person name="Kravitz S.A."/>
            <person name="Mouchard L."/>
            <person name="Reinert K."/>
            <person name="Remington K.A."/>
            <person name="Clark A.G."/>
            <person name="Waterman M.S."/>
            <person name="Eichler E.E."/>
            <person name="Adams M.D."/>
            <person name="Hunkapiller M.W."/>
            <person name="Myers E.W."/>
            <person name="Venter J.C."/>
        </authorList>
    </citation>
    <scope>NUCLEOTIDE SEQUENCE [LARGE SCALE GENOMIC DNA]</scope>
    <scope>VARIANT HIS-611</scope>
</reference>
<reference key="6">
    <citation type="journal article" date="2004" name="Genome Res.">
        <title>The status, quality, and expansion of the NIH full-length cDNA project: the Mammalian Gene Collection (MGC).</title>
        <authorList>
            <consortium name="The MGC Project Team"/>
        </authorList>
    </citation>
    <scope>NUCLEOTIDE SEQUENCE [LARGE SCALE MRNA]</scope>
    <source>
        <tissue>Brain</tissue>
    </source>
</reference>
<reference key="7">
    <citation type="journal article" date="2006" name="FEBS Lett.">
        <title>WFS1 protein modulates the free Ca(2+) concentration in the endoplasmic reticulum.</title>
        <authorList>
            <person name="Takei D."/>
            <person name="Ishihara H."/>
            <person name="Yamaguchi S."/>
            <person name="Yamada T."/>
            <person name="Tamura A."/>
            <person name="Katagiri H."/>
            <person name="Maruyama Y."/>
            <person name="Oka Y."/>
        </authorList>
    </citation>
    <scope>FUNCTION</scope>
</reference>
<reference key="8">
    <citation type="journal article" date="2001" name="Hum. Mutat.">
        <title>WFS1/wolframin mutations, Wolfram syndrome, and associated diseases.</title>
        <authorList>
            <person name="Khanim F."/>
            <person name="Kirk J."/>
            <person name="Latif F."/>
            <person name="Barrett T.G."/>
        </authorList>
    </citation>
    <scope>REVIEW ON VARIANTS</scope>
</reference>
<reference key="9">
    <citation type="journal article" date="2011" name="BMC Syst. Biol.">
        <title>Initial characterization of the human central proteome.</title>
        <authorList>
            <person name="Burkard T.R."/>
            <person name="Planyavsky M."/>
            <person name="Kaupe I."/>
            <person name="Breitwieser F.P."/>
            <person name="Buerckstuemmer T."/>
            <person name="Bennett K.L."/>
            <person name="Superti-Furga G."/>
            <person name="Colinge J."/>
        </authorList>
    </citation>
    <scope>IDENTIFICATION BY MASS SPECTROMETRY [LARGE SCALE ANALYSIS]</scope>
</reference>
<reference key="10">
    <citation type="journal article" date="2012" name="Proc. Natl. Acad. Sci. U.S.A.">
        <title>N-terminal acetylome analyses and functional insights of the N-terminal acetyltransferase NatB.</title>
        <authorList>
            <person name="Van Damme P."/>
            <person name="Lasa M."/>
            <person name="Polevoda B."/>
            <person name="Gazquez C."/>
            <person name="Elosegui-Artola A."/>
            <person name="Kim D.S."/>
            <person name="De Juan-Pardo E."/>
            <person name="Demeyer K."/>
            <person name="Hole K."/>
            <person name="Larrea E."/>
            <person name="Timmerman E."/>
            <person name="Prieto J."/>
            <person name="Arnesen T."/>
            <person name="Sherman F."/>
            <person name="Gevaert K."/>
            <person name="Aldabe R."/>
        </authorList>
    </citation>
    <scope>ACETYLATION [LARGE SCALE ANALYSIS] AT MET-1</scope>
    <scope>IDENTIFICATION BY MASS SPECTROMETRY [LARGE SCALE ANALYSIS]</scope>
</reference>
<reference key="11">
    <citation type="journal article" date="2013" name="Hum. Mol. Genet.">
        <title>Vacuolar-type H+-ATPase V1A subunit is a molecular partner of Wolfram syndrome 1 (WFS1) protein, which regulates its expression and stability.</title>
        <authorList>
            <person name="Gharanei S."/>
            <person name="Zatyka M."/>
            <person name="Astuti D."/>
            <person name="Fenton J."/>
            <person name="Sik A."/>
            <person name="Nagy Z."/>
            <person name="Barrett T.G."/>
        </authorList>
    </citation>
    <scope>FUNCTION</scope>
    <scope>SUBCELLULAR LOCATION</scope>
    <scope>INTERACTION WITH ATP6V1A</scope>
</reference>
<reference key="12">
    <citation type="journal article" date="2013" name="J. Proteome Res.">
        <title>Toward a comprehensive characterization of a human cancer cell phosphoproteome.</title>
        <authorList>
            <person name="Zhou H."/>
            <person name="Di Palma S."/>
            <person name="Preisinger C."/>
            <person name="Peng M."/>
            <person name="Polat A.N."/>
            <person name="Heck A.J."/>
            <person name="Mohammed S."/>
        </authorList>
    </citation>
    <scope>PHOSPHORYLATION [LARGE SCALE ANALYSIS] AT SER-32</scope>
    <scope>IDENTIFICATION BY MASS SPECTROMETRY [LARGE SCALE ANALYSIS]</scope>
    <source>
        <tissue>Cervix carcinoma</tissue>
    </source>
</reference>
<reference key="13">
    <citation type="journal article" date="2015" name="Cell">
        <title>A single kinase generates the majority of the secreted phosphoproteome.</title>
        <authorList>
            <person name="Tagliabracci V.S."/>
            <person name="Wiley S.E."/>
            <person name="Guo X."/>
            <person name="Kinch L.N."/>
            <person name="Durrant E."/>
            <person name="Wen J."/>
            <person name="Xiao J."/>
            <person name="Cui J."/>
            <person name="Nguyen K.B."/>
            <person name="Engel J.L."/>
            <person name="Coon J.J."/>
            <person name="Grishin N."/>
            <person name="Pinna L.A."/>
            <person name="Pagliarini D.J."/>
            <person name="Dixon J.E."/>
        </authorList>
    </citation>
    <scope>PHOSPHORYLATION AT THR-30 AND SER-32</scope>
</reference>
<reference key="14">
    <citation type="journal article" date="1999" name="Am. J. Hum. Genet.">
        <title>Clinical and molecular genetic analysis of 19 Wolfram syndrome kindreds demonstrating a wide spectrum of mutations in WFS1.</title>
        <authorList>
            <person name="Hardy C."/>
            <person name="Khanim F."/>
            <person name="Torres R."/>
            <person name="Scott-Brown M."/>
            <person name="Seller A."/>
            <person name="Poulton J."/>
            <person name="Collier D."/>
            <person name="Kirk J."/>
            <person name="Polymeropoulos M."/>
            <person name="Latif F."/>
            <person name="Barrett T."/>
        </authorList>
    </citation>
    <scope>VARIANTS WFS1 LYS-169; SER-292; SER-296; ARG-437; ARG-690; CYS-700 AND LEU-885</scope>
    <scope>VARIANTS ILE-333 AND HIS-611</scope>
</reference>
<reference key="15">
    <citation type="journal article" date="1999" name="Neurosci. Lett.">
        <title>A rare coding variant within the wolframin gene in bipolar and unipolar affective disorder cases.</title>
        <authorList>
            <person name="Furlong R.A."/>
            <person name="Ho L.W."/>
            <person name="Rubinsztein J.S."/>
            <person name="Michael A."/>
            <person name="Walsh C."/>
            <person name="Paykel E.S."/>
            <person name="Rubinsztein D.C."/>
        </authorList>
    </citation>
    <scope>VARIANTS THR-559 AND HIS-611</scope>
</reference>
<reference key="16">
    <citation type="journal article" date="2000" name="Biochem. Biophys. Res. Commun.">
        <title>Missense variations of the gene responsible for Wolfram syndrome (WFS1/wolframin) in Japanese: possible contribution of the Arg456His mutation to type 1 diabetes as a nonautoimmune genetic basis.</title>
        <authorList>
            <person name="Awata T."/>
            <person name="Inoue K."/>
            <person name="Kurihara S."/>
            <person name="Ohkubo T."/>
            <person name="Inoue I."/>
            <person name="Abe T."/>
            <person name="Takino H."/>
            <person name="Kanazawa Y."/>
            <person name="Katayama S."/>
        </authorList>
    </citation>
    <scope>VARIANTS HIS-456; SER-576; HIS-611; CYS-653 AND VAL-720</scope>
</reference>
<reference key="17">
    <citation type="journal article" date="2000" name="J. Affect. Disord.">
        <title>WFS1 gene mutation search in depressive patients: detection of five missense polymorphisms but no association with depression or bipolar affective disorder.</title>
        <authorList>
            <person name="Ohtsuki T."/>
            <person name="Ishiguro H."/>
            <person name="Yoshikawa T."/>
            <person name="Arinami T."/>
        </authorList>
    </citation>
    <scope>VARIANTS HIS-456; SER-576; HIS-611; VAL-720 AND LYS-737</scope>
</reference>
<reference key="18">
    <citation type="journal article" date="2001" name="Hum. Mol. Genet.">
        <title>Mutations in the Wolfram syndrome 1 gene (WFS1) are a common cause of low frequency sensorineural hearing loss.</title>
        <authorList>
            <person name="Bespalova I.N."/>
            <person name="Van Camp G."/>
            <person name="Bom S.J.H."/>
            <person name="Brown D.J."/>
            <person name="Cryns K."/>
            <person name="DeWan A.T."/>
            <person name="Erson A.E."/>
            <person name="Flothmann K."/>
            <person name="Kunst H.P.M."/>
            <person name="Kurnool P."/>
            <person name="Sivakumaran T.A."/>
            <person name="Cremers C.W.R.J."/>
            <person name="Leal S.M."/>
            <person name="Burmeister M."/>
            <person name="Lesperance M.M."/>
        </authorList>
    </citation>
    <scope>VARIANTS DFNA6 MET-699; THR-716; MET-779; PRO-829 AND ASP-831</scope>
    <scope>VARIANT ILE-333</scope>
</reference>
<reference key="19">
    <citation type="journal article" date="2001" name="Hum. Mol. Genet.">
        <title>Non-syndromic progressive hearing loss DFNA38 is caused by heterozygous missense mutation in the Wolfram syndrome gene WFS1.</title>
        <authorList>
            <person name="Young T.-L."/>
            <person name="Ives E."/>
            <person name="Lynch E."/>
            <person name="Person R."/>
            <person name="Snook S."/>
            <person name="MacLaren L."/>
            <person name="Cater T."/>
            <person name="Griffin A."/>
            <person name="Fernandez B."/>
            <person name="Lee M.K."/>
            <person name="King M.-C."/>
        </authorList>
    </citation>
    <scope>VARIANT DFNA6 THR-716</scope>
    <scope>VARIANTS ARG-107; ILE-333; HIS-611 AND MET-871</scope>
</reference>
<reference key="20">
    <citation type="journal article" date="2001" name="Hum. Mol. Genet.">
        <authorList>
            <person name="Young T.L."/>
            <person name="Ives E."/>
            <person name="Lynch E."/>
            <person name="Person R."/>
            <person name="Snook S."/>
            <person name="MacLaren L."/>
            <person name="Cater T."/>
            <person name="Griffin A."/>
            <person name="Fernandez B."/>
            <person name="Lee M.K."/>
            <person name="King M.C."/>
        </authorList>
    </citation>
    <scope>ERRATUM OF PUBMED:11709538</scope>
</reference>
<reference key="21">
    <citation type="journal article" date="2001" name="Hum. Mutat.">
        <title>Identification of novel WFS1 mutations in Italian children with Wolfram syndrome.</title>
        <authorList>
            <person name="Tessa A."/>
            <person name="Carbone I."/>
            <person name="Matteoli M.C."/>
            <person name="Bruno C."/>
            <person name="Patrono C."/>
            <person name="Patera I.P."/>
            <person name="De Luca F."/>
            <person name="Lorini R."/>
            <person name="Santorelli F.M."/>
        </authorList>
    </citation>
    <scope>VARIANT WFS1 ILE-443</scope>
    <scope>VARIANTS ILE-333; HIS-611; VAL-684 AND CYS-708</scope>
</reference>
<reference key="22">
    <citation type="journal article" date="2002" name="J. Hum. Genet.">
        <title>Confirmation of genetic homogeneity of nonsyndromic low-frequency sensorineural hearing loss by linkage analysis and a DFNA6/14 mutation in a Japanese family.</title>
        <authorList>
            <person name="Komatsu K."/>
            <person name="Nakamura N."/>
            <person name="Ghadami M."/>
            <person name="Matsumoto N."/>
            <person name="Kishino T."/>
            <person name="Ohta T."/>
            <person name="Niikawa N."/>
            <person name="Yoshiura K."/>
        </authorList>
    </citation>
    <scope>VARIANT DFNA6 THR-634</scope>
</reference>
<reference key="23">
    <citation type="journal article" date="2001" name="Mol. Genet. Metab.">
        <title>Presence of a major WFS1 mutation in Spanish Wolfram syndrome pedigrees.</title>
        <authorList>
            <person name="Gomez-Zaera M."/>
            <person name="Strom T.M."/>
            <person name="Rodriguez B."/>
            <person name="Estivill X."/>
            <person name="Meitinger T."/>
            <person name="Nunes V."/>
        </authorList>
    </citation>
    <scope>VARIANTS WFS1 VAL-58; THR-126; PHE-350 DEL; PHE-354 DEL; LEU-504; ARG-780 AND CYS-818</scope>
    <scope>VARIANTS ARG-674 AND LYS-737</scope>
</reference>
<reference key="24">
    <citation type="journal article" date="2005" name="Hum. Mutat.">
        <title>Wolfram syndrome in French population: characterization of novel mutations and polymorphisms in the WFS1 gene.</title>
        <authorList>
            <person name="Giuliano F."/>
            <person name="Bannwarth S."/>
            <person name="Monnot S."/>
            <person name="Cano A."/>
            <person name="Chabrol B."/>
            <person name="Vialettes B."/>
            <person name="Delobel B."/>
            <person name="Paquis-Flucklinger V."/>
        </authorList>
    </citation>
    <scope>VARIANTS WFS1 ASN-110; THR-133; PHE-414 DEL; VAL-415 DEL; SER-457; LEU-468 DEL; LEU-504; TRP-540 DEL; TRP-629 AND SER-736</scope>
    <scope>VARIANTS VAL-326; ILE-333; HIS-456; HIS-611; VAL-802 AND MET-871</scope>
</reference>
<reference key="25">
    <citation type="journal article" date="2006" name="J. Med. Genet.">
        <title>Autosomal dominant optic atrophy associated with hearing impairment and impaired glucose regulation caused by a missense mutation in the WFS1 gene.</title>
        <authorList>
            <person name="Eiberg H."/>
            <person name="Hansen L."/>
            <person name="Kjer B."/>
            <person name="Hansen T."/>
            <person name="Pedersen O."/>
            <person name="Bille M."/>
            <person name="Rosenberg T."/>
            <person name="Tranebjaerg L."/>
        </authorList>
    </citation>
    <scope>VARIANT WFSL LYS-864</scope>
</reference>
<reference key="26">
    <citation type="journal article" date="2007" name="BMC Med. Genet.">
        <title>A novel mutation in the WFS1 gene identified in a Taiwanese family with low-frequency hearing impairment.</title>
        <authorList>
            <person name="Tsai H.T."/>
            <person name="Wang Y.P."/>
            <person name="Chung S.F."/>
            <person name="Lin H.C."/>
            <person name="Ho G.M."/>
            <person name="Shu M.T."/>
        </authorList>
    </citation>
    <scope>VARIANT DFNA6 HIS-669</scope>
</reference>
<reference key="27">
    <citation type="journal article" date="2008" name="Am. J. Med. Genet. A">
        <title>Autoimmune disease in a DFNA6/14/38 family carrying a novel missense mutation in WFS1.</title>
        <authorList>
            <person name="Hildebrand M.S."/>
            <person name="Sorensen J.L."/>
            <person name="Jensen M."/>
            <person name="Kimberling W.J."/>
            <person name="Smith R.J."/>
        </authorList>
    </citation>
    <scope>VARIANT DFNA6 GLN-859</scope>
    <scope>VARIANTS ILE-333 AND HIS-611</scope>
</reference>
<reference key="28">
    <citation type="journal article" date="2008" name="BMC Med. Genet.">
        <title>A novel WFS1 mutation in a family with dominant low frequency sensorineural hearing loss with normal VEMP and EcochG findings.</title>
        <authorList>
            <person name="Bramhall N.F."/>
            <person name="Kallman J.C."/>
            <person name="Verrall A.M."/>
            <person name="Street V.A."/>
        </authorList>
    </citation>
    <scope>VARIANT DFNA6 PRO-685</scope>
</reference>
<reference key="29">
    <citation type="journal article" date="2010" name="Mol. Vis.">
        <title>Autosomal dominant optic neuropathy and sensorineural hearing loss associated with a novel mutation of WFS1.</title>
        <authorList>
            <person name="Hogewind B.F."/>
            <person name="Pennings R.J."/>
            <person name="Hol F.A."/>
            <person name="Kunst H.P."/>
            <person name="Hoefsloot E.H."/>
            <person name="Cruysberg J.R."/>
            <person name="Cremers C.W."/>
        </authorList>
    </citation>
    <scope>VARIANT WFSL ASN-836</scope>
</reference>
<reference key="30">
    <citation type="journal article" date="2011" name="Am. J. Med. Genet. A">
        <title>Identification of p.A684V missense mutation in the WFS1 gene as a frequent cause of autosomal dominant optic atrophy and hearing impairment.</title>
        <authorList>
            <person name="Rendtorff N.D."/>
            <person name="Lodahl M."/>
            <person name="Boulahbel H."/>
            <person name="Johansen I.R."/>
            <person name="Pandya A."/>
            <person name="Welch K.O."/>
            <person name="Norris V.W."/>
            <person name="Arnos K.S."/>
            <person name="Bitner-Glindzicz M."/>
            <person name="Emery S.B."/>
            <person name="Mets M.B."/>
            <person name="Fagerheim T."/>
            <person name="Eriksson K."/>
            <person name="Hansen L."/>
            <person name="Bruhn H."/>
            <person name="Moller C."/>
            <person name="Lindholm S."/>
            <person name="Ensgaard S."/>
            <person name="Lesperance M.M."/>
            <person name="Tranebjaerg L."/>
        </authorList>
    </citation>
    <scope>VARIANTS WFSL VAL-684; SER-780 AND TYR-797</scope>
    <scope>VARIANT WFS1 VAL-415 DEL</scope>
    <scope>CHARACTERIZATION OF VARIANTS WFSL VAL-684 AND SER-780</scope>
    <scope>CHARACTERIZATION OF VARIANT WFS1 VAL-415 DEL</scope>
</reference>
<reference key="31">
    <citation type="journal article" date="2011" name="J. Genet. Genomics">
        <title>Identification of two novel missense WFS1 mutations, H696Y and R703H, in patients with non-syndromic low-frequency sensorineural hearing loss.</title>
        <authorList>
            <person name="Sun Y."/>
            <person name="Cheng J."/>
            <person name="Lu Y."/>
            <person name="Li J."/>
            <person name="Lu Y."/>
            <person name="Jin Z."/>
            <person name="Dai P."/>
            <person name="Wang R."/>
            <person name="Yuan H."/>
        </authorList>
    </citation>
    <scope>VARIANTS DFNA6 TYR-696 AND HIS-703</scope>
</reference>
<reference key="32">
    <citation type="journal article" date="2012" name="BMC Med. Genet.">
        <title>Atypical case of Wolfram syndrome revealed through targeted exome sequencing in a patient with suspected mitochondrial disease.</title>
        <authorList>
            <person name="Lieber D.S."/>
            <person name="Vafai S.B."/>
            <person name="Horton L.C."/>
            <person name="Slate N.G."/>
            <person name="Liu S."/>
            <person name="Borowsky M.L."/>
            <person name="Calvo S.E."/>
            <person name="Schmahmann J.D."/>
            <person name="Mootha V.K."/>
        </authorList>
    </citation>
    <scope>VARIANT WFS1 CYS-558</scope>
</reference>
<reference key="33">
    <citation type="journal article" date="2012" name="Orphanet J. Rare Dis.">
        <title>Targeted massive parallel sequencing: the effective detection of novel causative mutations associated with hearing loss in small families.</title>
        <authorList>
            <person name="Baek J.I."/>
            <person name="Oh S.K."/>
            <person name="Kim D.B."/>
            <person name="Choi S.Y."/>
            <person name="Kim U.K."/>
            <person name="Lee K.Y."/>
            <person name="Lee S.H."/>
        </authorList>
    </citation>
    <scope>VARIANT LYS-737</scope>
</reference>
<reference key="34">
    <citation type="journal article" date="2013" name="Eur. J. Hum. Genet.">
        <title>Wolfram gene (WFS1) mutation causes autosomal dominant congenital nuclear cataract in humans.</title>
        <authorList>
            <person name="Berry V."/>
            <person name="Gregory-Evans C."/>
            <person name="Emmett W."/>
            <person name="Waseem N."/>
            <person name="Raby J."/>
            <person name="Prescott D."/>
            <person name="Moore A.T."/>
            <person name="Bhattacharya S.S."/>
        </authorList>
    </citation>
    <scope>VARIANT CTRCT41 GLY-462</scope>
</reference>
<reference key="35">
    <citation type="journal article" date="2014" name="Gene">
        <title>WFS1 and non-syndromic low-frequency sensorineural hearing loss: a novel mutation in a Portuguese case.</title>
        <authorList>
            <person name="Goncalves A.C."/>
            <person name="Matos T.D."/>
            <person name="Simoes-Teixeira H.R."/>
            <person name="Pimenta Machado M."/>
            <person name="Simao M."/>
            <person name="Dias O.P."/>
            <person name="Andrea M."/>
            <person name="Fialho G."/>
            <person name="Caria H."/>
        </authorList>
    </citation>
    <scope>VARIANT DFNA6 ASN-171</scope>
</reference>
<reference key="36">
    <citation type="journal article" date="2014" name="J. Transl. Med.">
        <title>Targeted genomic capture and massively parallel sequencing to identify novel variants causing Chinese hereditary hearing loss.</title>
        <authorList>
            <person name="Wei Q."/>
            <person name="Zhu H."/>
            <person name="Qian X."/>
            <person name="Chen Z."/>
            <person name="Yao J."/>
            <person name="Lu Y."/>
            <person name="Cao X."/>
            <person name="Xing G."/>
        </authorList>
    </citation>
    <scope>VARIANTS DFNA6 CYS-653 AND GLU-680 DEL</scope>
</reference>
<protein>
    <recommendedName>
        <fullName>Wolframin</fullName>
    </recommendedName>
</protein>
<accession>O76024</accession>
<accession>B2R797</accession>
<accession>D3DVT1</accession>
<accession>Q8N6I3</accession>
<accession>Q9UNW6</accession>
<sequence length="890" mass="100292">MDSNTAPLGPSCPQPPPAPQPQARSRLNATASLEQERSERPRAPGPQAGPGPGVRDAAAPAEPQAQHTRSRERADGTGPTKGDMEIPFEEVLERAKAGDPKAQTEVGKHYLQLAGDTDEELNSCTAVDWLVLAAKQGRREAVKLLRRCLADRRGITSENEREVRQLSSETDLERAVRKAALVMYWKLNPKKKKQVAVAELLENVGQVNEHDGGAQPGPVPKSLQKQRRMLERLVSSESKNYIALDDFVEITKKYAKGVIPSSLFLQDDEDDDELAGKSPEDLPLRLKVVKYPLHAIMEIKEYLIDMASRAGMHWLSTIIPTHHINALIFFFIVSNLTIDFFAFFIPLVIFYLSFISMVICTLKVFQDSKAWENFRTLTDLLLRFEPNLDVEQAEVNFGWNHLEPYAHFLLSVFFVIFSFPIASKDCIPCSELAVITGFFTVTSYLSLSTHAEPYTRRALATEVTAGLLSLLPSMPLNWPYLKVLGQTFITVPVGHLVVLNVSVPCLLYVYLLYLFFRMAQLRNFKGTYCYLVPYLVCFMWCELSVVILLESTGLGLLRASIGYFLFLFALPILVAGLALVGVLQFARWFTSLELTKIAVTVAVCSVPLLLRWWTKASFSVVGMVKSLTRSSMVKLILVWLTAIVLFCWFYVYRSEGMKVYNSTLTWQQYGALCGPRAWKETNMARTQILCSHLEGHRVTWTGRFKYVRVTDIDNSAESAINMLPFFIGDWMRCLYGEAYPACSPGNTSTAEEELCRLKLLAKHPCHIKKFDRYKFEITVGMPFSSGADGSRSREEDDVTKDIVLRASSEFKSVLLSLRQGSLIEFSTILEGRLGSKWPVFELKAISCLNCMAQLSPTRRHVKIEHDWRSTVHGAVKFAFDFFFFPFLSAA</sequence>
<name>WFS1_HUMAN</name>
<keyword id="KW-0007">Acetylation</keyword>
<keyword id="KW-0898">Cataract</keyword>
<keyword id="KW-0968">Cytoplasmic vesicle</keyword>
<keyword id="KW-0209">Deafness</keyword>
<keyword id="KW-0218">Diabetes insipidus</keyword>
<keyword id="KW-0219">Diabetes mellitus</keyword>
<keyword id="KW-0225">Disease variant</keyword>
<keyword id="KW-0256">Endoplasmic reticulum</keyword>
<keyword id="KW-0325">Glycoprotein</keyword>
<keyword id="KW-0472">Membrane</keyword>
<keyword id="KW-1010">Non-syndromic deafness</keyword>
<keyword id="KW-0597">Phosphoprotein</keyword>
<keyword id="KW-1267">Proteomics identification</keyword>
<keyword id="KW-1185">Reference proteome</keyword>
<keyword id="KW-0812">Transmembrane</keyword>
<keyword id="KW-1133">Transmembrane helix</keyword>
<organism>
    <name type="scientific">Homo sapiens</name>
    <name type="common">Human</name>
    <dbReference type="NCBI Taxonomy" id="9606"/>
    <lineage>
        <taxon>Eukaryota</taxon>
        <taxon>Metazoa</taxon>
        <taxon>Chordata</taxon>
        <taxon>Craniata</taxon>
        <taxon>Vertebrata</taxon>
        <taxon>Euteleostomi</taxon>
        <taxon>Mammalia</taxon>
        <taxon>Eutheria</taxon>
        <taxon>Euarchontoglires</taxon>
        <taxon>Primates</taxon>
        <taxon>Haplorrhini</taxon>
        <taxon>Catarrhini</taxon>
        <taxon>Hominidae</taxon>
        <taxon>Homo</taxon>
    </lineage>
</organism>
<proteinExistence type="evidence at protein level"/>
<gene>
    <name type="primary">WFS1</name>
</gene>